<reference key="1">
    <citation type="submission" date="1998-03" db="EMBL/GenBank/DDBJ databases">
        <title>Sequence analysis of a human P1 clone containing the XRCC9 DNA repair gene.</title>
        <authorList>
            <person name="Lamerdin J.E."/>
            <person name="McCready P.M."/>
            <person name="Skowronski E."/>
            <person name="Adamson A.W."/>
            <person name="Burkhart-Schultz K."/>
            <person name="Gordon L."/>
            <person name="Kyle A."/>
            <person name="Ramirez M."/>
            <person name="Stilwagen S."/>
            <person name="Phan H."/>
            <person name="Velasco N."/>
            <person name="Garnes J."/>
            <person name="Danganan L."/>
            <person name="Poundstone P."/>
            <person name="Christensen M."/>
            <person name="Georgescu A."/>
            <person name="Avila J."/>
            <person name="Liu S."/>
            <person name="Attix C."/>
            <person name="Andreise T."/>
            <person name="Trankheim M."/>
            <person name="Amico-Keller G."/>
            <person name="Coefield J."/>
            <person name="Duarte S."/>
            <person name="Lucas S."/>
            <person name="Bruce R."/>
            <person name="Thomas P."/>
            <person name="Quan G."/>
            <person name="Kronmiller B."/>
            <person name="Arellano A."/>
            <person name="Montgomery M."/>
            <person name="Ow D."/>
            <person name="Nolan M."/>
            <person name="Trong S."/>
            <person name="Kobayashi A."/>
            <person name="Olsen A.O."/>
            <person name="Carrano A.V."/>
        </authorList>
    </citation>
    <scope>NUCLEOTIDE SEQUENCE [GENOMIC DNA]</scope>
</reference>
<reference key="2">
    <citation type="submission" date="2008-09" db="EMBL/GenBank/DDBJ databases">
        <authorList>
            <person name="Li J."/>
            <person name="Wang H."/>
            <person name="Liu J."/>
            <person name="Liu F."/>
        </authorList>
    </citation>
    <scope>NUCLEOTIDE SEQUENCE [MRNA]</scope>
</reference>
<reference key="3">
    <citation type="journal article" date="2000" name="Proc. Natl. Acad. Sci. U.S.A.">
        <title>Gene expression profiling in the human hypothalamus-pituitary-adrenal axis and full-length cDNA cloning.</title>
        <authorList>
            <person name="Hu R.-M."/>
            <person name="Han Z.-G."/>
            <person name="Song H.-D."/>
            <person name="Peng Y.-D."/>
            <person name="Huang Q.-H."/>
            <person name="Ren S.-X."/>
            <person name="Gu Y.-J."/>
            <person name="Huang C.-H."/>
            <person name="Li Y.-B."/>
            <person name="Jiang C.-L."/>
            <person name="Fu G."/>
            <person name="Zhang Q.-H."/>
            <person name="Gu B.-W."/>
            <person name="Dai M."/>
            <person name="Mao Y.-F."/>
            <person name="Gao G.-F."/>
            <person name="Rong R."/>
            <person name="Ye M."/>
            <person name="Zhou J."/>
            <person name="Xu S.-H."/>
            <person name="Gu J."/>
            <person name="Shi J.-X."/>
            <person name="Jin W.-R."/>
            <person name="Zhang C.-K."/>
            <person name="Wu T.-M."/>
            <person name="Huang G.-Y."/>
            <person name="Chen Z."/>
            <person name="Chen M.-D."/>
            <person name="Chen J.-L."/>
        </authorList>
    </citation>
    <scope>NUCLEOTIDE SEQUENCE [LARGE SCALE MRNA]</scope>
    <source>
        <tissue>Pituitary</tissue>
    </source>
</reference>
<reference key="4">
    <citation type="journal article" date="2004" name="Nat. Genet.">
        <title>Complete sequencing and characterization of 21,243 full-length human cDNAs.</title>
        <authorList>
            <person name="Ota T."/>
            <person name="Suzuki Y."/>
            <person name="Nishikawa T."/>
            <person name="Otsuki T."/>
            <person name="Sugiyama T."/>
            <person name="Irie R."/>
            <person name="Wakamatsu A."/>
            <person name="Hayashi K."/>
            <person name="Sato H."/>
            <person name="Nagai K."/>
            <person name="Kimura K."/>
            <person name="Makita H."/>
            <person name="Sekine M."/>
            <person name="Obayashi M."/>
            <person name="Nishi T."/>
            <person name="Shibahara T."/>
            <person name="Tanaka T."/>
            <person name="Ishii S."/>
            <person name="Yamamoto J."/>
            <person name="Saito K."/>
            <person name="Kawai Y."/>
            <person name="Isono Y."/>
            <person name="Nakamura Y."/>
            <person name="Nagahari K."/>
            <person name="Murakami K."/>
            <person name="Yasuda T."/>
            <person name="Iwayanagi T."/>
            <person name="Wagatsuma M."/>
            <person name="Shiratori A."/>
            <person name="Sudo H."/>
            <person name="Hosoiri T."/>
            <person name="Kaku Y."/>
            <person name="Kodaira H."/>
            <person name="Kondo H."/>
            <person name="Sugawara M."/>
            <person name="Takahashi M."/>
            <person name="Kanda K."/>
            <person name="Yokoi T."/>
            <person name="Furuya T."/>
            <person name="Kikkawa E."/>
            <person name="Omura Y."/>
            <person name="Abe K."/>
            <person name="Kamihara K."/>
            <person name="Katsuta N."/>
            <person name="Sato K."/>
            <person name="Tanikawa M."/>
            <person name="Yamazaki M."/>
            <person name="Ninomiya K."/>
            <person name="Ishibashi T."/>
            <person name="Yamashita H."/>
            <person name="Murakawa K."/>
            <person name="Fujimori K."/>
            <person name="Tanai H."/>
            <person name="Kimata M."/>
            <person name="Watanabe M."/>
            <person name="Hiraoka S."/>
            <person name="Chiba Y."/>
            <person name="Ishida S."/>
            <person name="Ono Y."/>
            <person name="Takiguchi S."/>
            <person name="Watanabe S."/>
            <person name="Yosida M."/>
            <person name="Hotuta T."/>
            <person name="Kusano J."/>
            <person name="Kanehori K."/>
            <person name="Takahashi-Fujii A."/>
            <person name="Hara H."/>
            <person name="Tanase T.-O."/>
            <person name="Nomura Y."/>
            <person name="Togiya S."/>
            <person name="Komai F."/>
            <person name="Hara R."/>
            <person name="Takeuchi K."/>
            <person name="Arita M."/>
            <person name="Imose N."/>
            <person name="Musashino K."/>
            <person name="Yuuki H."/>
            <person name="Oshima A."/>
            <person name="Sasaki N."/>
            <person name="Aotsuka S."/>
            <person name="Yoshikawa Y."/>
            <person name="Matsunawa H."/>
            <person name="Ichihara T."/>
            <person name="Shiohata N."/>
            <person name="Sano S."/>
            <person name="Moriya S."/>
            <person name="Momiyama H."/>
            <person name="Satoh N."/>
            <person name="Takami S."/>
            <person name="Terashima Y."/>
            <person name="Suzuki O."/>
            <person name="Nakagawa S."/>
            <person name="Senoh A."/>
            <person name="Mizoguchi H."/>
            <person name="Goto Y."/>
            <person name="Shimizu F."/>
            <person name="Wakebe H."/>
            <person name="Hishigaki H."/>
            <person name="Watanabe T."/>
            <person name="Sugiyama A."/>
            <person name="Takemoto M."/>
            <person name="Kawakami B."/>
            <person name="Yamazaki M."/>
            <person name="Watanabe K."/>
            <person name="Kumagai A."/>
            <person name="Itakura S."/>
            <person name="Fukuzumi Y."/>
            <person name="Fujimori Y."/>
            <person name="Komiyama M."/>
            <person name="Tashiro H."/>
            <person name="Tanigami A."/>
            <person name="Fujiwara T."/>
            <person name="Ono T."/>
            <person name="Yamada K."/>
            <person name="Fujii Y."/>
            <person name="Ozaki K."/>
            <person name="Hirao M."/>
            <person name="Ohmori Y."/>
            <person name="Kawabata A."/>
            <person name="Hikiji T."/>
            <person name="Kobatake N."/>
            <person name="Inagaki H."/>
            <person name="Ikema Y."/>
            <person name="Okamoto S."/>
            <person name="Okitani R."/>
            <person name="Kawakami T."/>
            <person name="Noguchi S."/>
            <person name="Itoh T."/>
            <person name="Shigeta K."/>
            <person name="Senba T."/>
            <person name="Matsumura K."/>
            <person name="Nakajima Y."/>
            <person name="Mizuno T."/>
            <person name="Morinaga M."/>
            <person name="Sasaki M."/>
            <person name="Togashi T."/>
            <person name="Oyama M."/>
            <person name="Hata H."/>
            <person name="Watanabe M."/>
            <person name="Komatsu T."/>
            <person name="Mizushima-Sugano J."/>
            <person name="Satoh T."/>
            <person name="Shirai Y."/>
            <person name="Takahashi Y."/>
            <person name="Nakagawa K."/>
            <person name="Okumura K."/>
            <person name="Nagase T."/>
            <person name="Nomura N."/>
            <person name="Kikuchi H."/>
            <person name="Masuho Y."/>
            <person name="Yamashita R."/>
            <person name="Nakai K."/>
            <person name="Yada T."/>
            <person name="Nakamura Y."/>
            <person name="Ohara O."/>
            <person name="Isogai T."/>
            <person name="Sugano S."/>
        </authorList>
    </citation>
    <scope>NUCLEOTIDE SEQUENCE [LARGE SCALE MRNA]</scope>
    <source>
        <tissue>Cerebellum</tissue>
    </source>
</reference>
<reference key="5">
    <citation type="journal article" date="2004" name="Nature">
        <title>DNA sequence and analysis of human chromosome 9.</title>
        <authorList>
            <person name="Humphray S.J."/>
            <person name="Oliver K."/>
            <person name="Hunt A.R."/>
            <person name="Plumb R.W."/>
            <person name="Loveland J.E."/>
            <person name="Howe K.L."/>
            <person name="Andrews T.D."/>
            <person name="Searle S."/>
            <person name="Hunt S.E."/>
            <person name="Scott C.E."/>
            <person name="Jones M.C."/>
            <person name="Ainscough R."/>
            <person name="Almeida J.P."/>
            <person name="Ambrose K.D."/>
            <person name="Ashwell R.I.S."/>
            <person name="Babbage A.K."/>
            <person name="Babbage S."/>
            <person name="Bagguley C.L."/>
            <person name="Bailey J."/>
            <person name="Banerjee R."/>
            <person name="Barker D.J."/>
            <person name="Barlow K.F."/>
            <person name="Bates K."/>
            <person name="Beasley H."/>
            <person name="Beasley O."/>
            <person name="Bird C.P."/>
            <person name="Bray-Allen S."/>
            <person name="Brown A.J."/>
            <person name="Brown J.Y."/>
            <person name="Burford D."/>
            <person name="Burrill W."/>
            <person name="Burton J."/>
            <person name="Carder C."/>
            <person name="Carter N.P."/>
            <person name="Chapman J.C."/>
            <person name="Chen Y."/>
            <person name="Clarke G."/>
            <person name="Clark S.Y."/>
            <person name="Clee C.M."/>
            <person name="Clegg S."/>
            <person name="Collier R.E."/>
            <person name="Corby N."/>
            <person name="Crosier M."/>
            <person name="Cummings A.T."/>
            <person name="Davies J."/>
            <person name="Dhami P."/>
            <person name="Dunn M."/>
            <person name="Dutta I."/>
            <person name="Dyer L.W."/>
            <person name="Earthrowl M.E."/>
            <person name="Faulkner L."/>
            <person name="Fleming C.J."/>
            <person name="Frankish A."/>
            <person name="Frankland J.A."/>
            <person name="French L."/>
            <person name="Fricker D.G."/>
            <person name="Garner P."/>
            <person name="Garnett J."/>
            <person name="Ghori J."/>
            <person name="Gilbert J.G.R."/>
            <person name="Glison C."/>
            <person name="Grafham D.V."/>
            <person name="Gribble S."/>
            <person name="Griffiths C."/>
            <person name="Griffiths-Jones S."/>
            <person name="Grocock R."/>
            <person name="Guy J."/>
            <person name="Hall R.E."/>
            <person name="Hammond S."/>
            <person name="Harley J.L."/>
            <person name="Harrison E.S.I."/>
            <person name="Hart E.A."/>
            <person name="Heath P.D."/>
            <person name="Henderson C.D."/>
            <person name="Hopkins B.L."/>
            <person name="Howard P.J."/>
            <person name="Howden P.J."/>
            <person name="Huckle E."/>
            <person name="Johnson C."/>
            <person name="Johnson D."/>
            <person name="Joy A.A."/>
            <person name="Kay M."/>
            <person name="Keenan S."/>
            <person name="Kershaw J.K."/>
            <person name="Kimberley A.M."/>
            <person name="King A."/>
            <person name="Knights A."/>
            <person name="Laird G.K."/>
            <person name="Langford C."/>
            <person name="Lawlor S."/>
            <person name="Leongamornlert D.A."/>
            <person name="Leversha M."/>
            <person name="Lloyd C."/>
            <person name="Lloyd D.M."/>
            <person name="Lovell J."/>
            <person name="Martin S."/>
            <person name="Mashreghi-Mohammadi M."/>
            <person name="Matthews L."/>
            <person name="McLaren S."/>
            <person name="McLay K.E."/>
            <person name="McMurray A."/>
            <person name="Milne S."/>
            <person name="Nickerson T."/>
            <person name="Nisbett J."/>
            <person name="Nordsiek G."/>
            <person name="Pearce A.V."/>
            <person name="Peck A.I."/>
            <person name="Porter K.M."/>
            <person name="Pandian R."/>
            <person name="Pelan S."/>
            <person name="Phillimore B."/>
            <person name="Povey S."/>
            <person name="Ramsey Y."/>
            <person name="Rand V."/>
            <person name="Scharfe M."/>
            <person name="Sehra H.K."/>
            <person name="Shownkeen R."/>
            <person name="Sims S.K."/>
            <person name="Skuce C.D."/>
            <person name="Smith M."/>
            <person name="Steward C.A."/>
            <person name="Swarbreck D."/>
            <person name="Sycamore N."/>
            <person name="Tester J."/>
            <person name="Thorpe A."/>
            <person name="Tracey A."/>
            <person name="Tromans A."/>
            <person name="Thomas D.W."/>
            <person name="Wall M."/>
            <person name="Wallis J.M."/>
            <person name="West A.P."/>
            <person name="Whitehead S.L."/>
            <person name="Willey D.L."/>
            <person name="Williams S.A."/>
            <person name="Wilming L."/>
            <person name="Wray P.W."/>
            <person name="Young L."/>
            <person name="Ashurst J.L."/>
            <person name="Coulson A."/>
            <person name="Blocker H."/>
            <person name="Durbin R.M."/>
            <person name="Sulston J.E."/>
            <person name="Hubbard T."/>
            <person name="Jackson M.J."/>
            <person name="Bentley D.R."/>
            <person name="Beck S."/>
            <person name="Rogers J."/>
            <person name="Dunham I."/>
        </authorList>
    </citation>
    <scope>NUCLEOTIDE SEQUENCE [LARGE SCALE GENOMIC DNA]</scope>
</reference>
<reference key="6">
    <citation type="submission" date="2005-09" db="EMBL/GenBank/DDBJ databases">
        <authorList>
            <person name="Mural R.J."/>
            <person name="Istrail S."/>
            <person name="Sutton G.G."/>
            <person name="Florea L."/>
            <person name="Halpern A.L."/>
            <person name="Mobarry C.M."/>
            <person name="Lippert R."/>
            <person name="Walenz B."/>
            <person name="Shatkay H."/>
            <person name="Dew I."/>
            <person name="Miller J.R."/>
            <person name="Flanigan M.J."/>
            <person name="Edwards N.J."/>
            <person name="Bolanos R."/>
            <person name="Fasulo D."/>
            <person name="Halldorsson B.V."/>
            <person name="Hannenhalli S."/>
            <person name="Turner R."/>
            <person name="Yooseph S."/>
            <person name="Lu F."/>
            <person name="Nusskern D.R."/>
            <person name="Shue B.C."/>
            <person name="Zheng X.H."/>
            <person name="Zhong F."/>
            <person name="Delcher A.L."/>
            <person name="Huson D.H."/>
            <person name="Kravitz S.A."/>
            <person name="Mouchard L."/>
            <person name="Reinert K."/>
            <person name="Remington K.A."/>
            <person name="Clark A.G."/>
            <person name="Waterman M.S."/>
            <person name="Eichler E.E."/>
            <person name="Adams M.D."/>
            <person name="Hunkapiller M.W."/>
            <person name="Myers E.W."/>
            <person name="Venter J.C."/>
        </authorList>
    </citation>
    <scope>NUCLEOTIDE SEQUENCE [LARGE SCALE GENOMIC DNA]</scope>
</reference>
<reference key="7">
    <citation type="journal article" date="2004" name="Genome Res.">
        <title>The status, quality, and expansion of the NIH full-length cDNA project: the Mammalian Gene Collection (MGC).</title>
        <authorList>
            <consortium name="The MGC Project Team"/>
        </authorList>
    </citation>
    <scope>NUCLEOTIDE SEQUENCE [LARGE SCALE MRNA]</scope>
    <source>
        <tissue>Uterus</tissue>
    </source>
</reference>
<reference key="8">
    <citation type="journal article" date="2003" name="Nat. Biotechnol.">
        <title>Exploring proteomes and analyzing protein processing by mass spectrometric identification of sorted N-terminal peptides.</title>
        <authorList>
            <person name="Gevaert K."/>
            <person name="Goethals M."/>
            <person name="Martens L."/>
            <person name="Van Damme J."/>
            <person name="Staes A."/>
            <person name="Thomas G.R."/>
            <person name="Vandekerckhove J."/>
        </authorList>
    </citation>
    <scope>PROTEIN SEQUENCE OF 2-25</scope>
    <source>
        <tissue>Platelet</tissue>
    </source>
</reference>
<reference key="9">
    <citation type="submission" date="2005-11" db="UniProtKB">
        <authorList>
            <person name="Bienvenut W.V."/>
            <person name="Claeys D."/>
        </authorList>
    </citation>
    <scope>PROTEIN SEQUENCE OF 2-18; 148-155; 278-287; 296-312; 366-377; 466-487; 587-599; 639-651 AND 669-677</scope>
    <scope>CLEAVAGE OF INITIATOR METHIONINE</scope>
    <scope>ACETYLATION AT ALA-2</scope>
    <scope>IDENTIFICATION BY MASS SPECTROMETRY</scope>
    <source>
        <tissue>Platelet</tissue>
    </source>
</reference>
<reference key="10">
    <citation type="journal article" date="1993" name="Nature">
        <title>Valosin-containing protein, VCP, is a ubiquitous clathrin-binding protein.</title>
        <authorList>
            <person name="Pleasure I.T."/>
            <person name="Black M.M."/>
            <person name="Keen J.H."/>
        </authorList>
    </citation>
    <scope>PROTEIN SEQUENCE OF 27-41 AND 233-238</scope>
    <scope>INTERACTION WITH CLATHRIN</scope>
    <source>
        <tissue>Glial tumor</tissue>
    </source>
</reference>
<reference key="11">
    <citation type="submission" date="2008-12" db="UniProtKB">
        <authorList>
            <person name="Lubec G."/>
            <person name="Chen W.-Q."/>
            <person name="Sun Y."/>
        </authorList>
    </citation>
    <scope>PROTEIN SEQUENCE OF 46-53; 66-81; 96-109; 148-155; 240-251; 323-336; 454-502; 530-560; 600-614; 639-651; 678-693; 714-732 AND 754-766</scope>
    <scope>IDENTIFICATION BY MASS SPECTROMETRY</scope>
    <source>
        <tissue>Fetal brain cortex</tissue>
    </source>
</reference>
<reference key="12">
    <citation type="journal article" date="2013" name="PLoS Genet.">
        <title>A newly uncovered group of distantly related lysine methyltransferases preferentially interact with molecular chaperones to regulate their activity.</title>
        <authorList>
            <person name="Cloutier P."/>
            <person name="Lavallee-Adam M."/>
            <person name="Faubert D."/>
            <person name="Blanchette M."/>
            <person name="Coulombe B."/>
        </authorList>
    </citation>
    <scope>PROTEIN SEQUENCE OF 314-322</scope>
    <scope>IDENTIFICATION BY MASS SPECTROMETRY</scope>
    <scope>METHYLATION AT LYS-315</scope>
    <scope>MUTAGENESIS OF LYS-315</scope>
    <scope>CHARACTERIZATION OF VARIANTS IBMPFD1 HIS-155 AND GLN-191</scope>
    <scope>CHARACTERIZATION OF VARIANT FTDALS6 GLY-159</scope>
</reference>
<reference key="13">
    <citation type="submission" date="1996-04" db="EMBL/GenBank/DDBJ databases">
        <title>Characterization of different mRNA types expressed in human brain.</title>
        <authorList>
            <person name="Dmitrenko V.V."/>
            <person name="Garifulin O.M."/>
            <person name="Kavsan V.M."/>
        </authorList>
    </citation>
    <scope>NUCLEOTIDE SEQUENCE [MRNA] OF 388-483</scope>
    <source>
        <tissue>Fetal brain</tissue>
    </source>
</reference>
<reference key="14">
    <citation type="journal article" date="2004" name="Biochem. J.">
        <title>A novel UBA and UBX domain protein that binds polyubiquitin and VCP and is a substrate for SAPKs.</title>
        <authorList>
            <person name="McNeill H."/>
            <person name="Knebel A."/>
            <person name="Arthur J.S."/>
            <person name="Cuenda A."/>
            <person name="Cohen P."/>
        </authorList>
    </citation>
    <scope>INTERACTION WITH NGLY1</scope>
</reference>
<reference key="15">
    <citation type="journal article" date="2004" name="J. Biol. Chem.">
        <title>Physical and functional interaction between dorfin and valosin-containing protein that are colocalized in ubiquitylated inclusions in neurodegenerative disorders.</title>
        <authorList>
            <person name="Ishigaki S."/>
            <person name="Hishikawa N."/>
            <person name="Niwa J."/>
            <person name="Iemura S."/>
            <person name="Natsume T."/>
            <person name="Hori S."/>
            <person name="Kakizuka A."/>
            <person name="Tanaka K."/>
            <person name="Sobue G."/>
        </authorList>
    </citation>
    <scope>FUNCTION</scope>
    <scope>INTERACTION WITH RNF19A</scope>
    <scope>IDENTIFICATION BY MASS SPECTROMETRY</scope>
    <scope>SUBCELLULAR LOCATION</scope>
    <scope>MUTAGENESIS OF LYS-524</scope>
</reference>
<reference key="16">
    <citation type="journal article" date="2004" name="Nature">
        <title>A membrane protein complex mediates retro-translocation from the ER lumen into the cytosol.</title>
        <authorList>
            <person name="Ye Y."/>
            <person name="Shibata Y."/>
            <person name="Yun C."/>
            <person name="Ron D."/>
            <person name="Rapoport T.A."/>
        </authorList>
    </citation>
    <scope>INTERACTION WITH SELENOS</scope>
    <scope>SUBCELLULAR LOCATION</scope>
</reference>
<reference key="17">
    <citation type="journal article" date="2005" name="Biochem. Biophys. Res. Commun.">
        <title>Proteomic identification of proteins conjugated to ISG15 in mouse and human cells.</title>
        <authorList>
            <person name="Giannakopoulos N.V."/>
            <person name="Luo J.K."/>
            <person name="Papov V."/>
            <person name="Zou W."/>
            <person name="Lenschow D.J."/>
            <person name="Jacobs B.S."/>
            <person name="Borden E.C."/>
            <person name="Li J."/>
            <person name="Virgin H.W."/>
            <person name="Zhang D.E."/>
        </authorList>
    </citation>
    <scope>ISGYLATION</scope>
</reference>
<reference key="18">
    <citation type="journal article" date="2005" name="J. Mol. Biol.">
        <title>The ubiquitin-domain protein HERP forms a complex with components of the endoplasmic reticulum associated degradation pathway.</title>
        <authorList>
            <person name="Schulze A."/>
            <person name="Standera S."/>
            <person name="Buerger E."/>
            <person name="Kikkert M."/>
            <person name="van Voorden S."/>
            <person name="Wiertz E."/>
            <person name="Koning F."/>
            <person name="Kloetzel P.-M."/>
            <person name="Seeger M."/>
        </authorList>
    </citation>
    <scope>INTERACTION WITH SYVN1 AND DERL1</scope>
</reference>
<reference key="19">
    <citation type="journal article" date="2005" name="Mol. Cell">
        <title>Gp78, a membrane-anchored ubiquitin ligase, associates with Insig-1 and couples sterol-regulated ubiquitination to degradation of HMG CoA reductase.</title>
        <authorList>
            <person name="Song B.L."/>
            <person name="Sever N."/>
            <person name="DeBose-Boyd R.A."/>
        </authorList>
    </citation>
    <scope>INTERACTION WITH AMFR</scope>
    <scope>FUNCTION</scope>
    <scope>SUBCELLULAR LOCATION</scope>
    <scope>MUTAGENESIS OF LYS-251 AND LYS-524</scope>
</reference>
<reference key="20">
    <citation type="journal article" date="2005" name="Proc. Natl. Acad. Sci. U.S.A.">
        <title>Recruitment of the p97 ATPase and ubiquitin ligases to the site of retrotranslocation at the endoplasmic reticulum membrane.</title>
        <authorList>
            <person name="Ye Y."/>
            <person name="Shibata Y."/>
            <person name="Kikkert M."/>
            <person name="van Voorden S."/>
            <person name="Wiertz E."/>
            <person name="Rapoport T.A."/>
        </authorList>
    </citation>
    <scope>FUNCTION</scope>
    <scope>INTERACTION WITH DERL1; AMFR; SYVN1 AND SELENOS</scope>
</reference>
<reference key="21">
    <citation type="journal article" date="2005" name="Proc. Natl. Acad. Sci. U.S.A.">
        <title>Multiprotein complexes that link dislocation, ubiquitination, and extraction of misfolded proteins from the endoplasmic reticulum membrane.</title>
        <authorList>
            <person name="Lilley B.N."/>
            <person name="Ploegh H.L."/>
        </authorList>
    </citation>
    <scope>INTERACTION WITH DERL1 AND DERL2</scope>
</reference>
<reference key="22">
    <citation type="journal article" date="2006" name="J. Biol. Chem.">
        <title>Calcium-sensing receptor ubiquitination and degradation mediated by the E3 ubiquitin ligase dorfin.</title>
        <authorList>
            <person name="Huang Y."/>
            <person name="Niwa J."/>
            <person name="Sobue G."/>
            <person name="Breitwieser G.E."/>
        </authorList>
    </citation>
    <scope>INTERACTION WITH CASR AND RNF19A</scope>
</reference>
<reference key="23">
    <citation type="journal article" date="2006" name="J. Cell Biol.">
        <title>Derlin-2 and Derlin-3 are regulated by the mammalian unfolded protein response and are required for ER-associated degradation.</title>
        <authorList>
            <person name="Oda Y."/>
            <person name="Okada T."/>
            <person name="Yoshida H."/>
            <person name="Kaufman R.J."/>
            <person name="Nagata K."/>
            <person name="Mori K."/>
        </authorList>
    </citation>
    <scope>INTERACTION WITH DERL1; DERL2 AND DERL3</scope>
</reference>
<reference key="24">
    <citation type="journal article" date="2006" name="J. Cell Sci.">
        <title>Characterization of erasin (UBXD2): a new ER protein that promotes ER-associated protein degradation.</title>
        <authorList>
            <person name="Liang J."/>
            <person name="Yin C."/>
            <person name="Doong H."/>
            <person name="Fang S."/>
            <person name="Peterhoff C."/>
            <person name="Nixon R.A."/>
            <person name="Monteiro M.J."/>
        </authorList>
    </citation>
    <scope>INTERACTION WITH UBXN4</scope>
</reference>
<reference key="25">
    <citation type="journal article" date="2007" name="J. Biol. Chem.">
        <title>Identification of SVIP as an endogenous inhibitor of endoplasmic reticulum-associated degradation.</title>
        <authorList>
            <person name="Ballar P."/>
            <person name="Zhong Y."/>
            <person name="Nagahama M."/>
            <person name="Tagaya M."/>
            <person name="Shen Y."/>
            <person name="Fang S."/>
        </authorList>
    </citation>
    <scope>INTERACTION WITH SVIP AND DERL1</scope>
</reference>
<reference key="26">
    <citation type="journal article" date="2007" name="Mol. Biol. Cell">
        <title>The RBCC gene RFP2 (Leu5) encodes a novel transmembrane E3 ubiquitin ligase involved in ERAD.</title>
        <authorList>
            <person name="Lerner M."/>
            <person name="Corcoran M."/>
            <person name="Cepeda D."/>
            <person name="Nielsen M.L."/>
            <person name="Zubarev R."/>
            <person name="Ponten F."/>
            <person name="Uhlen M."/>
            <person name="Hober S."/>
            <person name="Grander D."/>
            <person name="Sangfelt O."/>
        </authorList>
    </citation>
    <scope>INTERACTION WITH TRIM13</scope>
</reference>
<reference key="27">
    <citation type="journal article" date="2007" name="Science">
        <title>ATM and ATR substrate analysis reveals extensive protein networks responsive to DNA damage.</title>
        <authorList>
            <person name="Matsuoka S."/>
            <person name="Ballif B.A."/>
            <person name="Smogorzewska A."/>
            <person name="McDonald E.R. III"/>
            <person name="Hurov K.E."/>
            <person name="Luo J."/>
            <person name="Bakalarski C.E."/>
            <person name="Zhao Z."/>
            <person name="Solimini N."/>
            <person name="Lerenthal Y."/>
            <person name="Shiloh Y."/>
            <person name="Gygi S.P."/>
            <person name="Elledge S.J."/>
        </authorList>
    </citation>
    <scope>IDENTIFICATION BY MASS SPECTROMETRY [LARGE SCALE ANALYSIS]</scope>
    <source>
        <tissue>Embryonic kidney</tissue>
    </source>
</reference>
<reference key="28">
    <citation type="journal article" date="2008" name="Biochem. Biophys. Res. Commun.">
        <title>Ubiquitin ligase Kf-1 is involved in the endoplasmic reticulum-associated degradation pathway.</title>
        <authorList>
            <person name="Maruyama Y."/>
            <person name="Yamada M."/>
            <person name="Takahashi K."/>
            <person name="Yamada M."/>
        </authorList>
    </citation>
    <scope>INTERACTION WITH RNF103</scope>
</reference>
<reference key="29">
    <citation type="journal article" date="2008" name="Int. J. Biochem. Cell Biol.">
        <title>Ubxd1 is a novel co-factor of the human p97 ATPase.</title>
        <authorList>
            <person name="Madsen L."/>
            <person name="Andersen K.M."/>
            <person name="Prag S."/>
            <person name="Moos T."/>
            <person name="Semple C.A."/>
            <person name="Seeger M."/>
            <person name="Hartmann-Petersen R."/>
        </authorList>
    </citation>
    <scope>INTERACTION WITH UBXN6</scope>
</reference>
<reference key="30">
    <citation type="journal article" date="2008" name="Mol. Cell">
        <title>Kinase-selective enrichment enables quantitative phosphoproteomics of the kinome across the cell cycle.</title>
        <authorList>
            <person name="Daub H."/>
            <person name="Olsen J.V."/>
            <person name="Bairlein M."/>
            <person name="Gnad F."/>
            <person name="Oppermann F.S."/>
            <person name="Korner R."/>
            <person name="Greff Z."/>
            <person name="Keri G."/>
            <person name="Stemmann O."/>
            <person name="Mann M."/>
        </authorList>
    </citation>
    <scope>PHOSPHORYLATION [LARGE SCALE ANALYSIS] AT SER-3; THR-436 AND SER-787</scope>
    <scope>IDENTIFICATION BY MASS SPECTROMETRY [LARGE SCALE ANALYSIS]</scope>
    <source>
        <tissue>Cervix carcinoma</tissue>
    </source>
</reference>
<reference key="31">
    <citation type="journal article" date="2008" name="Mol. Immunol.">
        <title>Ro52 functionally interacts with IgG1 and regulates its quality control via the ERAD system.</title>
        <authorList>
            <person name="Takahata M."/>
            <person name="Bohgaki M."/>
            <person name="Tsukiyama T."/>
            <person name="Kondo T."/>
            <person name="Asaka M."/>
            <person name="Hatakeyama S."/>
        </authorList>
    </citation>
    <scope>INTERACTION WITH TRIM21</scope>
</reference>
<reference key="32">
    <citation type="journal article" date="2009" name="Anal. Chem.">
        <title>Lys-N and trypsin cover complementary parts of the phosphoproteome in a refined SCX-based approach.</title>
        <authorList>
            <person name="Gauci S."/>
            <person name="Helbig A.O."/>
            <person name="Slijper M."/>
            <person name="Krijgsveld J."/>
            <person name="Heck A.J."/>
            <person name="Mohammed S."/>
        </authorList>
    </citation>
    <scope>ACETYLATION [LARGE SCALE ANALYSIS] AT ALA-2</scope>
    <scope>CLEAVAGE OF INITIATOR METHIONINE [LARGE SCALE ANALYSIS]</scope>
    <scope>IDENTIFICATION BY MASS SPECTROMETRY [LARGE SCALE ANALYSIS]</scope>
</reference>
<reference key="33">
    <citation type="journal article" date="2009" name="Biochem. Biophys. Res. Commun.">
        <title>UBXD1 binds p97 through two independent binding sites.</title>
        <authorList>
            <person name="Kern M."/>
            <person name="Fernandez-Saiz V."/>
            <person name="Schaefer Z."/>
            <person name="Buchberger A."/>
        </authorList>
    </citation>
    <scope>INTERACTION WITH UBXN6</scope>
</reference>
<reference key="34">
    <citation type="journal article" date="2009" name="Biochem. Biophys. Res. Commun.">
        <title>UBXD1 is a VCP-interacting protein that is involved in ER-associated degradation.</title>
        <authorList>
            <person name="Nagahama M."/>
            <person name="Ohnishi M."/>
            <person name="Kawate Y."/>
            <person name="Matsui T."/>
            <person name="Miyake H."/>
            <person name="Yuasa K."/>
            <person name="Tani K."/>
            <person name="Tagaya M."/>
            <person name="Tsuji A."/>
        </authorList>
    </citation>
    <scope>INTERACTION WITH UBXN6</scope>
</reference>
<reference key="35">
    <citation type="journal article" date="2009" name="J. Cell Biol.">
        <title>Ubiquilin and p97/VCP bind erasin, forming a complex involved in ERAD.</title>
        <authorList>
            <person name="Lim P.J."/>
            <person name="Danner R."/>
            <person name="Liang J."/>
            <person name="Doong H."/>
            <person name="Harman C."/>
            <person name="Srinivasan D."/>
            <person name="Rothenberg C."/>
            <person name="Wang H."/>
            <person name="Ye Y."/>
            <person name="Fang S."/>
            <person name="Monteiro M.J."/>
        </authorList>
    </citation>
    <scope>INTERACTION WITH UBXN4</scope>
    <scope>IDENTIFICATION IN A COMPLEX WITH UBQLN1 AND UBXN4</scope>
</reference>
<reference key="36">
    <citation type="journal article" date="2009" name="Mol. Cell">
        <title>The otubain YOD1 is a deubiquitinating enzyme that associates with p97 to facilitate protein dislocation from the ER.</title>
        <authorList>
            <person name="Ernst R."/>
            <person name="Mueller B."/>
            <person name="Ploegh H.L."/>
            <person name="Schlieker C."/>
        </authorList>
    </citation>
    <scope>INTERACTION WITH YOD1</scope>
</reference>
<reference key="37">
    <citation type="journal article" date="2009" name="Mol. Cell. Proteomics">
        <title>Large-scale proteomics analysis of the human kinome.</title>
        <authorList>
            <person name="Oppermann F.S."/>
            <person name="Gnad F."/>
            <person name="Olsen J.V."/>
            <person name="Hornberger R."/>
            <person name="Greff Z."/>
            <person name="Keri G."/>
            <person name="Mann M."/>
            <person name="Daub H."/>
        </authorList>
    </citation>
    <scope>ACETYLATION [LARGE SCALE ANALYSIS] AT ALA-2</scope>
    <scope>PHOSPHORYLATION [LARGE SCALE ANALYSIS] AT SER-3 AND SER-37</scope>
    <scope>CLEAVAGE OF INITIATOR METHIONINE [LARGE SCALE ANALYSIS]</scope>
    <scope>IDENTIFICATION BY MASS SPECTROMETRY [LARGE SCALE ANALYSIS]</scope>
</reference>
<reference key="38">
    <citation type="journal article" date="2009" name="Sci. Signal.">
        <title>Quantitative phosphoproteomic analysis of T cell receptor signaling reveals system-wide modulation of protein-protein interactions.</title>
        <authorList>
            <person name="Mayya V."/>
            <person name="Lundgren D.H."/>
            <person name="Hwang S.-I."/>
            <person name="Rezaul K."/>
            <person name="Wu L."/>
            <person name="Eng J.K."/>
            <person name="Rodionov V."/>
            <person name="Han D.K."/>
        </authorList>
    </citation>
    <scope>PHOSPHORYLATION [LARGE SCALE ANALYSIS] AT SER-770 AND SER-775</scope>
    <scope>IDENTIFICATION BY MASS SPECTROMETRY [LARGE SCALE ANALYSIS]</scope>
    <source>
        <tissue>Leukemic T-cell</tissue>
    </source>
</reference>
<reference key="39">
    <citation type="journal article" date="2010" name="Brain">
        <title>Strumpellin is a novel valosin-containing protein binding partner linking hereditary spastic paraplegia to protein aggregation diseases.</title>
        <authorList>
            <person name="Clemen C.S."/>
            <person name="Tangavelou K."/>
            <person name="Strucksberg K.H."/>
            <person name="Just S."/>
            <person name="Gaertner L."/>
            <person name="Regus-Leidig H."/>
            <person name="Stumpf M."/>
            <person name="Reimann J."/>
            <person name="Coras R."/>
            <person name="Morgan R.O."/>
            <person name="Fernandez M.P."/>
            <person name="Hofmann A."/>
            <person name="Muller S."/>
            <person name="Schoser B."/>
            <person name="Hanisch F.G."/>
            <person name="Rottbauer W."/>
            <person name="Blumcke I."/>
            <person name="von Horsten S."/>
            <person name="Eichinger L."/>
            <person name="Schroder R."/>
        </authorList>
    </citation>
    <scope>INTERACTION WITH WASHC5</scope>
</reference>
<reference key="40">
    <citation type="journal article" date="2010" name="Sci. Signal.">
        <title>Quantitative phosphoproteomics reveals widespread full phosphorylation site occupancy during mitosis.</title>
        <authorList>
            <person name="Olsen J.V."/>
            <person name="Vermeulen M."/>
            <person name="Santamaria A."/>
            <person name="Kumar C."/>
            <person name="Miller M.L."/>
            <person name="Jensen L.J."/>
            <person name="Gnad F."/>
            <person name="Cox J."/>
            <person name="Jensen T.S."/>
            <person name="Nigg E.A."/>
            <person name="Brunak S."/>
            <person name="Mann M."/>
        </authorList>
    </citation>
    <scope>IDENTIFICATION BY MASS SPECTROMETRY [LARGE SCALE ANALYSIS]</scope>
    <source>
        <tissue>Cervix carcinoma</tissue>
    </source>
</reference>
<reference key="41">
    <citation type="journal article" date="2011" name="BMC Syst. Biol.">
        <title>Initial characterization of the human central proteome.</title>
        <authorList>
            <person name="Burkard T.R."/>
            <person name="Planyavsky M."/>
            <person name="Kaupe I."/>
            <person name="Breitwieser F.P."/>
            <person name="Buerckstuemmer T."/>
            <person name="Bennett K.L."/>
            <person name="Superti-Furga G."/>
            <person name="Colinge J."/>
        </authorList>
    </citation>
    <scope>IDENTIFICATION BY MASS SPECTROMETRY [LARGE SCALE ANALYSIS]</scope>
</reference>
<reference key="42">
    <citation type="journal article" date="2011" name="Mol. Biol. Cell">
        <title>The AAA-ATPase p97 is essential for outer mitochondrial membrane protein turnover.</title>
        <authorList>
            <person name="Xu S."/>
            <person name="Peng G."/>
            <person name="Wang Y."/>
            <person name="Fang S."/>
            <person name="Karbowski M."/>
        </authorList>
    </citation>
    <scope>FUNCTION IN OMM PROTEIN TURNOVER</scope>
</reference>
<reference key="43">
    <citation type="journal article" date="2011" name="Mol. Cell">
        <title>A ubiquitin ligase-associated chaperone holdase maintains polypeptides in soluble states for proteasome degradation.</title>
        <authorList>
            <person name="Wang Q."/>
            <person name="Liu Y."/>
            <person name="Soetandyo N."/>
            <person name="Baek K."/>
            <person name="Hegde R."/>
            <person name="Ye Y."/>
        </authorList>
    </citation>
    <scope>INTERACTION WITH BAG6</scope>
</reference>
<reference key="44">
    <citation type="journal article" date="2011" name="Nat. Cell Biol.">
        <title>Endolysosomal sorting of ubiquitylated caveolin-1 is regulated by VCP and UBXD1 and impaired by VCP disease mutations.</title>
        <authorList>
            <person name="Ritz D."/>
            <person name="Vuk M."/>
            <person name="Kirchner P."/>
            <person name="Bug M."/>
            <person name="Schuetz S."/>
            <person name="Hayer A."/>
            <person name="Bremer S."/>
            <person name="Lusk C."/>
            <person name="Baloh R.H."/>
            <person name="Lee H."/>
            <person name="Glatter T."/>
            <person name="Gstaiger M."/>
            <person name="Aebersold R."/>
            <person name="Weihl C.C."/>
            <person name="Meyer H."/>
        </authorList>
    </citation>
    <scope>FUNCTION</scope>
    <scope>INTERACTION WITH CAV1 AND UBXN6</scope>
    <scope>CHARACTERIZATION OF VARIANTS IBMPFD1 GLY-95; HIS-155 AND GLU-232</scope>
    <scope>MUTAGENESIS OF GLU-578</scope>
</reference>
<reference key="45">
    <citation type="journal article" date="2011" name="Nat. Cell Biol.">
        <title>The ubiquitin-selective segregase VCP/p97 orchestrates the response to DNA double-strand breaks.</title>
        <authorList>
            <person name="Meerang M."/>
            <person name="Ritz D."/>
            <person name="Paliwal S."/>
            <person name="Garajova Z."/>
            <person name="Bosshard M."/>
            <person name="Mailand N."/>
            <person name="Janscak P."/>
            <person name="Hubscher U."/>
            <person name="Meyer H."/>
            <person name="Ramadan K."/>
        </authorList>
    </citation>
    <scope>FUNCTION</scope>
</reference>
<reference key="46">
    <citation type="journal article" date="2011" name="Nat. Struct. Mol. Biol.">
        <title>The AAA-ATPase VCP/p97 promotes 53BP1 recruitment by removing L3MBTL1 from DNA double-strand breaks.</title>
        <authorList>
            <person name="Acs K."/>
            <person name="Luijsterburg M.S."/>
            <person name="Ackermann L."/>
            <person name="Salomons F.A."/>
            <person name="Hoppe T."/>
            <person name="Dantuma N.P."/>
        </authorList>
    </citation>
    <scope>FUNCTION</scope>
    <scope>INTERACTION WITH L3MBTL1</scope>
    <scope>SUBCELLULAR LOCATION</scope>
</reference>
<reference key="47">
    <citation type="journal article" date="2011" name="PLoS ONE">
        <title>The tissue-specific Rep8/UBXD6 tethers p97 to the endoplasmic reticulum membrane for degradation of misfolded proteins.</title>
        <authorList>
            <person name="Madsen L."/>
            <person name="Kriegenburg F."/>
            <person name="Vala A."/>
            <person name="Best D."/>
            <person name="Prag S."/>
            <person name="Hofmann K."/>
            <person name="Seeger M."/>
            <person name="Adams I.R."/>
            <person name="Hartmann-Petersen R."/>
        </authorList>
    </citation>
    <scope>INTERACTION WITH UBXN8</scope>
</reference>
<reference key="48">
    <citation type="journal article" date="2011" name="Sci. Signal.">
        <title>System-wide temporal characterization of the proteome and phosphoproteome of human embryonic stem cell differentiation.</title>
        <authorList>
            <person name="Rigbolt K.T."/>
            <person name="Prokhorova T.A."/>
            <person name="Akimov V."/>
            <person name="Henningsen J."/>
            <person name="Johansen P.T."/>
            <person name="Kratchmarova I."/>
            <person name="Kassem M."/>
            <person name="Mann M."/>
            <person name="Olsen J.V."/>
            <person name="Blagoev B."/>
        </authorList>
    </citation>
    <scope>ACETYLATION [LARGE SCALE ANALYSIS] AT ALA-2</scope>
    <scope>PHOSPHORYLATION [LARGE SCALE ANALYSIS] AT SER-3</scope>
    <scope>CLEAVAGE OF INITIATOR METHIONINE [LARGE SCALE ANALYSIS]</scope>
    <scope>IDENTIFICATION BY MASS SPECTROMETRY [LARGE SCALE ANALYSIS]</scope>
</reference>
<reference key="49">
    <citation type="journal article" date="2012" name="BMC Biol.">
        <title>UBXN7 docks on neddylated cullin complexes using its UIM motif and causes HIF1alpha accumulation.</title>
        <authorList>
            <person name="Bandau S."/>
            <person name="Knebel A."/>
            <person name="Gage Z.O."/>
            <person name="Wood N.T."/>
            <person name="Alexandru G."/>
        </authorList>
    </citation>
    <scope>INTERACTION WITH UBXN7</scope>
</reference>
<reference key="50">
    <citation type="journal article" date="2012" name="Mol. Cell">
        <title>Ubiquitin-dependent intramembrane rhomboid protease promotes ERAD of membrane proteins.</title>
        <authorList>
            <person name="Fleig L."/>
            <person name="Bergbold N."/>
            <person name="Sahasrabudhe P."/>
            <person name="Geiger B."/>
            <person name="Kaltak L."/>
            <person name="Lemberg M.K."/>
        </authorList>
    </citation>
    <scope>INTERACTION WITH RHBDD1</scope>
    <scope>MUTAGENESIS OF LYS-251; LYS-524 AND GLU-578</scope>
    <scope>IDENTIFICATION BY MASS SPECTROMETRY</scope>
</reference>
<reference key="51">
    <citation type="journal article" date="2012" name="J. Biol. Chem.">
        <title>Proliferating cell nuclear antigen (PCNA)-binding protein C1orf124 is a regulator of translesion synthesis.</title>
        <authorList>
            <person name="Ghosal G."/>
            <person name="Leung J.W."/>
            <person name="Nair B.C."/>
            <person name="Fong K.W."/>
            <person name="Chen J."/>
        </authorList>
    </citation>
    <scope>INTERACTION WITH SPRTN</scope>
</reference>
<reference key="52">
    <citation type="journal article" date="2012" name="Mol. Cell">
        <title>STT3B-dependent posttranslational N-glycosylation as a surveillance system for secretory protein.</title>
        <authorList>
            <person name="Sato T."/>
            <person name="Sako Y."/>
            <person name="Sho M."/>
            <person name="Momohara M."/>
            <person name="Suico M.A."/>
            <person name="Shuto T."/>
            <person name="Nishitoh H."/>
            <person name="Okiyoneda T."/>
            <person name="Kokame K."/>
            <person name="Kaneko M."/>
            <person name="Taura M."/>
            <person name="Miyata M."/>
            <person name="Chosa K."/>
            <person name="Koga T."/>
            <person name="Morino-Koga S."/>
            <person name="Wada I."/>
            <person name="Kai H."/>
        </authorList>
    </citation>
    <scope>FUNCTION IN ERAD PATHWAY</scope>
</reference>
<reference key="53">
    <citation type="journal article" date="2012" name="Mol. Cell. Proteomics">
        <title>Comparative large-scale characterisation of plant vs. mammal proteins reveals similar and idiosyncratic N-alpha acetylation features.</title>
        <authorList>
            <person name="Bienvenut W.V."/>
            <person name="Sumpton D."/>
            <person name="Martinez A."/>
            <person name="Lilla S."/>
            <person name="Espagne C."/>
            <person name="Meinnel T."/>
            <person name="Giglione C."/>
        </authorList>
    </citation>
    <scope>ACETYLATION [LARGE SCALE ANALYSIS] AT ALA-2</scope>
    <scope>CLEAVAGE OF INITIATOR METHIONINE [LARGE SCALE ANALYSIS]</scope>
    <scope>IDENTIFICATION BY MASS SPECTROMETRY [LARGE SCALE ANALYSIS]</scope>
</reference>
<reference key="54">
    <citation type="journal article" date="2012" name="Nat. Commun.">
        <title>Lysine methylation of VCP by a member of a novel human protein methyltransferase family.</title>
        <authorList>
            <person name="Kernstock S."/>
            <person name="Davydova E."/>
            <person name="Jakobsson M."/>
            <person name="Moen A."/>
            <person name="Pettersen S."/>
            <person name="Maelandsmo G.M."/>
            <person name="Egge-Jacobsen W."/>
            <person name="Falnes P.O."/>
        </authorList>
    </citation>
    <scope>METHYLATION AT LYS-315</scope>
    <scope>MUTAGENESIS OF LYS-312; ARG-313; GLU-314; LYS-315; THR-316; HIS-317 AND GLY-318</scope>
</reference>
<reference key="55">
    <citation type="journal article" date="2012" name="Nat. Struct. Mol. Biol.">
        <title>DVC1 (C1orf124) recruits the p97 protein segregase to sites of DNA damage.</title>
        <authorList>
            <person name="Davis E.J."/>
            <person name="Lachaud C."/>
            <person name="Appleton P."/>
            <person name="Macartney T.J."/>
            <person name="Nathke I."/>
            <person name="Rouse J."/>
        </authorList>
    </citation>
    <scope>FUNCTION</scope>
    <scope>INTERACTION WITH SPRTN</scope>
</reference>
<reference key="56">
    <citation type="journal article" date="2012" name="Nat. Struct. Mol. Biol.">
        <title>DVC1 (C1orf124) is a DNA damage-targeting p97 adaptor that promotes ubiquitin-dependent responses to replication blocks.</title>
        <authorList>
            <person name="Mosbech A."/>
            <person name="Gibbs-Seymour I."/>
            <person name="Kagias K."/>
            <person name="Thorslund T."/>
            <person name="Beli P."/>
            <person name="Povlsen L."/>
            <person name="Nielsen S.V."/>
            <person name="Smedegaard S."/>
            <person name="Sedgwick G."/>
            <person name="Lukas C."/>
            <person name="Hartmann-Petersen R."/>
            <person name="Lukas J."/>
            <person name="Choudhary C."/>
            <person name="Pocock R."/>
            <person name="Bekker-Jensen S."/>
            <person name="Mailand N."/>
        </authorList>
    </citation>
    <scope>FUNCTION</scope>
    <scope>SUBCELLULAR LOCATION</scope>
    <scope>INTERACTION WITH SPRTN</scope>
</reference>
<reference key="57">
    <citation type="journal article" date="2013" name="J. Biol. Chem.">
        <title>Ubiquitination of the N-terminal region of caveolin-1 regulates endosomal sorting by the VCP/p97 AAA-ATPase.</title>
        <authorList>
            <person name="Kirchner P."/>
            <person name="Bug M."/>
            <person name="Meyer H."/>
        </authorList>
    </citation>
    <scope>FUNCTION</scope>
</reference>
<reference key="58">
    <citation type="journal article" date="2013" name="J. Proteome Res.">
        <title>Toward a comprehensive characterization of a human cancer cell phosphoproteome.</title>
        <authorList>
            <person name="Zhou H."/>
            <person name="Di Palma S."/>
            <person name="Preisinger C."/>
            <person name="Peng M."/>
            <person name="Polat A.N."/>
            <person name="Heck A.J."/>
            <person name="Mohammed S."/>
        </authorList>
    </citation>
    <scope>PHOSPHORYLATION [LARGE SCALE ANALYSIS] AT SER-3; SER-7; SER-13; SER-462 AND SER-702</scope>
    <scope>IDENTIFICATION BY MASS SPECTROMETRY [LARGE SCALE ANALYSIS]</scope>
    <source>
        <tissue>Cervix carcinoma</tissue>
        <tissue>Erythroleukemia</tissue>
    </source>
</reference>
<reference key="59">
    <citation type="journal article" date="2014" name="Biochem. J.">
        <title>Signal-peptide-mediated translocation is regulated by a p97-AIRAPL complex.</title>
        <authorList>
            <person name="Glinka T."/>
            <person name="Alter J."/>
            <person name="Braunstein I."/>
            <person name="Tzach L."/>
            <person name="Wei Sheng C."/>
            <person name="Geifman S."/>
            <person name="Edelmann M.J."/>
            <person name="Kessler B.M."/>
            <person name="Stanhill A."/>
        </authorList>
    </citation>
    <scope>INTERACTION WITH ZFAND2B</scope>
</reference>
<reference key="60">
    <citation type="journal article" date="2014" name="J. Proteomics">
        <title>An enzyme assisted RP-RPLC approach for in-depth analysis of human liver phosphoproteome.</title>
        <authorList>
            <person name="Bian Y."/>
            <person name="Song C."/>
            <person name="Cheng K."/>
            <person name="Dong M."/>
            <person name="Wang F."/>
            <person name="Huang J."/>
            <person name="Sun D."/>
            <person name="Wang L."/>
            <person name="Ye M."/>
            <person name="Zou H."/>
        </authorList>
    </citation>
    <scope>IDENTIFICATION BY MASS SPECTROMETRY [LARGE SCALE ANALYSIS]</scope>
    <source>
        <tissue>Liver</tissue>
    </source>
</reference>
<reference key="61">
    <citation type="journal article" date="2014" name="Mol. Cell">
        <title>Binding of OTULIN to the PUB domain of HOIP controls NF-kappaB signaling.</title>
        <authorList>
            <person name="Schaeffer V."/>
            <person name="Akutsu M."/>
            <person name="Olma M.H."/>
            <person name="Gomes L.C."/>
            <person name="Kawasaki M."/>
            <person name="Dikic I."/>
        </authorList>
    </citation>
    <scope>INTERACTION WITH RNF31</scope>
</reference>
<reference key="62">
    <citation type="journal article" date="2015" name="Biochem. Pharmacol.">
        <title>UBXN2A regulates nicotinic receptor degradation by modulating the E3 ligase activity of CHIP.</title>
        <authorList>
            <person name="Teng Y."/>
            <person name="Rezvani K."/>
            <person name="De Biasi M."/>
        </authorList>
    </citation>
    <scope>FUNCTION</scope>
    <scope>IDENTIFICATION IN A COMPLEX WITH STUB1; UBXN2A AND CHRNA3</scope>
    <scope>INTERACTION WITH UBXN2A</scope>
</reference>
<reference key="63">
    <citation type="journal article" date="2015" name="Cell Rep.">
        <title>Pre-emptive quality control protects the ER from protein overload via the proximity of ERAD components and SRP.</title>
        <authorList>
            <person name="Kadowaki H."/>
            <person name="Nagai A."/>
            <person name="Maruyama T."/>
            <person name="Takami Y."/>
            <person name="Satrimafitrah P."/>
            <person name="Kato H."/>
            <person name="Honda A."/>
            <person name="Hatta T."/>
            <person name="Natsume T."/>
            <person name="Sato T."/>
            <person name="Kai H."/>
            <person name="Ichijo H."/>
            <person name="Nishitoh H."/>
        </authorList>
    </citation>
    <scope>FUNCTION</scope>
</reference>
<reference key="64">
    <citation type="journal article" date="2015" name="EMBO J.">
        <title>A non-canonical role of the p97 complex in RIG-I antiviral signaling.</title>
        <authorList>
            <person name="Hao Q."/>
            <person name="Jiao S."/>
            <person name="Shi Z."/>
            <person name="Li C."/>
            <person name="Meng X."/>
            <person name="Zhang Z."/>
            <person name="Wang Y."/>
            <person name="Song X."/>
            <person name="Wang W."/>
            <person name="Zhang R."/>
            <person name="Zhao Y."/>
            <person name="Wong C.C."/>
            <person name="Zhou Z."/>
        </authorList>
    </citation>
    <scope>FUNCTION</scope>
    <scope>CATALYTIC ACTIVITY</scope>
    <scope>INTERACTION WITH RIGI AND RNF125</scope>
    <scope>MUTAGENESIS OF 52-PHE--ASP-55; TYR-110; GLU-305 AND GLU-578</scope>
</reference>
<reference key="65">
    <citation type="journal article" date="2015" name="Mol. Biol. Cell">
        <title>Proteasomal degradation of preemptive quality control (pQC) substrates is mediated by an AIRAPL-p97 complex.</title>
        <authorList>
            <person name="Braunstein I."/>
            <person name="Zach L."/>
            <person name="Allan S."/>
            <person name="Kalies K.U."/>
            <person name="Stanhill A."/>
        </authorList>
    </citation>
    <scope>INTERACTION WITH ZFAND2B</scope>
</reference>
<reference key="66">
    <citation type="journal article" date="2015" name="Nat. Cell Biol.">
        <title>Systematic proteomics of the VCP-UBXD adaptor network identifies a role for UBXN10 in regulating ciliogenesis.</title>
        <authorList>
            <person name="Raman M."/>
            <person name="Sergeev M."/>
            <person name="Garnaas M."/>
            <person name="Lydeard J.R."/>
            <person name="Huttlin E.L."/>
            <person name="Goessling W."/>
            <person name="Shah J.V."/>
            <person name="Harper J.W."/>
        </authorList>
    </citation>
    <scope>INTERACTION WITH UBXN10</scope>
</reference>
<reference key="67">
    <citation type="journal article" date="2015" name="Proteomics">
        <title>N-terminome analysis of the human mitochondrial proteome.</title>
        <authorList>
            <person name="Vaca Jacome A.S."/>
            <person name="Rabilloud T."/>
            <person name="Schaeffer-Reiss C."/>
            <person name="Rompais M."/>
            <person name="Ayoub D."/>
            <person name="Lane L."/>
            <person name="Bairoch A."/>
            <person name="Van Dorsselaer A."/>
            <person name="Carapito C."/>
        </authorList>
    </citation>
    <scope>ACETYLATION [LARGE SCALE ANALYSIS] AT ALA-2</scope>
    <scope>CLEAVAGE OF INITIATOR METHIONINE [LARGE SCALE ANALYSIS]</scope>
    <scope>IDENTIFICATION BY MASS SPECTROMETRY [LARGE SCALE ANALYSIS]</scope>
</reference>
<reference key="68">
    <citation type="journal article" date="2016" name="Nat. Commun.">
        <title>Chromatin-associated degradation is defined by UBXN-3/FAF1 to safeguard DNA replication fork progression.</title>
        <authorList>
            <person name="Franz A."/>
            <person name="Pirson P.A."/>
            <person name="Pilger D."/>
            <person name="Halder S."/>
            <person name="Achuthankutty D."/>
            <person name="Kashkar H."/>
            <person name="Ramadan K."/>
            <person name="Hoppe T."/>
        </authorList>
    </citation>
    <scope>INTERACTION WITH FAF1</scope>
    <scope>SUBCELLULAR LOCATION</scope>
</reference>
<reference key="69">
    <citation type="journal article" date="2016" name="Nat. Med.">
        <title>Loss of the proteostasis factor AIRAPL causes myeloid transformation by deregulating IGF-1 signaling.</title>
        <authorList>
            <person name="Osorio F.G."/>
            <person name="Soria-Valles C."/>
            <person name="Santiago-Fernandez O."/>
            <person name="Bernal T."/>
            <person name="Mittelbrunn M."/>
            <person name="Colado E."/>
            <person name="Rodriguez F."/>
            <person name="Bonzon-Kulichenko E."/>
            <person name="Vazquez J."/>
            <person name="Porta-de-la-Riva M."/>
            <person name="Ceron J."/>
            <person name="Fueyo A."/>
            <person name="Li J."/>
            <person name="Green A.R."/>
            <person name="Freije J.M."/>
            <person name="Lopez-Otin C."/>
        </authorList>
    </citation>
    <scope>FUNCTION</scope>
</reference>
<reference key="70">
    <citation type="journal article" date="2017" name="J. Biol. Chem.">
        <title>Ankyrin repeat and zinc-finger domain-containing 1 mutations are associated with infantile-onset inflammatory bowel disease.</title>
        <authorList>
            <person name="van Haaften-Visser D.Y."/>
            <person name="Harakalova M."/>
            <person name="Mocholi E."/>
            <person name="van Montfrans J.M."/>
            <person name="Elkadri A."/>
            <person name="Rieter E."/>
            <person name="Fiedler K."/>
            <person name="van Hasselt P.M."/>
            <person name="Triffaux E.M.M."/>
            <person name="van Haelst M.M."/>
            <person name="Nijman I.J."/>
            <person name="Kloosterman W.P."/>
            <person name="Nieuwenhuis E.E.S."/>
            <person name="Muise A.M."/>
            <person name="Cuppen E."/>
            <person name="Houwen R.H.J."/>
            <person name="Coffer P.J."/>
        </authorList>
    </citation>
    <scope>INTERACTION WITH ANKZF1</scope>
</reference>
<reference key="71">
    <citation type="journal article" date="2017" name="Nat. Struct. Mol. Biol.">
        <title>Site-specific mapping of the human SUMO proteome reveals co-modification with phosphorylation.</title>
        <authorList>
            <person name="Hendriks I.A."/>
            <person name="Lyon D."/>
            <person name="Young C."/>
            <person name="Jensen L.J."/>
            <person name="Vertegaal A.C."/>
            <person name="Nielsen M.L."/>
        </authorList>
    </citation>
    <scope>SUMOYLATION [LARGE SCALE ANALYSIS] AT LYS-8 AND LYS-18</scope>
    <scope>IDENTIFICATION BY MASS SPECTROMETRY [LARGE SCALE ANALYSIS]</scope>
</reference>
<reference key="72">
    <citation type="journal article" date="2019" name="J. Biol. Chem.">
        <title>Physiological and pathophysiological characteristics of ataxin-3 isoforms.</title>
        <authorList>
            <person name="Weishaeupl D."/>
            <person name="Schneider J."/>
            <person name="Peixoto Pinheiro B."/>
            <person name="Ruess C."/>
            <person name="Dold S.M."/>
            <person name="von Zweydorf F."/>
            <person name="Gloeckner C.J."/>
            <person name="Schmidt J."/>
            <person name="Riess O."/>
            <person name="Schmidt T."/>
        </authorList>
    </citation>
    <scope>INTERACTION WITH ATXN3</scope>
</reference>
<reference key="73">
    <citation type="journal article" date="2019" name="Science">
        <title>LMBR1L regulates lymphopoiesis through Wnt/beta-catenin signaling.</title>
        <authorList>
            <person name="Choi J.H."/>
            <person name="Zhong X."/>
            <person name="McAlpine W."/>
            <person name="Liao T.C."/>
            <person name="Zhang D."/>
            <person name="Fang B."/>
            <person name="Russell J."/>
            <person name="Ludwig S."/>
            <person name="Nair-Gill E."/>
            <person name="Zhang Z."/>
            <person name="Wang K.W."/>
            <person name="Misawa T."/>
            <person name="Zhan X."/>
            <person name="Choi M."/>
            <person name="Wang T."/>
            <person name="Li X."/>
            <person name="Tang M."/>
            <person name="Sun Q."/>
            <person name="Yu L."/>
            <person name="Murray A.R."/>
            <person name="Moresco E.M.Y."/>
            <person name="Beutler B."/>
        </authorList>
    </citation>
    <scope>INTERACTION WITH LMBR1L</scope>
</reference>
<reference key="74">
    <citation type="journal article" date="2020" name="Nat. Commun.">
        <title>TEX264 coordinates p97- and SPRTN-mediated resolution of topoisomerase 1-DNA adducts.</title>
        <authorList>
            <person name="Fielden J."/>
            <person name="Wiseman K."/>
            <person name="Torrecilla I."/>
            <person name="Li S."/>
            <person name="Hume S."/>
            <person name="Chiang S.C."/>
            <person name="Ruggiano A."/>
            <person name="Narayan Singh A."/>
            <person name="Freire R."/>
            <person name="Hassanieh S."/>
            <person name="Domingo E."/>
            <person name="Vendrell I."/>
            <person name="Fischer R."/>
            <person name="Kessler B.M."/>
            <person name="Maughan T.S."/>
            <person name="El-Khamisy S.F."/>
            <person name="Ramadan K."/>
        </authorList>
    </citation>
    <scope>FUNCTION</scope>
    <scope>INTERACTION WITH TEX264</scope>
</reference>
<reference key="75">
    <citation type="journal article" date="2021" name="Science">
        <title>Ubiquitination of G3BP1 mediates stress granule disassembly in a context-specific manner.</title>
        <authorList>
            <person name="Gwon Y."/>
            <person name="Maxwell B.A."/>
            <person name="Kolaitis R.M."/>
            <person name="Zhang P."/>
            <person name="Kim H.J."/>
            <person name="Taylor J.P."/>
        </authorList>
    </citation>
    <scope>FUNCTION</scope>
</reference>
<reference key="76">
    <citation type="journal article" date="2022" name="Nat. Cell Biol.">
        <title>The ubiquitin-dependent ATPase p97 removes cytotoxic trapped PARP1 from chromatin.</title>
        <authorList>
            <person name="Krastev D.B."/>
            <person name="Li S."/>
            <person name="Sun Y."/>
            <person name="Wicks A.J."/>
            <person name="Hoslett G."/>
            <person name="Weekes D."/>
            <person name="Badder L.M."/>
            <person name="Knight E.G."/>
            <person name="Marlow R."/>
            <person name="Pardo M.C."/>
            <person name="Yu L."/>
            <person name="Talele T.T."/>
            <person name="Bartek J."/>
            <person name="Choudhary J.S."/>
            <person name="Pommier Y."/>
            <person name="Pettitt S.J."/>
            <person name="Tutt A.N.J."/>
            <person name="Ramadan K."/>
            <person name="Lord C.J."/>
        </authorList>
    </citation>
    <scope>FUNCTION</scope>
</reference>
<reference key="77">
    <citation type="journal article" date="2010" name="EMBO J.">
        <title>A novel ATP-dependent conformation in p97 N-D1 fragment revealed by crystal structures of disease-related mutants.</title>
        <authorList>
            <person name="Tang W.K."/>
            <person name="Li D."/>
            <person name="Li C.C."/>
            <person name="Esser L."/>
            <person name="Dai R."/>
            <person name="Guo L."/>
            <person name="Xia D."/>
        </authorList>
    </citation>
    <scope>X-RAY CRYSTALLOGRAPHY (2.2 ANGSTROMS) OF 1-481 IN COMPLEX WITH ATP ANALOG</scope>
    <scope>CHARACTERIZATION OF VARIANTS IBMPFD1 GLY-95 AND HIS-155</scope>
    <scope>MUTAGENESIS OF ARG-53 AND ARG-86</scope>
    <scope>SUBUNIT</scope>
</reference>
<reference key="78">
    <citation type="journal article" date="2010" name="J. Biol. Chem.">
        <title>Structure and function of the PLAA/Ufd3-p97/Cdc48 complex.</title>
        <authorList>
            <person name="Qiu L."/>
            <person name="Pashkova N."/>
            <person name="Walker J.R."/>
            <person name="Winistorfer S."/>
            <person name="Allali-Hassani A."/>
            <person name="Akutsu M."/>
            <person name="Piper R."/>
            <person name="Dhe-Paganon S."/>
        </authorList>
    </citation>
    <scope>X-RAY CRYSTALLOGRAPHY (1.9 ANGSTROMS) OF 797-806 IN COMPLEX WITH PLAA</scope>
</reference>
<reference key="79">
    <citation type="journal article" date="2011" name="J. Biol. Chem.">
        <title>The structural and functional basis of the p97/valosin-containing protein (VCP)-interacting motif (VIM): mutually exclusive binding of cofactors to the N-terminal domain of p97.</title>
        <authorList>
            <person name="Hanzelmann P."/>
            <person name="Schindelin H."/>
        </authorList>
    </citation>
    <scope>X-RAY CRYSTALLOGRAPHY (1.8 ANGSTROMS) OF 1-187 IN COMPLEX WITH AMFR</scope>
</reference>
<reference evidence="83" key="80">
    <citation type="journal article" date="2016" name="FEBS Lett.">
        <title>Structural insights into the interaction of human p97 N-terminal domain and SHP motif in Derlin-1 rhomboid pseudoprotease.</title>
        <authorList>
            <person name="Lim J.J."/>
            <person name="Lee Y."/>
            <person name="Yoon S.Y."/>
            <person name="Ly T.T."/>
            <person name="Kang J.Y."/>
            <person name="Youn H.S."/>
            <person name="An J.Y."/>
            <person name="Lee J.G."/>
            <person name="Park K.R."/>
            <person name="Kim T.G."/>
            <person name="Yang J.K."/>
            <person name="Jun Y."/>
            <person name="Eom S.H."/>
        </authorList>
    </citation>
    <scope>X-RAY CRYSTALLOGRAPHY (2.25 ANGSTROMS) OF 21-199 IN COMPLEX WITH DERL1</scope>
    <scope>INTERACTION WITH DERL1</scope>
    <scope>MUTAGENESIS OF 113-ARG--HIS-115; PHE-131; LEU-140; ASP-179 AND HIS-183</scope>
</reference>
<reference key="81">
    <citation type="journal article" date="2004" name="Nat. Genet.">
        <title>Inclusion body myopathy associated with Paget disease of bone and frontotemporal dementia is caused by mutant valosin-containing protein.</title>
        <authorList>
            <person name="Watts G.D.J."/>
            <person name="Wymer J."/>
            <person name="Kovach M.J."/>
            <person name="Mehta S.G."/>
            <person name="Mumm S."/>
            <person name="Darvish D."/>
            <person name="Pestronk A."/>
            <person name="Whyte M.P."/>
            <person name="Kimonis V.E."/>
        </authorList>
    </citation>
    <scope>VARIANTS IBMPFD1 GLY-95; CYS-155; HIS-155; PRO-155; GLN-191 AND GLU-232</scope>
</reference>
<reference key="82">
    <citation type="journal article" date="2005" name="Ann. Neurol.">
        <title>Mutant valosin-containing protein causes a novel type of frontotemporal dementia.</title>
        <authorList>
            <person name="Schroeder R."/>
            <person name="Watts G.D.J."/>
            <person name="Mehta S.G."/>
            <person name="Evert B.O."/>
            <person name="Broich P."/>
            <person name="Fliessbach K."/>
            <person name="Pauls K."/>
            <person name="Hans V.H."/>
            <person name="Kimonis V."/>
            <person name="Thal D.R."/>
        </authorList>
    </citation>
    <scope>VARIANT IBMPFD1 CYS-155</scope>
</reference>
<reference key="83">
    <citation type="journal article" date="2005" name="Neurology">
        <title>Inclusion body myopathy and Paget disease is linked to a novel mutation in the VCP gene.</title>
        <authorList>
            <person name="Haubenberger D."/>
            <person name="Bittner R.E."/>
            <person name="Rauch-Shorny S."/>
            <person name="Zimprich F."/>
            <person name="Mannhalter C."/>
            <person name="Wagner L."/>
            <person name="Mineva I."/>
            <person name="Vass K."/>
            <person name="Auff E."/>
            <person name="Zimprich A."/>
        </authorList>
    </citation>
    <scope>VARIANT IBMPFD1 HIS-159</scope>
</reference>
<reference key="84">
    <citation type="journal article" date="2006" name="Hum. Mol. Genet.">
        <title>Inclusion body myopathy-associated mutations in p97/VCP impair endoplasmic reticulum-associated degradation.</title>
        <authorList>
            <person name="Weihl C.C."/>
            <person name="Dalal S."/>
            <person name="Pestronk A."/>
            <person name="Hanson P.I."/>
        </authorList>
    </citation>
    <scope>CHARACTERIZATION OF VARIANTS IBMPFD1 GLY-95 AND HIS-155</scope>
</reference>
<reference key="85">
    <citation type="journal article" date="2007" name="Clin. Genet.">
        <title>Novel VCP mutations in inclusion body myopathy associated with Paget disease of bone and frontotemporal dementia.</title>
        <authorList>
            <person name="Watts G.D."/>
            <person name="Thomasova D."/>
            <person name="Ramdeen S.K."/>
            <person name="Fulchiero E.C."/>
            <person name="Mehta S.G."/>
            <person name="Drachman D.A."/>
            <person name="Weihl C.C."/>
            <person name="Jamrozik Z."/>
            <person name="Kwiecinski H."/>
            <person name="Kaminska A."/>
            <person name="Kimonis V.E."/>
        </authorList>
    </citation>
    <scope>VARIANTS IBMPFD1 TRP-198 AND HIS-387</scope>
</reference>
<reference key="86">
    <citation type="journal article" date="2010" name="Autophagy">
        <title>VCP/p97 is essential for maturation of ubiquitin-containing autophagosomes and this function is impaired by mutations that cause IBMPFD.</title>
        <authorList>
            <person name="Tresse E."/>
            <person name="Salomons F.A."/>
            <person name="Vesa J."/>
            <person name="Bott L.C."/>
            <person name="Kimonis V."/>
            <person name="Yao T.P."/>
            <person name="Dantuma N.P."/>
            <person name="Taylor J.P."/>
        </authorList>
    </citation>
    <scope>CHARACTERIZATION OF VARIANTS IBMPFD1 HIS-155; SER-155 AND GLU-232</scope>
    <scope>MUTAGENESIS OF GLU-305 AND GLU-578</scope>
    <scope>FUNCTION</scope>
</reference>
<reference key="87">
    <citation type="journal article" date="2018" name="Mol. Cell">
        <title>ZFAND1 recruits p97 and the 26S proteasome to promote the clearance of arsenite-induced stress granules.</title>
        <authorList>
            <person name="Turakhiya A."/>
            <person name="Meyer S.R."/>
            <person name="Marincola G."/>
            <person name="Boehm S."/>
            <person name="Vanselow J.T."/>
            <person name="Schlosser A."/>
            <person name="Hofmann K."/>
            <person name="Buchberger A."/>
        </authorList>
    </citation>
    <scope>FUNCTION</scope>
    <scope>INTERACTION WITH ZFAND1</scope>
    <scope>MUTAGENESIS OF GLU-578</scope>
    <scope>CHARACTERIZATION OF VARIANT IBMPFD1 HIS-155</scope>
</reference>
<reference key="88">
    <citation type="journal article" date="2023" name="EMBO J.">
        <title>A mitochondrial SCF-FBXL4 ubiquitin E3 ligase complex degrades BNIP3 and NIX to restrain mitophagy and prevent mitochondrial disease.</title>
        <authorList>
            <person name="Cao Y."/>
            <person name="Zheng J."/>
            <person name="Wan H."/>
            <person name="Sun Y."/>
            <person name="Fu S."/>
            <person name="Liu S."/>
            <person name="He B."/>
            <person name="Cai G."/>
            <person name="Cao Y."/>
            <person name="Huang H."/>
            <person name="Li Q."/>
            <person name="Ma Y."/>
            <person name="Chen S."/>
            <person name="Wang F."/>
            <person name="Jiang H."/>
        </authorList>
    </citation>
    <scope>INTERACTION WITH FBXL4</scope>
</reference>
<reference key="89">
    <citation type="journal article" date="2010" name="Neuromuscul. Disord.">
        <title>Two Australian families with inclusion-body myopathy, Paget's disease of bone and frontotemporal dementia: novel clinical and genetic findings.</title>
        <authorList>
            <person name="Kumar K.R."/>
            <person name="Needham M."/>
            <person name="Mina K."/>
            <person name="Davis M."/>
            <person name="Brewer J."/>
            <person name="Staples C."/>
            <person name="Ng K."/>
            <person name="Sue C.M."/>
            <person name="Mastaglia F.L."/>
        </authorList>
    </citation>
    <scope>VARIANTS IBMPFD1 LEU-155 AND TRP-198</scope>
</reference>
<reference key="90">
    <citation type="journal article" date="2010" name="Neuron">
        <title>Exome sequencing reveals VCP mutations as a cause of familial ALS.</title>
        <authorList>
            <person name="Johnson J.O."/>
            <person name="Mandrioli J."/>
            <person name="Benatar M."/>
            <person name="Abramzon Y."/>
            <person name="Van Deerlin V.M."/>
            <person name="Trojanowski J.Q."/>
            <person name="Gibbs J.R."/>
            <person name="Brunetti M."/>
            <person name="Gronka S."/>
            <person name="Wuu J."/>
            <person name="Ding J."/>
            <person name="McCluskey L."/>
            <person name="Martinez-Lage M."/>
            <person name="Falcone D."/>
            <person name="Hernandez D.G."/>
            <person name="Arepalli S."/>
            <person name="Chong S."/>
            <person name="Schymick J.C."/>
            <person name="Rothstein J."/>
            <person name="Landi F."/>
            <person name="Wang Y.D."/>
            <person name="Calvo A."/>
            <person name="Mora G."/>
            <person name="Sabatelli M."/>
            <person name="Monsurro M.R."/>
            <person name="Battistini S."/>
            <person name="Salvi F."/>
            <person name="Spataro R."/>
            <person name="Sola P."/>
            <person name="Borghero G."/>
            <person name="Galassi G."/>
            <person name="Scholz S.W."/>
            <person name="Taylor J.P."/>
            <person name="Restagno G."/>
            <person name="Chio A."/>
            <person name="Traynor B.J."/>
        </authorList>
    </citation>
    <scope>VARIANTS FTDALS6 HIS-155; GLY-159; GLN-191 AND ASN-592</scope>
</reference>
<reference key="91">
    <citation type="journal article" date="2014" name="Brain">
        <title>A novel mutation in VCP causes Charcot-Marie-Tooth Type 2 disease.</title>
        <authorList>
            <person name="Gonzalez M.A."/>
            <person name="Feely S.M."/>
            <person name="Speziani F."/>
            <person name="Strickland A.V."/>
            <person name="Danzi M."/>
            <person name="Bacon C."/>
            <person name="Lee Y."/>
            <person name="Chou T.F."/>
            <person name="Blanton S.H."/>
            <person name="Weihl C.C."/>
            <person name="Zuchner S."/>
            <person name="Shy M.E."/>
        </authorList>
    </citation>
    <scope>VARIANT CMT2Y LYS-185</scope>
    <scope>CHARACTERIZATION OF VARIANT CMT2Y LYS-185</scope>
    <scope>CHARACTERIZATION OF VARIANTS IBMPFD1 HIS-155 AND GLU-232</scope>
</reference>
<reference key="92">
    <citation type="journal article" date="2015" name="Case Rep. Genet.">
        <title>Rare Manifestation of a c.290 C&gt;T, p.Gly97Glu VCP Mutation.</title>
        <authorList>
            <person name="Jerath N.U."/>
            <person name="Crockett C.D."/>
            <person name="Moore S.A."/>
            <person name="Shy M.E."/>
            <person name="Weihl C.C."/>
            <person name="Chou T.F."/>
            <person name="Grider T."/>
            <person name="Gonzalez M.A."/>
            <person name="Zuchner S."/>
            <person name="Swenson A."/>
        </authorList>
    </citation>
    <scope>VARIANT CMT2Y GLU-97</scope>
    <scope>CHARACTERIZATION OF VARIANT CMT2Y GLU-97</scope>
    <scope>CHARACTERIZATION OF VARIANTS IBMPFD1 HIS-155; TRP-198 AND GLU-232</scope>
</reference>
<reference key="93">
    <citation type="journal article" date="2016" name="Neuromuscul. Disord.">
        <title>Nuclear inclusions mimicking poly(A)-binding protein nuclear 1 inclusions in a case of inclusion body myopathy associated with Paget disease of bone and frontotemporal dementia with a novel mutation in the valosin-containing protein gene.</title>
        <authorList>
            <person name="Matsubara S."/>
            <person name="Shimizu T."/>
            <person name="Komori T."/>
            <person name="Mori-Yoshimura M."/>
            <person name="Minami N."/>
            <person name="Hayashi Y.K."/>
        </authorList>
    </citation>
    <scope>VARIANT IBMPFD1 PHE-126</scope>
</reference>
<reference key="94">
    <citation type="journal article" date="2017" name="EMBO J.">
        <title>VCP/p97 cooperates with YOD1, UBXD1 and PLAA to drive clearance of ruptured lysosomes by autophagy.</title>
        <authorList>
            <person name="Papadopoulos C."/>
            <person name="Kirchner P."/>
            <person name="Bug M."/>
            <person name="Grum D."/>
            <person name="Koerver L."/>
            <person name="Schulze N."/>
            <person name="Poehler R."/>
            <person name="Dressler A."/>
            <person name="Fengler S."/>
            <person name="Arhzaouy K."/>
            <person name="Lux V."/>
            <person name="Ehrmann M."/>
            <person name="Weihl C.C."/>
            <person name="Meyer H."/>
        </authorList>
    </citation>
    <scope>FUNCTION</scope>
    <scope>INTERACTION WITH PLAA; UBXN6 AND YOD1</scope>
    <scope>SUBCELLULAR LOCATION</scope>
    <scope>CHARACTERIZATION OF VARIANTS IBMPFD1 HIS-155; TRP-198 AND GLU-232</scope>
    <scope>MUTAGENESIS OF GLU-578</scope>
</reference>
<reference key="95">
    <citation type="journal article" date="2023" name="Genes (Basel)">
        <title>Novel Variants in the VCP Gene Causing Multisystem Proteinopathy 1.</title>
        <authorList>
            <person name="Columbres R.C.A."/>
            <person name="Chin Y."/>
            <person name="Pratti S."/>
            <person name="Quinn C."/>
            <person name="Gonzalez-Cuyar L.F."/>
            <person name="Weiss M."/>
            <person name="Quintero-Rivera F."/>
            <person name="Kimonis V."/>
        </authorList>
    </citation>
    <scope>VARIANTS IBMPFD1 THR-160; PHE-254 AND THR-369</scope>
</reference>
<evidence type="ECO:0000250" key="1">
    <source>
        <dbReference type="UniProtKB" id="P23787"/>
    </source>
</evidence>
<evidence type="ECO:0000250" key="2">
    <source>
        <dbReference type="UniProtKB" id="P46462"/>
    </source>
</evidence>
<evidence type="ECO:0000250" key="3">
    <source>
        <dbReference type="UniProtKB" id="Q01853"/>
    </source>
</evidence>
<evidence type="ECO:0000256" key="4">
    <source>
        <dbReference type="SAM" id="MobiDB-lite"/>
    </source>
</evidence>
<evidence type="ECO:0000269" key="5">
    <source>
    </source>
</evidence>
<evidence type="ECO:0000269" key="6">
    <source>
    </source>
</evidence>
<evidence type="ECO:0000269" key="7">
    <source>
    </source>
</evidence>
<evidence type="ECO:0000269" key="8">
    <source>
    </source>
</evidence>
<evidence type="ECO:0000269" key="9">
    <source>
    </source>
</evidence>
<evidence type="ECO:0000269" key="10">
    <source>
    </source>
</evidence>
<evidence type="ECO:0000269" key="11">
    <source>
    </source>
</evidence>
<evidence type="ECO:0000269" key="12">
    <source>
    </source>
</evidence>
<evidence type="ECO:0000269" key="13">
    <source>
    </source>
</evidence>
<evidence type="ECO:0000269" key="14">
    <source>
    </source>
</evidence>
<evidence type="ECO:0000269" key="15">
    <source>
    </source>
</evidence>
<evidence type="ECO:0000269" key="16">
    <source>
    </source>
</evidence>
<evidence type="ECO:0000269" key="17">
    <source>
    </source>
</evidence>
<evidence type="ECO:0000269" key="18">
    <source>
    </source>
</evidence>
<evidence type="ECO:0000269" key="19">
    <source>
    </source>
</evidence>
<evidence type="ECO:0000269" key="20">
    <source>
    </source>
</evidence>
<evidence type="ECO:0000269" key="21">
    <source>
    </source>
</evidence>
<evidence type="ECO:0000269" key="22">
    <source>
    </source>
</evidence>
<evidence type="ECO:0000269" key="23">
    <source>
    </source>
</evidence>
<evidence type="ECO:0000269" key="24">
    <source>
    </source>
</evidence>
<evidence type="ECO:0000269" key="25">
    <source>
    </source>
</evidence>
<evidence type="ECO:0000269" key="26">
    <source>
    </source>
</evidence>
<evidence type="ECO:0000269" key="27">
    <source>
    </source>
</evidence>
<evidence type="ECO:0000269" key="28">
    <source>
    </source>
</evidence>
<evidence type="ECO:0000269" key="29">
    <source>
    </source>
</evidence>
<evidence type="ECO:0000269" key="30">
    <source>
    </source>
</evidence>
<evidence type="ECO:0000269" key="31">
    <source>
    </source>
</evidence>
<evidence type="ECO:0000269" key="32">
    <source>
    </source>
</evidence>
<evidence type="ECO:0000269" key="33">
    <source>
    </source>
</evidence>
<evidence type="ECO:0000269" key="34">
    <source>
    </source>
</evidence>
<evidence type="ECO:0000269" key="35">
    <source>
    </source>
</evidence>
<evidence type="ECO:0000269" key="36">
    <source>
    </source>
</evidence>
<evidence type="ECO:0000269" key="37">
    <source>
    </source>
</evidence>
<evidence type="ECO:0000269" key="38">
    <source>
    </source>
</evidence>
<evidence type="ECO:0000269" key="39">
    <source>
    </source>
</evidence>
<evidence type="ECO:0000269" key="40">
    <source>
    </source>
</evidence>
<evidence type="ECO:0000269" key="41">
    <source>
    </source>
</evidence>
<evidence type="ECO:0000269" key="42">
    <source>
    </source>
</evidence>
<evidence type="ECO:0000269" key="43">
    <source>
    </source>
</evidence>
<evidence type="ECO:0000269" key="44">
    <source>
    </source>
</evidence>
<evidence type="ECO:0000269" key="45">
    <source>
    </source>
</evidence>
<evidence type="ECO:0000269" key="46">
    <source>
    </source>
</evidence>
<evidence type="ECO:0000269" key="47">
    <source>
    </source>
</evidence>
<evidence type="ECO:0000269" key="48">
    <source>
    </source>
</evidence>
<evidence type="ECO:0000269" key="49">
    <source>
    </source>
</evidence>
<evidence type="ECO:0000269" key="50">
    <source>
    </source>
</evidence>
<evidence type="ECO:0000269" key="51">
    <source>
    </source>
</evidence>
<evidence type="ECO:0000269" key="52">
    <source>
    </source>
</evidence>
<evidence type="ECO:0000269" key="53">
    <source>
    </source>
</evidence>
<evidence type="ECO:0000269" key="54">
    <source>
    </source>
</evidence>
<evidence type="ECO:0000269" key="55">
    <source>
    </source>
</evidence>
<evidence type="ECO:0000269" key="56">
    <source>
    </source>
</evidence>
<evidence type="ECO:0000269" key="57">
    <source>
    </source>
</evidence>
<evidence type="ECO:0000269" key="58">
    <source>
    </source>
</evidence>
<evidence type="ECO:0000269" key="59">
    <source>
    </source>
</evidence>
<evidence type="ECO:0000269" key="60">
    <source>
    </source>
</evidence>
<evidence type="ECO:0000269" key="61">
    <source>
    </source>
</evidence>
<evidence type="ECO:0000269" key="62">
    <source>
    </source>
</evidence>
<evidence type="ECO:0000269" key="63">
    <source>
    </source>
</evidence>
<evidence type="ECO:0000269" key="64">
    <source>
    </source>
</evidence>
<evidence type="ECO:0000269" key="65">
    <source>
    </source>
</evidence>
<evidence type="ECO:0000269" key="66">
    <source>
    </source>
</evidence>
<evidence type="ECO:0000269" key="67">
    <source>
    </source>
</evidence>
<evidence type="ECO:0000269" key="68">
    <source>
    </source>
</evidence>
<evidence type="ECO:0000269" key="69">
    <source>
    </source>
</evidence>
<evidence type="ECO:0000269" key="70">
    <source>
    </source>
</evidence>
<evidence type="ECO:0000269" key="71">
    <source>
    </source>
</evidence>
<evidence type="ECO:0000269" key="72">
    <source>
    </source>
</evidence>
<evidence type="ECO:0000269" key="73">
    <source>
    </source>
</evidence>
<evidence type="ECO:0000269" key="74">
    <source>
    </source>
</evidence>
<evidence type="ECO:0000269" key="75">
    <source>
    </source>
</evidence>
<evidence type="ECO:0000269" key="76">
    <source ref="9"/>
</evidence>
<evidence type="ECO:0000305" key="77"/>
<evidence type="ECO:0000305" key="78">
    <source>
    </source>
</evidence>
<evidence type="ECO:0000305" key="79">
    <source>
    </source>
</evidence>
<evidence type="ECO:0000305" key="80">
    <source>
    </source>
</evidence>
<evidence type="ECO:0000312" key="81">
    <source>
        <dbReference type="EMBL" id="ACI46036.1"/>
    </source>
</evidence>
<evidence type="ECO:0000312" key="82">
    <source>
        <dbReference type="EMBL" id="ACI46044.1"/>
    </source>
</evidence>
<evidence type="ECO:0007744" key="83">
    <source>
        <dbReference type="PDB" id="5GLF"/>
    </source>
</evidence>
<evidence type="ECO:0007744" key="84">
    <source>
    </source>
</evidence>
<evidence type="ECO:0007744" key="85">
    <source>
    </source>
</evidence>
<evidence type="ECO:0007744" key="86">
    <source>
    </source>
</evidence>
<evidence type="ECO:0007744" key="87">
    <source>
    </source>
</evidence>
<evidence type="ECO:0007744" key="88">
    <source>
    </source>
</evidence>
<evidence type="ECO:0007744" key="89">
    <source>
    </source>
</evidence>
<evidence type="ECO:0007744" key="90">
    <source>
    </source>
</evidence>
<evidence type="ECO:0007744" key="91">
    <source>
    </source>
</evidence>
<evidence type="ECO:0007744" key="92">
    <source>
    </source>
</evidence>
<evidence type="ECO:0007829" key="93">
    <source>
        <dbReference type="PDB" id="3HU1"/>
    </source>
</evidence>
<evidence type="ECO:0007829" key="94">
    <source>
        <dbReference type="PDB" id="3QQ8"/>
    </source>
</evidence>
<evidence type="ECO:0007829" key="95">
    <source>
        <dbReference type="PDB" id="4KDI"/>
    </source>
</evidence>
<evidence type="ECO:0007829" key="96">
    <source>
        <dbReference type="PDB" id="4KLN"/>
    </source>
</evidence>
<evidence type="ECO:0007829" key="97">
    <source>
        <dbReference type="PDB" id="4KO8"/>
    </source>
</evidence>
<evidence type="ECO:0007829" key="98">
    <source>
        <dbReference type="PDB" id="5B6C"/>
    </source>
</evidence>
<evidence type="ECO:0007829" key="99">
    <source>
        <dbReference type="PDB" id="5DYG"/>
    </source>
</evidence>
<evidence type="ECO:0007829" key="100">
    <source>
        <dbReference type="PDB" id="5FTJ"/>
    </source>
</evidence>
<evidence type="ECO:0007829" key="101">
    <source>
        <dbReference type="PDB" id="5FTK"/>
    </source>
</evidence>
<evidence type="ECO:0007829" key="102">
    <source>
        <dbReference type="PDB" id="5FTN"/>
    </source>
</evidence>
<evidence type="ECO:0007829" key="103">
    <source>
        <dbReference type="PDB" id="5IFS"/>
    </source>
</evidence>
<evidence type="ECO:0007829" key="104">
    <source>
        <dbReference type="PDB" id="5IFW"/>
    </source>
</evidence>
<evidence type="ECO:0007829" key="105">
    <source>
        <dbReference type="PDB" id="6G2V"/>
    </source>
</evidence>
<evidence type="ECO:0007829" key="106">
    <source>
        <dbReference type="PDB" id="7BPA"/>
    </source>
</evidence>
<evidence type="ECO:0007829" key="107">
    <source>
        <dbReference type="PDB" id="7JY5"/>
    </source>
</evidence>
<evidence type="ECO:0007829" key="108">
    <source>
        <dbReference type="PDB" id="7LMY"/>
    </source>
</evidence>
<evidence type="ECO:0007829" key="109">
    <source>
        <dbReference type="PDB" id="7LN0"/>
    </source>
</evidence>
<evidence type="ECO:0007829" key="110">
    <source>
        <dbReference type="PDB" id="7PUX"/>
    </source>
</evidence>
<evidence type="ECO:0007829" key="111">
    <source>
        <dbReference type="PDB" id="7RLI"/>
    </source>
</evidence>
<evidence type="ECO:0007829" key="112">
    <source>
        <dbReference type="PDB" id="7VCU"/>
    </source>
</evidence>
<evidence type="ECO:0007829" key="113">
    <source>
        <dbReference type="PDB" id="8HRZ"/>
    </source>
</evidence>
<evidence type="ECO:0007829" key="114">
    <source>
        <dbReference type="PDB" id="8OOI"/>
    </source>
</evidence>
<evidence type="ECO:0007829" key="115">
    <source>
        <dbReference type="PDB" id="8PQX"/>
    </source>
</evidence>
<evidence type="ECO:0007829" key="116">
    <source>
        <dbReference type="PDB" id="8R0E"/>
    </source>
</evidence>
<evidence type="ECO:0007829" key="117">
    <source>
        <dbReference type="PDB" id="8UV2"/>
    </source>
</evidence>
<organism>
    <name type="scientific">Homo sapiens</name>
    <name type="common">Human</name>
    <dbReference type="NCBI Taxonomy" id="9606"/>
    <lineage>
        <taxon>Eukaryota</taxon>
        <taxon>Metazoa</taxon>
        <taxon>Chordata</taxon>
        <taxon>Craniata</taxon>
        <taxon>Vertebrata</taxon>
        <taxon>Euteleostomi</taxon>
        <taxon>Mammalia</taxon>
        <taxon>Eutheria</taxon>
        <taxon>Euarchontoglires</taxon>
        <taxon>Primates</taxon>
        <taxon>Haplorrhini</taxon>
        <taxon>Catarrhini</taxon>
        <taxon>Hominidae</taxon>
        <taxon>Homo</taxon>
    </lineage>
</organism>
<dbReference type="EC" id="3.6.4.6" evidence="60"/>
<dbReference type="EMBL" id="AC004472">
    <property type="protein sequence ID" value="AAC07984.1"/>
    <property type="molecule type" value="Genomic_DNA"/>
</dbReference>
<dbReference type="EMBL" id="FJ224344">
    <property type="protein sequence ID" value="ACI46036.1"/>
    <property type="molecule type" value="mRNA"/>
</dbReference>
<dbReference type="EMBL" id="FJ224352">
    <property type="protein sequence ID" value="ACI46044.1"/>
    <property type="molecule type" value="mRNA"/>
</dbReference>
<dbReference type="EMBL" id="AF100752">
    <property type="protein sequence ID" value="AAD43016.1"/>
    <property type="molecule type" value="mRNA"/>
</dbReference>
<dbReference type="EMBL" id="AK312310">
    <property type="protein sequence ID" value="BAG35235.1"/>
    <property type="molecule type" value="mRNA"/>
</dbReference>
<dbReference type="EMBL" id="AL353795">
    <property type="status" value="NOT_ANNOTATED_CDS"/>
    <property type="molecule type" value="Genomic_DNA"/>
</dbReference>
<dbReference type="EMBL" id="CH471071">
    <property type="protein sequence ID" value="EAW58404.1"/>
    <property type="molecule type" value="Genomic_DNA"/>
</dbReference>
<dbReference type="EMBL" id="BC110913">
    <property type="protein sequence ID" value="AAI10914.1"/>
    <property type="molecule type" value="mRNA"/>
</dbReference>
<dbReference type="EMBL" id="BC121794">
    <property type="protein sequence ID" value="AAI21795.1"/>
    <property type="molecule type" value="mRNA"/>
</dbReference>
<dbReference type="EMBL" id="Z70768">
    <property type="protein sequence ID" value="CAA94809.1"/>
    <property type="molecule type" value="mRNA"/>
</dbReference>
<dbReference type="CCDS" id="CCDS6573.1"/>
<dbReference type="PIR" id="T02243">
    <property type="entry name" value="T02243"/>
</dbReference>
<dbReference type="RefSeq" id="NP_009057.1">
    <property type="nucleotide sequence ID" value="NM_007126.5"/>
</dbReference>
<dbReference type="PDB" id="3EBB">
    <property type="method" value="X-ray"/>
    <property type="resolution" value="1.90 A"/>
    <property type="chains" value="E/F/G/H=797-806"/>
</dbReference>
<dbReference type="PDB" id="3HU1">
    <property type="method" value="X-ray"/>
    <property type="resolution" value="2.81 A"/>
    <property type="chains" value="A/B/C/D/E/F=1-481"/>
</dbReference>
<dbReference type="PDB" id="3HU2">
    <property type="method" value="X-ray"/>
    <property type="resolution" value="2.85 A"/>
    <property type="chains" value="A/B/C/D/E/F=1-481"/>
</dbReference>
<dbReference type="PDB" id="3HU3">
    <property type="method" value="X-ray"/>
    <property type="resolution" value="2.20 A"/>
    <property type="chains" value="A/B=1-481"/>
</dbReference>
<dbReference type="PDB" id="3QC8">
    <property type="method" value="X-ray"/>
    <property type="resolution" value="2.20 A"/>
    <property type="chains" value="A=21-196"/>
</dbReference>
<dbReference type="PDB" id="3QQ7">
    <property type="method" value="X-ray"/>
    <property type="resolution" value="2.65 A"/>
    <property type="chains" value="A=2-187"/>
</dbReference>
<dbReference type="PDB" id="3QQ8">
    <property type="method" value="X-ray"/>
    <property type="resolution" value="2.00 A"/>
    <property type="chains" value="A=2-187"/>
</dbReference>
<dbReference type="PDB" id="3QWZ">
    <property type="method" value="X-ray"/>
    <property type="resolution" value="2.00 A"/>
    <property type="chains" value="A=1-208"/>
</dbReference>
<dbReference type="PDB" id="3TIW">
    <property type="method" value="X-ray"/>
    <property type="resolution" value="1.80 A"/>
    <property type="chains" value="A/B=1-187"/>
</dbReference>
<dbReference type="PDB" id="4KDI">
    <property type="method" value="X-ray"/>
    <property type="resolution" value="1.86 A"/>
    <property type="chains" value="A/B=21-196"/>
</dbReference>
<dbReference type="PDB" id="4KDL">
    <property type="method" value="X-ray"/>
    <property type="resolution" value="1.81 A"/>
    <property type="chains" value="A=21-196"/>
</dbReference>
<dbReference type="PDB" id="4KLN">
    <property type="method" value="X-ray"/>
    <property type="resolution" value="2.62 A"/>
    <property type="chains" value="A/B/C/D/E/F=1-481"/>
</dbReference>
<dbReference type="PDB" id="4KO8">
    <property type="method" value="X-ray"/>
    <property type="resolution" value="1.98 A"/>
    <property type="chains" value="A/B=1-481"/>
</dbReference>
<dbReference type="PDB" id="4KOD">
    <property type="method" value="X-ray"/>
    <property type="resolution" value="2.96 A"/>
    <property type="chains" value="A/B/C/D/E/F/G/H/I/J/K/L=1-481"/>
</dbReference>
<dbReference type="PDB" id="4P0A">
    <property type="method" value="X-ray"/>
    <property type="resolution" value="2.30 A"/>
    <property type="chains" value="B/D=797-806"/>
</dbReference>
<dbReference type="PDB" id="5B6C">
    <property type="method" value="X-ray"/>
    <property type="resolution" value="1.55 A"/>
    <property type="chains" value="A=21-191"/>
</dbReference>
<dbReference type="PDB" id="5C18">
    <property type="method" value="X-ray"/>
    <property type="resolution" value="3.30 A"/>
    <property type="chains" value="A/B/C/D/E/F=2-806"/>
</dbReference>
<dbReference type="PDB" id="5C19">
    <property type="method" value="X-ray"/>
    <property type="resolution" value="4.20 A"/>
    <property type="chains" value="A/B/C/D/E/F=2-806"/>
</dbReference>
<dbReference type="PDB" id="5C1A">
    <property type="method" value="X-ray"/>
    <property type="resolution" value="3.80 A"/>
    <property type="chains" value="A/B/C/D/E/F/G/H/I/J/K/L=2-806"/>
</dbReference>
<dbReference type="PDB" id="5C1B">
    <property type="method" value="X-ray"/>
    <property type="resolution" value="3.08 A"/>
    <property type="chains" value="A/B/C/D/E/F=2-806"/>
</dbReference>
<dbReference type="PDB" id="5DYG">
    <property type="method" value="X-ray"/>
    <property type="resolution" value="2.20 A"/>
    <property type="chains" value="A=1-460"/>
</dbReference>
<dbReference type="PDB" id="5DYI">
    <property type="method" value="X-ray"/>
    <property type="resolution" value="3.71 A"/>
    <property type="chains" value="A/B/C/D/E/F/G/H/I/J/K/L=1-481"/>
</dbReference>
<dbReference type="PDB" id="5EPP">
    <property type="method" value="X-ray"/>
    <property type="resolution" value="1.88 A"/>
    <property type="chains" value="A=21-199"/>
</dbReference>
<dbReference type="PDB" id="5FTJ">
    <property type="method" value="EM"/>
    <property type="resolution" value="2.30 A"/>
    <property type="chains" value="A/B/C/D/E/F=1-806"/>
</dbReference>
<dbReference type="PDB" id="5FTK">
    <property type="method" value="EM"/>
    <property type="resolution" value="2.40 A"/>
    <property type="chains" value="A/B/C/D/E/F=1-806"/>
</dbReference>
<dbReference type="PDB" id="5FTL">
    <property type="method" value="EM"/>
    <property type="resolution" value="3.30 A"/>
    <property type="chains" value="A/B/C/D/E/F=1-806"/>
</dbReference>
<dbReference type="PDB" id="5FTM">
    <property type="method" value="EM"/>
    <property type="resolution" value="3.20 A"/>
    <property type="chains" value="A/B/C/D/E/F=1-806"/>
</dbReference>
<dbReference type="PDB" id="5FTN">
    <property type="method" value="EM"/>
    <property type="resolution" value="3.30 A"/>
    <property type="chains" value="A/B/C/D/E/F=1-806"/>
</dbReference>
<dbReference type="PDB" id="5GLF">
    <property type="method" value="X-ray"/>
    <property type="resolution" value="2.25 A"/>
    <property type="chains" value="A/C/E/G=21-199"/>
</dbReference>
<dbReference type="PDB" id="5IFS">
    <property type="method" value="X-ray"/>
    <property type="resolution" value="2.46 A"/>
    <property type="chains" value="B/D=1-481"/>
</dbReference>
<dbReference type="PDB" id="5IFW">
    <property type="method" value="X-ray"/>
    <property type="resolution" value="3.40 A"/>
    <property type="chains" value="B=2-806"/>
</dbReference>
<dbReference type="PDB" id="5KIW">
    <property type="method" value="X-ray"/>
    <property type="resolution" value="3.41 A"/>
    <property type="chains" value="A/B=1-460"/>
</dbReference>
<dbReference type="PDB" id="5KIY">
    <property type="method" value="X-ray"/>
    <property type="resolution" value="2.79 A"/>
    <property type="chains" value="A=1-460"/>
</dbReference>
<dbReference type="PDB" id="5X4L">
    <property type="method" value="X-ray"/>
    <property type="resolution" value="2.40 A"/>
    <property type="chains" value="A/B=23-196"/>
</dbReference>
<dbReference type="PDB" id="6G2V">
    <property type="method" value="X-ray"/>
    <property type="resolution" value="1.90 A"/>
    <property type="chains" value="A=462-764"/>
</dbReference>
<dbReference type="PDB" id="6G2W">
    <property type="method" value="X-ray"/>
    <property type="resolution" value="2.68 A"/>
    <property type="chains" value="A=462-764"/>
</dbReference>
<dbReference type="PDB" id="6G2X">
    <property type="method" value="X-ray"/>
    <property type="resolution" value="2.08 A"/>
    <property type="chains" value="A=462-764"/>
</dbReference>
<dbReference type="PDB" id="6G2Y">
    <property type="method" value="X-ray"/>
    <property type="resolution" value="2.15 A"/>
    <property type="chains" value="A=462-764"/>
</dbReference>
<dbReference type="PDB" id="6G2Z">
    <property type="method" value="X-ray"/>
    <property type="resolution" value="1.92 A"/>
    <property type="chains" value="A=462-764"/>
</dbReference>
<dbReference type="PDB" id="6G30">
    <property type="method" value="X-ray"/>
    <property type="resolution" value="2.42 A"/>
    <property type="chains" value="A=462-764"/>
</dbReference>
<dbReference type="PDB" id="6HD0">
    <property type="method" value="X-ray"/>
    <property type="resolution" value="3.73 A"/>
    <property type="chains" value="A/B/C/T/U/V=1-481"/>
</dbReference>
<dbReference type="PDB" id="6MCK">
    <property type="method" value="X-ray"/>
    <property type="resolution" value="3.77 A"/>
    <property type="chains" value="A/B/C/D/E/F/G/H/I/J/K/L=210-806"/>
</dbReference>
<dbReference type="PDB" id="7BP8">
    <property type="method" value="EM"/>
    <property type="resolution" value="3.90 A"/>
    <property type="chains" value="A/B/C/D/E/F=1-806"/>
</dbReference>
<dbReference type="PDB" id="7BP9">
    <property type="method" value="EM"/>
    <property type="resolution" value="3.60 A"/>
    <property type="chains" value="A/B/C/D/E/F=1-806"/>
</dbReference>
<dbReference type="PDB" id="7BPA">
    <property type="method" value="EM"/>
    <property type="resolution" value="3.30 A"/>
    <property type="chains" value="A/B/C/D/E/F=1-806"/>
</dbReference>
<dbReference type="PDB" id="7BPB">
    <property type="method" value="EM"/>
    <property type="resolution" value="4.30 A"/>
    <property type="chains" value="A/B/C/D/E/F=1-806"/>
</dbReference>
<dbReference type="PDB" id="7JY5">
    <property type="method" value="EM"/>
    <property type="resolution" value="2.89 A"/>
    <property type="chains" value="A/B/C/D/E/F=1-806"/>
</dbReference>
<dbReference type="PDB" id="7K56">
    <property type="method" value="EM"/>
    <property type="resolution" value="3.90 A"/>
    <property type="chains" value="A/B/C/D/E/F/G/H/I/J/K/L=1-806"/>
</dbReference>
<dbReference type="PDB" id="7K57">
    <property type="method" value="EM"/>
    <property type="resolution" value="3.70 A"/>
    <property type="chains" value="A/B/C/D/E/F/G/H/I/J/K/L=1-806"/>
</dbReference>
<dbReference type="PDB" id="7K59">
    <property type="method" value="EM"/>
    <property type="resolution" value="4.20 A"/>
    <property type="chains" value="A/B/C/D/E/F=1-806"/>
</dbReference>
<dbReference type="PDB" id="7L5W">
    <property type="method" value="EM"/>
    <property type="resolution" value="3.34 A"/>
    <property type="chains" value="A/B/C/D/E/F/G/H/I/J/K/L=1-806"/>
</dbReference>
<dbReference type="PDB" id="7L5X">
    <property type="method" value="EM"/>
    <property type="resolution" value="6.10 A"/>
    <property type="chains" value="A/B/C/D/E/F/G/H/I/J/K/L=1-806"/>
</dbReference>
<dbReference type="PDB" id="7LMY">
    <property type="method" value="EM"/>
    <property type="resolution" value="2.40 A"/>
    <property type="chains" value="A/B/C/D/E/F=1-806"/>
</dbReference>
<dbReference type="PDB" id="7LMZ">
    <property type="method" value="EM"/>
    <property type="resolution" value="3.06 A"/>
    <property type="chains" value="A/B/C/D/E/F=1-806"/>
</dbReference>
<dbReference type="PDB" id="7LN0">
    <property type="method" value="EM"/>
    <property type="resolution" value="2.98 A"/>
    <property type="chains" value="A/B/C/D/E/F=1-806"/>
</dbReference>
<dbReference type="PDB" id="7LN1">
    <property type="method" value="EM"/>
    <property type="resolution" value="3.40 A"/>
    <property type="chains" value="A/B/C/D/E/F=1-806"/>
</dbReference>
<dbReference type="PDB" id="7LN2">
    <property type="method" value="EM"/>
    <property type="resolution" value="3.63 A"/>
    <property type="chains" value="A/B/C/D/E/F=1-806"/>
</dbReference>
<dbReference type="PDB" id="7LN3">
    <property type="method" value="EM"/>
    <property type="resolution" value="3.45 A"/>
    <property type="chains" value="A/B/C/D/E/F=1-806"/>
</dbReference>
<dbReference type="PDB" id="7LN4">
    <property type="method" value="EM"/>
    <property type="resolution" value="3.00 A"/>
    <property type="chains" value="A/B/C/D/E/F=1-806"/>
</dbReference>
<dbReference type="PDB" id="7LN5">
    <property type="method" value="EM"/>
    <property type="resolution" value="3.09 A"/>
    <property type="chains" value="A/B/C/D/E/F=1-806"/>
</dbReference>
<dbReference type="PDB" id="7LN6">
    <property type="method" value="EM"/>
    <property type="resolution" value="3.58 A"/>
    <property type="chains" value="A/B/C/D/E/F=1-806"/>
</dbReference>
<dbReference type="PDB" id="7MDM">
    <property type="method" value="EM"/>
    <property type="resolution" value="4.86 A"/>
    <property type="chains" value="A/B/C/D/E/F=1-806"/>
</dbReference>
<dbReference type="PDB" id="7MDO">
    <property type="method" value="EM"/>
    <property type="resolution" value="4.12 A"/>
    <property type="chains" value="A/B/C/D/E/F=1-806"/>
</dbReference>
<dbReference type="PDB" id="7MHS">
    <property type="method" value="EM"/>
    <property type="resolution" value="3.60 A"/>
    <property type="chains" value="A/B/C/D/E=1-806"/>
</dbReference>
<dbReference type="PDB" id="7OAT">
    <property type="method" value="X-ray"/>
    <property type="resolution" value="3.00 A"/>
    <property type="chains" value="B=2-480"/>
</dbReference>
<dbReference type="PDB" id="7PUX">
    <property type="method" value="X-ray"/>
    <property type="resolution" value="1.73 A"/>
    <property type="chains" value="A=1-460"/>
</dbReference>
<dbReference type="PDB" id="7R7S">
    <property type="method" value="EM"/>
    <property type="resolution" value="4.23 A"/>
    <property type="chains" value="A/B/C/D/E/F=1-806"/>
</dbReference>
<dbReference type="PDB" id="7R7T">
    <property type="method" value="EM"/>
    <property type="resolution" value="4.50 A"/>
    <property type="chains" value="A/B/C/D/E/F=1-806"/>
</dbReference>
<dbReference type="PDB" id="7R7U">
    <property type="method" value="EM"/>
    <property type="resolution" value="4.30 A"/>
    <property type="chains" value="A/B/C/D/E/F=1-806"/>
</dbReference>
<dbReference type="PDB" id="7RL6">
    <property type="method" value="EM"/>
    <property type="resolution" value="3.70 A"/>
    <property type="chains" value="A/B/C/D/E/F=2-806"/>
</dbReference>
<dbReference type="PDB" id="7RL7">
    <property type="method" value="EM"/>
    <property type="resolution" value="3.00 A"/>
    <property type="chains" value="A/B/C/D/E/F=2-806"/>
</dbReference>
<dbReference type="PDB" id="7RL9">
    <property type="method" value="EM"/>
    <property type="resolution" value="3.30 A"/>
    <property type="chains" value="A/B/C/D/E/F=2-806"/>
</dbReference>
<dbReference type="PDB" id="7RLA">
    <property type="method" value="EM"/>
    <property type="resolution" value="3.10 A"/>
    <property type="chains" value="A/B/C/D/E/F=2-806"/>
</dbReference>
<dbReference type="PDB" id="7RLB">
    <property type="method" value="EM"/>
    <property type="resolution" value="3.30 A"/>
    <property type="chains" value="A/B/C/D/E/F=2-806"/>
</dbReference>
<dbReference type="PDB" id="7RLC">
    <property type="method" value="EM"/>
    <property type="resolution" value="3.20 A"/>
    <property type="chains" value="A/B/C/D/E/F=2-806"/>
</dbReference>
<dbReference type="PDB" id="7RLD">
    <property type="method" value="EM"/>
    <property type="resolution" value="3.40 A"/>
    <property type="chains" value="A/B/C/D/E/F=2-806"/>
</dbReference>
<dbReference type="PDB" id="7RLF">
    <property type="method" value="EM"/>
    <property type="resolution" value="3.10 A"/>
    <property type="chains" value="A/B/C/D/E/F=1-806"/>
</dbReference>
<dbReference type="PDB" id="7RLG">
    <property type="method" value="EM"/>
    <property type="resolution" value="3.70 A"/>
    <property type="chains" value="A/B/C/D/E/F=2-806"/>
</dbReference>
<dbReference type="PDB" id="7RLH">
    <property type="method" value="EM"/>
    <property type="resolution" value="3.00 A"/>
    <property type="chains" value="A/B/C/D/E/F=1-806"/>
</dbReference>
<dbReference type="PDB" id="7RLI">
    <property type="method" value="EM"/>
    <property type="resolution" value="3.10 A"/>
    <property type="chains" value="A/B/C/D/E/F/G/H/I/J/K/L=2-806"/>
</dbReference>
<dbReference type="PDB" id="7RLJ">
    <property type="method" value="EM"/>
    <property type="resolution" value="3.80 A"/>
    <property type="chains" value="A/B/C/D/E/F/G/H/I/J/K/L=21-775"/>
</dbReference>
<dbReference type="PDB" id="7VCS">
    <property type="method" value="EM"/>
    <property type="resolution" value="3.32 A"/>
    <property type="chains" value="A/B/C/D/E/F/G/H/I/J/K/L=1-806"/>
</dbReference>
<dbReference type="PDB" id="7VCT">
    <property type="method" value="EM"/>
    <property type="resolution" value="3.21 A"/>
    <property type="chains" value="A/B/C/D/E/F=1-806"/>
</dbReference>
<dbReference type="PDB" id="7VCU">
    <property type="method" value="EM"/>
    <property type="resolution" value="3.15 A"/>
    <property type="chains" value="A/B/C/D/E/F/G/H/I/J/K/L=1-806"/>
</dbReference>
<dbReference type="PDB" id="7VCV">
    <property type="method" value="EM"/>
    <property type="resolution" value="3.21 A"/>
    <property type="chains" value="A/B/C/D/E/F=1-806"/>
</dbReference>
<dbReference type="PDB" id="7VCX">
    <property type="method" value="EM"/>
    <property type="resolution" value="3.24 A"/>
    <property type="chains" value="A/B/C/D/E/F=1-806"/>
</dbReference>
<dbReference type="PDB" id="7Y4W">
    <property type="method" value="EM"/>
    <property type="resolution" value="3.67 A"/>
    <property type="chains" value="A/B/C/D/E/F=21-806"/>
</dbReference>
<dbReference type="PDB" id="7Y53">
    <property type="method" value="EM"/>
    <property type="resolution" value="3.61 A"/>
    <property type="chains" value="A/B/C/D/E/F=21-806"/>
</dbReference>
<dbReference type="PDB" id="7Y59">
    <property type="method" value="EM"/>
    <property type="resolution" value="4.51 A"/>
    <property type="chains" value="A/B/C/D/E/F=21-806"/>
</dbReference>
<dbReference type="PDB" id="8B5R">
    <property type="method" value="EM"/>
    <property type="resolution" value="6.10 A"/>
    <property type="chains" value="A/B/C/D/E/F=2-806"/>
</dbReference>
<dbReference type="PDB" id="8FCL">
    <property type="method" value="EM"/>
    <property type="resolution" value="3.51 A"/>
    <property type="chains" value="A/B/C/D/E/F=1-806"/>
</dbReference>
<dbReference type="PDB" id="8FCM">
    <property type="method" value="EM"/>
    <property type="resolution" value="3.27 A"/>
    <property type="chains" value="A/B/C/D/E/F=1-806"/>
</dbReference>
<dbReference type="PDB" id="8FCN">
    <property type="method" value="EM"/>
    <property type="resolution" value="2.95 A"/>
    <property type="chains" value="A/B/C/D/E/F=1-806"/>
</dbReference>
<dbReference type="PDB" id="8FCO">
    <property type="method" value="EM"/>
    <property type="resolution" value="3.31 A"/>
    <property type="chains" value="A/B/C/D/E/F=1-806"/>
</dbReference>
<dbReference type="PDB" id="8FCP">
    <property type="method" value="EM"/>
    <property type="resolution" value="3.52 A"/>
    <property type="chains" value="A/B/C/D/E/F=1-806"/>
</dbReference>
<dbReference type="PDB" id="8FCQ">
    <property type="method" value="EM"/>
    <property type="resolution" value="3.93 A"/>
    <property type="chains" value="A/B/C/D/E/F=1-806"/>
</dbReference>
<dbReference type="PDB" id="8FCR">
    <property type="method" value="EM"/>
    <property type="resolution" value="4.12 A"/>
    <property type="chains" value="A/B/C/D/E/F=1-806"/>
</dbReference>
<dbReference type="PDB" id="8FCT">
    <property type="method" value="EM"/>
    <property type="resolution" value="3.42 A"/>
    <property type="chains" value="A/B/C/D/E/F=1-806"/>
</dbReference>
<dbReference type="PDB" id="8HL7">
    <property type="method" value="X-ray"/>
    <property type="resolution" value="2.80 A"/>
    <property type="chains" value="B=23-458"/>
</dbReference>
<dbReference type="PDB" id="8HRZ">
    <property type="method" value="X-ray"/>
    <property type="resolution" value="2.70 A"/>
    <property type="chains" value="A/B/C/D/E/F/G/H/I/J/K/L=21-458"/>
</dbReference>
<dbReference type="PDB" id="8KG2">
    <property type="method" value="X-ray"/>
    <property type="resolution" value="3.10 A"/>
    <property type="chains" value="A/B/C/D/E/F/G/H/I/J/K/L=21-458"/>
</dbReference>
<dbReference type="PDB" id="8OOI">
    <property type="method" value="EM"/>
    <property type="resolution" value="2.61 A"/>
    <property type="chains" value="A/B/C/D/E/F=1-806"/>
</dbReference>
<dbReference type="PDB" id="8PQX">
    <property type="method" value="EM"/>
    <property type="resolution" value="3.30 A"/>
    <property type="chains" value="A/B/C/D/E/F=1-806"/>
</dbReference>
<dbReference type="PDB" id="8R0E">
    <property type="method" value="EM"/>
    <property type="resolution" value="2.70 A"/>
    <property type="chains" value="A/B/C/D/E/F=1-806"/>
</dbReference>
<dbReference type="PDB" id="8RS9">
    <property type="method" value="EM"/>
    <property type="resolution" value="3.40 A"/>
    <property type="chains" value="A/B/C/D/E/F=1-806"/>
</dbReference>
<dbReference type="PDB" id="8RSB">
    <property type="method" value="EM"/>
    <property type="resolution" value="3.40 A"/>
    <property type="chains" value="A/B/C/D/E/F=1-806"/>
</dbReference>
<dbReference type="PDB" id="8RSC">
    <property type="method" value="EM"/>
    <property type="resolution" value="3.60 A"/>
    <property type="chains" value="A/B/C/D/E/F=1-806"/>
</dbReference>
<dbReference type="PDB" id="8UV2">
    <property type="method" value="EM"/>
    <property type="resolution" value="3.23 A"/>
    <property type="chains" value="A/B/C/D/E/F=1-806"/>
</dbReference>
<dbReference type="PDB" id="8UVO">
    <property type="method" value="EM"/>
    <property type="resolution" value="3.22 A"/>
    <property type="chains" value="A/B/C/D/E/F=1-806"/>
</dbReference>
<dbReference type="PDB" id="8UVP">
    <property type="method" value="EM"/>
    <property type="resolution" value="3.60 A"/>
    <property type="chains" value="A/B/C/D/E/F=1-806"/>
</dbReference>
<dbReference type="PDB" id="8UVQ">
    <property type="method" value="EM"/>
    <property type="resolution" value="3.42 A"/>
    <property type="chains" value="A/B/C/D/E/F=1-806"/>
</dbReference>
<dbReference type="PDB" id="8VKU">
    <property type="method" value="EM"/>
    <property type="resolution" value="3.50 A"/>
    <property type="chains" value="A/B/C/D/E/F=1-806"/>
</dbReference>
<dbReference type="PDB" id="8VLS">
    <property type="method" value="EM"/>
    <property type="resolution" value="2.90 A"/>
    <property type="chains" value="A/B/C/D/E/F/G/H/I/J/K/L=1-806"/>
</dbReference>
<dbReference type="PDB" id="8VOV">
    <property type="method" value="EM"/>
    <property type="resolution" value="3.60 A"/>
    <property type="chains" value="A/B/C/D/E/F=1-806"/>
</dbReference>
<dbReference type="PDB" id="8YKA">
    <property type="method" value="EM"/>
    <property type="resolution" value="3.45 A"/>
    <property type="chains" value="A/B/C/D/E/F=12-775"/>
</dbReference>
<dbReference type="PDB" id="9BOQ">
    <property type="method" value="EM"/>
    <property type="resolution" value="3.33 A"/>
    <property type="chains" value="A/B/C/D/E/F/G/H/I/J/K/L=1-806"/>
</dbReference>
<dbReference type="PDBsum" id="3EBB"/>
<dbReference type="PDBsum" id="3HU1"/>
<dbReference type="PDBsum" id="3HU2"/>
<dbReference type="PDBsum" id="3HU3"/>
<dbReference type="PDBsum" id="3QC8"/>
<dbReference type="PDBsum" id="3QQ7"/>
<dbReference type="PDBsum" id="3QQ8"/>
<dbReference type="PDBsum" id="3QWZ"/>
<dbReference type="PDBsum" id="3TIW"/>
<dbReference type="PDBsum" id="4KDI"/>
<dbReference type="PDBsum" id="4KDL"/>
<dbReference type="PDBsum" id="4KLN"/>
<dbReference type="PDBsum" id="4KO8"/>
<dbReference type="PDBsum" id="4KOD"/>
<dbReference type="PDBsum" id="4P0A"/>
<dbReference type="PDBsum" id="5B6C"/>
<dbReference type="PDBsum" id="5C18"/>
<dbReference type="PDBsum" id="5C19"/>
<dbReference type="PDBsum" id="5C1A"/>
<dbReference type="PDBsum" id="5C1B"/>
<dbReference type="PDBsum" id="5DYG"/>
<dbReference type="PDBsum" id="5DYI"/>
<dbReference type="PDBsum" id="5EPP"/>
<dbReference type="PDBsum" id="5FTJ"/>
<dbReference type="PDBsum" id="5FTK"/>
<dbReference type="PDBsum" id="5FTL"/>
<dbReference type="PDBsum" id="5FTM"/>
<dbReference type="PDBsum" id="5FTN"/>
<dbReference type="PDBsum" id="5GLF"/>
<dbReference type="PDBsum" id="5IFS"/>
<dbReference type="PDBsum" id="5IFW"/>
<dbReference type="PDBsum" id="5KIW"/>
<dbReference type="PDBsum" id="5KIY"/>
<dbReference type="PDBsum" id="5X4L"/>
<dbReference type="PDBsum" id="6G2V"/>
<dbReference type="PDBsum" id="6G2W"/>
<dbReference type="PDBsum" id="6G2X"/>
<dbReference type="PDBsum" id="6G2Y"/>
<dbReference type="PDBsum" id="6G2Z"/>
<dbReference type="PDBsum" id="6G30"/>
<dbReference type="PDBsum" id="6HD0"/>
<dbReference type="PDBsum" id="6MCK"/>
<dbReference type="PDBsum" id="7BP8"/>
<dbReference type="PDBsum" id="7BP9"/>
<dbReference type="PDBsum" id="7BPA"/>
<dbReference type="PDBsum" id="7BPB"/>
<dbReference type="PDBsum" id="7JY5"/>
<dbReference type="PDBsum" id="7K56"/>
<dbReference type="PDBsum" id="7K57"/>
<dbReference type="PDBsum" id="7K59"/>
<dbReference type="PDBsum" id="7L5W"/>
<dbReference type="PDBsum" id="7L5X"/>
<dbReference type="PDBsum" id="7LMY"/>
<dbReference type="PDBsum" id="7LMZ"/>
<dbReference type="PDBsum" id="7LN0"/>
<dbReference type="PDBsum" id="7LN1"/>
<dbReference type="PDBsum" id="7LN2"/>
<dbReference type="PDBsum" id="7LN3"/>
<dbReference type="PDBsum" id="7LN4"/>
<dbReference type="PDBsum" id="7LN5"/>
<dbReference type="PDBsum" id="7LN6"/>
<dbReference type="PDBsum" id="7MDM"/>
<dbReference type="PDBsum" id="7MDO"/>
<dbReference type="PDBsum" id="7MHS"/>
<dbReference type="PDBsum" id="7OAT"/>
<dbReference type="PDBsum" id="7PUX"/>
<dbReference type="PDBsum" id="7R7S"/>
<dbReference type="PDBsum" id="7R7T"/>
<dbReference type="PDBsum" id="7R7U"/>
<dbReference type="PDBsum" id="7RL6"/>
<dbReference type="PDBsum" id="7RL7"/>
<dbReference type="PDBsum" id="7RL9"/>
<dbReference type="PDBsum" id="7RLA"/>
<dbReference type="PDBsum" id="7RLB"/>
<dbReference type="PDBsum" id="7RLC"/>
<dbReference type="PDBsum" id="7RLD"/>
<dbReference type="PDBsum" id="7RLF"/>
<dbReference type="PDBsum" id="7RLG"/>
<dbReference type="PDBsum" id="7RLH"/>
<dbReference type="PDBsum" id="7RLI"/>
<dbReference type="PDBsum" id="7RLJ"/>
<dbReference type="PDBsum" id="7VCS"/>
<dbReference type="PDBsum" id="7VCT"/>
<dbReference type="PDBsum" id="7VCU"/>
<dbReference type="PDBsum" id="7VCV"/>
<dbReference type="PDBsum" id="7VCX"/>
<dbReference type="PDBsum" id="7Y4W"/>
<dbReference type="PDBsum" id="7Y53"/>
<dbReference type="PDBsum" id="7Y59"/>
<dbReference type="PDBsum" id="8B5R"/>
<dbReference type="PDBsum" id="8FCL"/>
<dbReference type="PDBsum" id="8FCM"/>
<dbReference type="PDBsum" id="8FCN"/>
<dbReference type="PDBsum" id="8FCO"/>
<dbReference type="PDBsum" id="8FCP"/>
<dbReference type="PDBsum" id="8FCQ"/>
<dbReference type="PDBsum" id="8FCR"/>
<dbReference type="PDBsum" id="8FCT"/>
<dbReference type="PDBsum" id="8HL7"/>
<dbReference type="PDBsum" id="8HRZ"/>
<dbReference type="PDBsum" id="8KG2"/>
<dbReference type="PDBsum" id="8OOI"/>
<dbReference type="PDBsum" id="8PQX"/>
<dbReference type="PDBsum" id="8R0E"/>
<dbReference type="PDBsum" id="8RS9"/>
<dbReference type="PDBsum" id="8RSB"/>
<dbReference type="PDBsum" id="8RSC"/>
<dbReference type="PDBsum" id="8UV2"/>
<dbReference type="PDBsum" id="8UVO"/>
<dbReference type="PDBsum" id="8UVP"/>
<dbReference type="PDBsum" id="8UVQ"/>
<dbReference type="PDBsum" id="8VKU"/>
<dbReference type="PDBsum" id="8VLS"/>
<dbReference type="PDBsum" id="8VOV"/>
<dbReference type="PDBsum" id="8YKA"/>
<dbReference type="PDBsum" id="9BOQ"/>
<dbReference type="EMDB" id="EMD-15774"/>
<dbReference type="EMDB" id="EMD-15861"/>
<dbReference type="EMDB" id="EMD-16781"/>
<dbReference type="EMDB" id="EMD-17016"/>
<dbReference type="EMDB" id="EMD-17024"/>
<dbReference type="EMDB" id="EMD-17128"/>
<dbReference type="EMDB" id="EMD-17827"/>
<dbReference type="EMDB" id="EMD-17837"/>
<dbReference type="EMDB" id="EMD-18517"/>
<dbReference type="EMDB" id="EMD-18790"/>
<dbReference type="EMDB" id="EMD-19473"/>
<dbReference type="EMDB" id="EMD-19475"/>
<dbReference type="EMDB" id="EMD-19476"/>
<dbReference type="EMDB" id="EMD-22521"/>
<dbReference type="EMDB" id="EMD-22675"/>
<dbReference type="EMDB" id="EMD-22676"/>
<dbReference type="EMDB" id="EMD-22678"/>
<dbReference type="EMDB" id="EMD-23191"/>
<dbReference type="EMDB" id="EMD-23192"/>
<dbReference type="EMDB" id="EMD-23442"/>
<dbReference type="EMDB" id="EMD-23443"/>
<dbReference type="EMDB" id="EMD-23444"/>
<dbReference type="EMDB" id="EMD-23445"/>
<dbReference type="EMDB" id="EMD-23446"/>
<dbReference type="EMDB" id="EMD-23447"/>
<dbReference type="EMDB" id="EMD-23448"/>
<dbReference type="EMDB" id="EMD-23449"/>
<dbReference type="EMDB" id="EMD-23450"/>
<dbReference type="EMDB" id="EMD-23451"/>
<dbReference type="EMDB" id="EMD-23452"/>
<dbReference type="EMDB" id="EMD-23453"/>
<dbReference type="EMDB" id="EMD-23454"/>
<dbReference type="EMDB" id="EMD-23455"/>
<dbReference type="EMDB" id="EMD-23456"/>
<dbReference type="EMDB" id="EMD-23457"/>
<dbReference type="EMDB" id="EMD-23458"/>
<dbReference type="EMDB" id="EMD-23775"/>
<dbReference type="EMDB" id="EMD-23776"/>
<dbReference type="EMDB" id="EMD-23835"/>
<dbReference type="EMDB" id="EMD-24302"/>
<dbReference type="EMDB" id="EMD-24304"/>
<dbReference type="EMDB" id="EMD-24305"/>
<dbReference type="EMDB" id="EMD-24306"/>
<dbReference type="EMDB" id="EMD-24518"/>
<dbReference type="EMDB" id="EMD-24519"/>
<dbReference type="EMDB" id="EMD-24522"/>
<dbReference type="EMDB" id="EMD-24523"/>
<dbReference type="EMDB" id="EMD-24524"/>
<dbReference type="EMDB" id="EMD-24525"/>
<dbReference type="EMDB" id="EMD-24526"/>
<dbReference type="EMDB" id="EMD-24528"/>
<dbReference type="EMDB" id="EMD-24529"/>
<dbReference type="EMDB" id="EMD-24530"/>
<dbReference type="EMDB" id="EMD-24531"/>
<dbReference type="EMDB" id="EMD-24532"/>
<dbReference type="EMDB" id="EMD-28982"/>
<dbReference type="EMDB" id="EMD-28983"/>
<dbReference type="EMDB" id="EMD-28984"/>
<dbReference type="EMDB" id="EMD-28985"/>
<dbReference type="EMDB" id="EMD-28986"/>
<dbReference type="EMDB" id="EMD-28987"/>
<dbReference type="EMDB" id="EMD-28988"/>
<dbReference type="EMDB" id="EMD-28989"/>
<dbReference type="EMDB" id="EMD-28990"/>
<dbReference type="EMDB" id="EMD-28991"/>
<dbReference type="EMDB" id="EMD-28992"/>
<dbReference type="EMDB" id="EMD-30147"/>
<dbReference type="EMDB" id="EMD-30148"/>
<dbReference type="EMDB" id="EMD-30149"/>
<dbReference type="EMDB" id="EMD-30150"/>
<dbReference type="EMDB" id="EMD-31894"/>
<dbReference type="EMDB" id="EMD-31895"/>
<dbReference type="EMDB" id="EMD-31896"/>
<dbReference type="EMDB" id="EMD-31897"/>
<dbReference type="EMDB" id="EMD-31899"/>
<dbReference type="EMDB" id="EMD-32827"/>
<dbReference type="EMDB" id="EMD-3295"/>
<dbReference type="EMDB" id="EMD-3296"/>
<dbReference type="EMDB" id="EMD-3297"/>
<dbReference type="EMDB" id="EMD-3298"/>
<dbReference type="EMDB" id="EMD-3299"/>
<dbReference type="EMDB" id="EMD-3323"/>
<dbReference type="EMDB" id="EMD-3324"/>
<dbReference type="EMDB" id="EMD-3325"/>
<dbReference type="EMDB" id="EMD-3326"/>
<dbReference type="EMDB" id="EMD-3327"/>
<dbReference type="EMDB" id="EMD-3328"/>
<dbReference type="EMDB" id="EMD-33608"/>
<dbReference type="EMDB" id="EMD-33611"/>
<dbReference type="EMDB" id="EMD-33613"/>
<dbReference type="EMDB" id="EMD-38770"/>
<dbReference type="EMDB" id="EMD-38771"/>
<dbReference type="EMDB" id="EMD-38772"/>
<dbReference type="EMDB" id="EMD-39360"/>
<dbReference type="EMDB" id="EMD-42603"/>
<dbReference type="EMDB" id="EMD-42625"/>
<dbReference type="EMDB" id="EMD-42626"/>
<dbReference type="EMDB" id="EMD-42627"/>
<dbReference type="EMDB" id="EMD-43329"/>
<dbReference type="EMDB" id="EMD-43343"/>
<dbReference type="EMDB" id="EMD-43392"/>
<dbReference type="EMDB" id="EMD-44748"/>
<dbReference type="SMR" id="P55072"/>
<dbReference type="BioGRID" id="113258">
    <property type="interactions" value="1442"/>
</dbReference>
<dbReference type="ComplexPortal" id="CPX-137">
    <property type="entry name" value="VCP-NPL4-UFD1 AAA ATPase complex"/>
</dbReference>
<dbReference type="ComplexPortal" id="CPX-262">
    <property type="entry name" value="VCP-NSFL1C AAA ATPase complex"/>
</dbReference>
<dbReference type="ComplexPortal" id="CPX-8095">
    <property type="entry name" value="VCP-FAF1 AAA ATPase complex"/>
</dbReference>
<dbReference type="ComplexPortal" id="CPX-8096">
    <property type="entry name" value="VCP-NPL4-UFD1-FAF1 AAA ATPase complex"/>
</dbReference>
<dbReference type="ComplexPortal" id="CPX-8101">
    <property type="entry name" value="VCP-NPL4-UFD1-UBXN7 AAA ATPase complex"/>
</dbReference>
<dbReference type="ComplexPortal" id="CPX-8104">
    <property type="entry name" value="VCP-NPL4-UFD1-FAF2 AAA ATPase complex"/>
</dbReference>
<dbReference type="ComplexPortal" id="CPX-8105">
    <property type="entry name" value="VCP-NPL4-UFD1-UBXN1 AAA ATPase complex"/>
</dbReference>
<dbReference type="ComplexPortal" id="CPX-8121">
    <property type="entry name" value="VCP-UBXN2B AAA ATPase complex"/>
</dbReference>
<dbReference type="ComplexPortal" id="CPX-8124">
    <property type="entry name" value="VCP-UBXN2A AAA ATPase complex"/>
</dbReference>
<dbReference type="ComplexPortal" id="CPX-8128">
    <property type="entry name" value="VCP-YOD1 AAA ATPase complex"/>
</dbReference>
<dbReference type="ComplexPortal" id="CPX-8129">
    <property type="entry name" value="VCP-PLAA AAA ATPase complex"/>
</dbReference>
<dbReference type="ComplexPortal" id="CPX-8132">
    <property type="entry name" value="VCP-VCPIP1 AAA ATPase complex"/>
</dbReference>
<dbReference type="ComplexPortal" id="CPX-8133">
    <property type="entry name" value="VCP-UBXN6 AAA ATPase complex"/>
</dbReference>
<dbReference type="ComplexPortal" id="CPX-8134">
    <property type="entry name" value="VCP-AMFR AAA ATPase complex"/>
</dbReference>
<dbReference type="ComplexPortal" id="CPX-8570">
    <property type="entry name" value="VCP-DERL1 AAA ATPase complex"/>
</dbReference>
<dbReference type="ComplexPortal" id="CPX-8782">
    <property type="entry name" value="VCP-DERL2 AAA ATPase complex"/>
</dbReference>
<dbReference type="ComplexPortal" id="CPX-8783">
    <property type="entry name" value="VCP-DERL3 AAA ATPase complex"/>
</dbReference>
<dbReference type="CORUM" id="P55072"/>
<dbReference type="DIP" id="DIP-33543N"/>
<dbReference type="FunCoup" id="P55072">
    <property type="interactions" value="2295"/>
</dbReference>
<dbReference type="IntAct" id="P55072">
    <property type="interactions" value="211"/>
</dbReference>
<dbReference type="MINT" id="P55072"/>
<dbReference type="STRING" id="9606.ENSP00000351777"/>
<dbReference type="BindingDB" id="P55072"/>
<dbReference type="ChEMBL" id="CHEMBL1075145"/>
<dbReference type="DrugBank" id="DB16874">
    <property type="generic name" value="CB-5083"/>
</dbReference>
<dbReference type="DrugBank" id="DB12695">
    <property type="generic name" value="Phenethyl Isothiocyanate"/>
</dbReference>
<dbReference type="DrugBank" id="DB04395">
    <property type="generic name" value="Phosphoaminophosphonic Acid-Adenylate Ester"/>
</dbReference>
<dbReference type="DrugCentral" id="P55072"/>
<dbReference type="MoonDB" id="P55072">
    <property type="type" value="Predicted"/>
</dbReference>
<dbReference type="TCDB" id="3.A.16.1.1">
    <property type="family name" value="the endoplasmic reticular retrotranslocon (er-rt) family"/>
</dbReference>
<dbReference type="CarbonylDB" id="P55072"/>
<dbReference type="GlyGen" id="P55072">
    <property type="glycosylation" value="1 site, 1 O-linked glycan (1 site)"/>
</dbReference>
<dbReference type="iPTMnet" id="P55072"/>
<dbReference type="MetOSite" id="P55072"/>
<dbReference type="PhosphoSitePlus" id="P55072"/>
<dbReference type="SwissPalm" id="P55072"/>
<dbReference type="BioMuta" id="VCP"/>
<dbReference type="DMDM" id="6094447"/>
<dbReference type="OGP" id="P55072"/>
<dbReference type="REPRODUCTION-2DPAGE" id="IPI00022774"/>
<dbReference type="REPRODUCTION-2DPAGE" id="P55072"/>
<dbReference type="CPTAC" id="CPTAC-295"/>
<dbReference type="CPTAC" id="CPTAC-296"/>
<dbReference type="jPOST" id="P55072"/>
<dbReference type="MassIVE" id="P55072"/>
<dbReference type="PaxDb" id="9606-ENSP00000351777"/>
<dbReference type="PeptideAtlas" id="P55072"/>
<dbReference type="PRIDE" id="P55072"/>
<dbReference type="ProteomicsDB" id="56776"/>
<dbReference type="Pumba" id="P55072"/>
<dbReference type="TopDownProteomics" id="P55072"/>
<dbReference type="ABCD" id="P55072">
    <property type="antibodies" value="1 sequenced antibody"/>
</dbReference>
<dbReference type="Antibodypedia" id="2215">
    <property type="antibodies" value="677 antibodies from 43 providers"/>
</dbReference>
<dbReference type="DNASU" id="7415"/>
<dbReference type="Ensembl" id="ENST00000358901.11">
    <property type="protein sequence ID" value="ENSP00000351777.6"/>
    <property type="gene ID" value="ENSG00000165280.18"/>
</dbReference>
<dbReference type="GeneID" id="7415"/>
<dbReference type="KEGG" id="hsa:7415"/>
<dbReference type="MANE-Select" id="ENST00000358901.11">
    <property type="protein sequence ID" value="ENSP00000351777.6"/>
    <property type="RefSeq nucleotide sequence ID" value="NM_007126.5"/>
    <property type="RefSeq protein sequence ID" value="NP_009057.1"/>
</dbReference>
<dbReference type="AGR" id="HGNC:12666"/>
<dbReference type="CTD" id="7415"/>
<dbReference type="DisGeNET" id="7415"/>
<dbReference type="GeneCards" id="VCP"/>
<dbReference type="GeneReviews" id="VCP"/>
<dbReference type="HGNC" id="HGNC:12666">
    <property type="gene designation" value="VCP"/>
</dbReference>
<dbReference type="HPA" id="ENSG00000165280">
    <property type="expression patterns" value="Low tissue specificity"/>
</dbReference>
<dbReference type="MalaCards" id="VCP"/>
<dbReference type="MIM" id="167320">
    <property type="type" value="phenotype"/>
</dbReference>
<dbReference type="MIM" id="601023">
    <property type="type" value="gene"/>
</dbReference>
<dbReference type="MIM" id="613954">
    <property type="type" value="phenotype"/>
</dbReference>
<dbReference type="MIM" id="616687">
    <property type="type" value="phenotype"/>
</dbReference>
<dbReference type="neXtProt" id="NX_P55072"/>
<dbReference type="OpenTargets" id="ENSG00000165280"/>
<dbReference type="Orphanet" id="329478">
    <property type="disease" value="Adult-onset distal myopathy due to VCP mutation"/>
</dbReference>
<dbReference type="Orphanet" id="803">
    <property type="disease" value="Amyotrophic lateral sclerosis"/>
</dbReference>
<dbReference type="Orphanet" id="435387">
    <property type="disease" value="Autosomal dominant Charcot-Marie-Tooth disease type 2Y"/>
</dbReference>
<dbReference type="Orphanet" id="275864">
    <property type="disease" value="Behavioral variant of frontotemporal dementia"/>
</dbReference>
<dbReference type="Orphanet" id="275872">
    <property type="disease" value="Frontotemporal dementia with motor neuron disease"/>
</dbReference>
<dbReference type="Orphanet" id="52430">
    <property type="disease" value="Inclusion body myopathy with Paget disease of bone and frontotemporal dementia"/>
</dbReference>
<dbReference type="Orphanet" id="100070">
    <property type="disease" value="Progressive non-fluent aphasia"/>
</dbReference>
<dbReference type="Orphanet" id="329475">
    <property type="disease" value="Spastic paraplegia-Paget disease of bone syndrome"/>
</dbReference>
<dbReference type="PharmGKB" id="PA37289"/>
<dbReference type="VEuPathDB" id="HostDB:ENSG00000165280"/>
<dbReference type="eggNOG" id="KOG0730">
    <property type="taxonomic scope" value="Eukaryota"/>
</dbReference>
<dbReference type="GeneTree" id="ENSGT00900000141071"/>
<dbReference type="HOGENOM" id="CLU_000688_12_3_1"/>
<dbReference type="InParanoid" id="P55072"/>
<dbReference type="OMA" id="VWPAYPE"/>
<dbReference type="OrthoDB" id="27435at2759"/>
<dbReference type="PAN-GO" id="P55072">
    <property type="GO annotations" value="10 GO annotations based on evolutionary models"/>
</dbReference>
<dbReference type="PhylomeDB" id="P55072"/>
<dbReference type="TreeFam" id="TF300542"/>
<dbReference type="BRENDA" id="3.6.4.6">
    <property type="organism ID" value="2681"/>
</dbReference>
<dbReference type="PathwayCommons" id="P55072"/>
<dbReference type="Reactome" id="R-HSA-110320">
    <property type="pathway name" value="Translesion Synthesis by POLH"/>
</dbReference>
<dbReference type="Reactome" id="R-HSA-3371511">
    <property type="pathway name" value="HSF1 activation"/>
</dbReference>
<dbReference type="Reactome" id="R-HSA-382556">
    <property type="pathway name" value="ABC-family proteins mediated transport"/>
</dbReference>
<dbReference type="Reactome" id="R-HSA-532668">
    <property type="pathway name" value="N-glycan trimming in the ER and Calnexin/Calreticulin cycle"/>
</dbReference>
<dbReference type="Reactome" id="R-HSA-5358346">
    <property type="pathway name" value="Hedgehog ligand biogenesis"/>
</dbReference>
<dbReference type="Reactome" id="R-HSA-5362768">
    <property type="pathway name" value="Hh mutants are degraded by ERAD"/>
</dbReference>
<dbReference type="Reactome" id="R-HSA-5678895">
    <property type="pathway name" value="Defective CFTR causes cystic fibrosis"/>
</dbReference>
<dbReference type="Reactome" id="R-HSA-5689877">
    <property type="pathway name" value="Josephin domain DUBs"/>
</dbReference>
<dbReference type="Reactome" id="R-HSA-5689896">
    <property type="pathway name" value="Ovarian tumor domain proteases"/>
</dbReference>
<dbReference type="Reactome" id="R-HSA-6798695">
    <property type="pathway name" value="Neutrophil degranulation"/>
</dbReference>
<dbReference type="Reactome" id="R-HSA-8866654">
    <property type="pathway name" value="E3 ubiquitin ligases ubiquitinate target proteins"/>
</dbReference>
<dbReference type="Reactome" id="R-HSA-8876725">
    <property type="pathway name" value="Protein methylation"/>
</dbReference>
<dbReference type="Reactome" id="R-HSA-8951664">
    <property type="pathway name" value="Neddylation"/>
</dbReference>
<dbReference type="Reactome" id="R-HSA-9013407">
    <property type="pathway name" value="RHOH GTPase cycle"/>
</dbReference>
<dbReference type="Reactome" id="R-HSA-9646399">
    <property type="pathway name" value="Aggrephagy"/>
</dbReference>
<dbReference type="Reactome" id="R-HSA-9678110">
    <property type="pathway name" value="Attachment and Entry"/>
</dbReference>
<dbReference type="Reactome" id="R-HSA-9694614">
    <property type="pathway name" value="Attachment and Entry"/>
</dbReference>
<dbReference type="Reactome" id="R-HSA-9755511">
    <property type="pathway name" value="KEAP1-NFE2L2 pathway"/>
</dbReference>
<dbReference type="SignaLink" id="P55072"/>
<dbReference type="SIGNOR" id="P55072"/>
<dbReference type="BioGRID-ORCS" id="7415">
    <property type="hits" value="852 hits in 1138 CRISPR screens"/>
</dbReference>
<dbReference type="CD-CODE" id="550E224B">
    <property type="entry name" value="Proteasome condensate"/>
</dbReference>
<dbReference type="CD-CODE" id="91857CE7">
    <property type="entry name" value="Nucleolus"/>
</dbReference>
<dbReference type="CD-CODE" id="B5B9A610">
    <property type="entry name" value="PML body"/>
</dbReference>
<dbReference type="CD-CODE" id="DEE660B4">
    <property type="entry name" value="Stress granule"/>
</dbReference>
<dbReference type="CD-CODE" id="FB4E32DD">
    <property type="entry name" value="Presynaptic clusters and postsynaptic densities"/>
</dbReference>
<dbReference type="ChiTaRS" id="VCP">
    <property type="organism name" value="human"/>
</dbReference>
<dbReference type="EvolutionaryTrace" id="P55072"/>
<dbReference type="GeneWiki" id="Valosin-containing_protein"/>
<dbReference type="GenomeRNAi" id="7415"/>
<dbReference type="Pharos" id="P55072">
    <property type="development level" value="Tchem"/>
</dbReference>
<dbReference type="PRO" id="PR:P55072"/>
<dbReference type="Proteomes" id="UP000005640">
    <property type="component" value="Chromosome 9"/>
</dbReference>
<dbReference type="RNAct" id="P55072">
    <property type="molecule type" value="protein"/>
</dbReference>
<dbReference type="Bgee" id="ENSG00000165280">
    <property type="expression patterns" value="Expressed in stromal cell of endometrium and 210 other cell types or tissues"/>
</dbReference>
<dbReference type="ExpressionAtlas" id="P55072">
    <property type="expression patterns" value="baseline and differential"/>
</dbReference>
<dbReference type="GO" id="GO:1904949">
    <property type="term" value="C:ATPase complex"/>
    <property type="evidence" value="ECO:0007669"/>
    <property type="project" value="Ensembl"/>
</dbReference>
<dbReference type="GO" id="GO:0035578">
    <property type="term" value="C:azurophil granule lumen"/>
    <property type="evidence" value="ECO:0000304"/>
    <property type="project" value="Reactome"/>
</dbReference>
<dbReference type="GO" id="GO:0036064">
    <property type="term" value="C:ciliary basal body"/>
    <property type="evidence" value="ECO:0000314"/>
    <property type="project" value="HPA"/>
</dbReference>
<dbReference type="GO" id="GO:0005737">
    <property type="term" value="C:cytoplasm"/>
    <property type="evidence" value="ECO:0000314"/>
    <property type="project" value="UniProtKB"/>
</dbReference>
<dbReference type="GO" id="GO:0010494">
    <property type="term" value="C:cytoplasmic stress granule"/>
    <property type="evidence" value="ECO:0000314"/>
    <property type="project" value="UniProtKB"/>
</dbReference>
<dbReference type="GO" id="GO:0005829">
    <property type="term" value="C:cytosol"/>
    <property type="evidence" value="ECO:0000314"/>
    <property type="project" value="UniProtKB"/>
</dbReference>
<dbReference type="GO" id="GO:0036513">
    <property type="term" value="C:Derlin-1 retrotranslocation complex"/>
    <property type="evidence" value="ECO:0000314"/>
    <property type="project" value="UniProtKB"/>
</dbReference>
<dbReference type="GO" id="GO:0005783">
    <property type="term" value="C:endoplasmic reticulum"/>
    <property type="evidence" value="ECO:0000314"/>
    <property type="project" value="UniProtKB"/>
</dbReference>
<dbReference type="GO" id="GO:0005789">
    <property type="term" value="C:endoplasmic reticulum membrane"/>
    <property type="evidence" value="ECO:0000314"/>
    <property type="project" value="UniProtKB"/>
</dbReference>
<dbReference type="GO" id="GO:0070062">
    <property type="term" value="C:extracellular exosome"/>
    <property type="evidence" value="ECO:0007005"/>
    <property type="project" value="UniProtKB"/>
</dbReference>
<dbReference type="GO" id="GO:0005576">
    <property type="term" value="C:extracellular region"/>
    <property type="evidence" value="ECO:0000304"/>
    <property type="project" value="Reactome"/>
</dbReference>
<dbReference type="GO" id="GO:1904813">
    <property type="term" value="C:ficolin-1-rich granule lumen"/>
    <property type="evidence" value="ECO:0000304"/>
    <property type="project" value="Reactome"/>
</dbReference>
<dbReference type="GO" id="GO:0098978">
    <property type="term" value="C:glutamatergic synapse"/>
    <property type="evidence" value="ECO:0007669"/>
    <property type="project" value="Ensembl"/>
</dbReference>
<dbReference type="GO" id="GO:0043231">
    <property type="term" value="C:intracellular membrane-bounded organelle"/>
    <property type="evidence" value="ECO:0000250"/>
    <property type="project" value="UniProtKB"/>
</dbReference>
<dbReference type="GO" id="GO:0005811">
    <property type="term" value="C:lipid droplet"/>
    <property type="evidence" value="ECO:0000314"/>
    <property type="project" value="MGI"/>
</dbReference>
<dbReference type="GO" id="GO:0005654">
    <property type="term" value="C:nucleoplasm"/>
    <property type="evidence" value="ECO:0000314"/>
    <property type="project" value="HPA"/>
</dbReference>
<dbReference type="GO" id="GO:0005634">
    <property type="term" value="C:nucleus"/>
    <property type="evidence" value="ECO:0000314"/>
    <property type="project" value="UniProtKB"/>
</dbReference>
<dbReference type="GO" id="GO:0048471">
    <property type="term" value="C:perinuclear region of cytoplasm"/>
    <property type="evidence" value="ECO:0000314"/>
    <property type="project" value="ParkinsonsUK-UCL"/>
</dbReference>
<dbReference type="GO" id="GO:0000502">
    <property type="term" value="C:proteasome complex"/>
    <property type="evidence" value="ECO:0000314"/>
    <property type="project" value="BHF-UCL"/>
</dbReference>
<dbReference type="GO" id="GO:0032991">
    <property type="term" value="C:protein-containing complex"/>
    <property type="evidence" value="ECO:0000314"/>
    <property type="project" value="UniProtKB"/>
</dbReference>
<dbReference type="GO" id="GO:0034774">
    <property type="term" value="C:secretory granule lumen"/>
    <property type="evidence" value="ECO:0000304"/>
    <property type="project" value="Reactome"/>
</dbReference>
<dbReference type="GO" id="GO:0035861">
    <property type="term" value="C:site of double-strand break"/>
    <property type="evidence" value="ECO:0000314"/>
    <property type="project" value="UniProtKB"/>
</dbReference>
<dbReference type="GO" id="GO:0034098">
    <property type="term" value="C:VCP-NPL4-UFD1 AAA ATPase complex"/>
    <property type="evidence" value="ECO:0000353"/>
    <property type="project" value="ComplexPortal"/>
</dbReference>
<dbReference type="GO" id="GO:1990730">
    <property type="term" value="C:VCP-NSFL1C complex"/>
    <property type="evidence" value="ECO:0000353"/>
    <property type="project" value="ComplexPortal"/>
</dbReference>
<dbReference type="GO" id="GO:0043531">
    <property type="term" value="F:ADP binding"/>
    <property type="evidence" value="ECO:0007669"/>
    <property type="project" value="Ensembl"/>
</dbReference>
<dbReference type="GO" id="GO:0005524">
    <property type="term" value="F:ATP binding"/>
    <property type="evidence" value="ECO:0007669"/>
    <property type="project" value="UniProtKB-KW"/>
</dbReference>
<dbReference type="GO" id="GO:0016887">
    <property type="term" value="F:ATP hydrolysis activity"/>
    <property type="evidence" value="ECO:0000314"/>
    <property type="project" value="UniProt"/>
</dbReference>
<dbReference type="GO" id="GO:1904288">
    <property type="term" value="F:BAT3 complex binding"/>
    <property type="evidence" value="ECO:0000353"/>
    <property type="project" value="ParkinsonsUK-UCL"/>
</dbReference>
<dbReference type="GO" id="GO:0035800">
    <property type="term" value="F:deubiquitinase activator activity"/>
    <property type="evidence" value="ECO:0000314"/>
    <property type="project" value="ParkinsonsUK-UCL"/>
</dbReference>
<dbReference type="GO" id="GO:0042802">
    <property type="term" value="F:identical protein binding"/>
    <property type="evidence" value="ECO:0000353"/>
    <property type="project" value="IntAct"/>
</dbReference>
<dbReference type="GO" id="GO:0036435">
    <property type="term" value="F:K48-linked polyubiquitin modification-dependent protein binding"/>
    <property type="evidence" value="ECO:0000314"/>
    <property type="project" value="UniProt"/>
</dbReference>
<dbReference type="GO" id="GO:0008289">
    <property type="term" value="F:lipid binding"/>
    <property type="evidence" value="ECO:0007669"/>
    <property type="project" value="UniProtKB-KW"/>
</dbReference>
<dbReference type="GO" id="GO:0042288">
    <property type="term" value="F:MHC class I protein binding"/>
    <property type="evidence" value="ECO:0007669"/>
    <property type="project" value="Ensembl"/>
</dbReference>
<dbReference type="GO" id="GO:0031593">
    <property type="term" value="F:polyubiquitin modification-dependent protein binding"/>
    <property type="evidence" value="ECO:0000314"/>
    <property type="project" value="BHF-UCL"/>
</dbReference>
<dbReference type="GO" id="GO:0019904">
    <property type="term" value="F:protein domain specific binding"/>
    <property type="evidence" value="ECO:0000353"/>
    <property type="project" value="UniProtKB"/>
</dbReference>
<dbReference type="GO" id="GO:0019903">
    <property type="term" value="F:protein phosphatase binding"/>
    <property type="evidence" value="ECO:0000353"/>
    <property type="project" value="BHF-UCL"/>
</dbReference>
<dbReference type="GO" id="GO:0003723">
    <property type="term" value="F:RNA binding"/>
    <property type="evidence" value="ECO:0007005"/>
    <property type="project" value="UniProtKB"/>
</dbReference>
<dbReference type="GO" id="GO:0031625">
    <property type="term" value="F:ubiquitin protein ligase binding"/>
    <property type="evidence" value="ECO:0000353"/>
    <property type="project" value="ParkinsonsUK-UCL"/>
</dbReference>
<dbReference type="GO" id="GO:0044389">
    <property type="term" value="F:ubiquitin-like protein ligase binding"/>
    <property type="evidence" value="ECO:0000353"/>
    <property type="project" value="ParkinsonsUK-UCL"/>
</dbReference>
<dbReference type="GO" id="GO:0140036">
    <property type="term" value="F:ubiquitin-modified protein reader activity"/>
    <property type="evidence" value="ECO:0000314"/>
    <property type="project" value="UniProtKB"/>
</dbReference>
<dbReference type="GO" id="GO:1990381">
    <property type="term" value="F:ubiquitin-specific protease binding"/>
    <property type="evidence" value="ECO:0000353"/>
    <property type="project" value="ParkinsonsUK-UCL"/>
</dbReference>
<dbReference type="GO" id="GO:0070842">
    <property type="term" value="P:aggresome assembly"/>
    <property type="evidence" value="ECO:0007669"/>
    <property type="project" value="Ensembl"/>
</dbReference>
<dbReference type="GO" id="GO:0046034">
    <property type="term" value="P:ATP metabolic process"/>
    <property type="evidence" value="ECO:0007669"/>
    <property type="project" value="Ensembl"/>
</dbReference>
<dbReference type="GO" id="GO:0097352">
    <property type="term" value="P:autophagosome maturation"/>
    <property type="evidence" value="ECO:0000315"/>
    <property type="project" value="UniProtKB"/>
</dbReference>
<dbReference type="GO" id="GO:0006914">
    <property type="term" value="P:autophagy"/>
    <property type="evidence" value="ECO:0000315"/>
    <property type="project" value="UniProtKB"/>
</dbReference>
<dbReference type="GO" id="GO:1903843">
    <property type="term" value="P:cellular response to arsenite ion"/>
    <property type="evidence" value="ECO:0000315"/>
    <property type="project" value="UniProtKB"/>
</dbReference>
<dbReference type="GO" id="GO:0034605">
    <property type="term" value="P:cellular response to heat"/>
    <property type="evidence" value="ECO:0000315"/>
    <property type="project" value="UniProtKB"/>
</dbReference>
<dbReference type="GO" id="GO:0071218">
    <property type="term" value="P:cellular response to misfolded protein"/>
    <property type="evidence" value="ECO:0000315"/>
    <property type="project" value="ParkinsonsUK-UCL"/>
</dbReference>
<dbReference type="GO" id="GO:0140455">
    <property type="term" value="P:cytoplasm protein quality control"/>
    <property type="evidence" value="ECO:0000314"/>
    <property type="project" value="UniProt"/>
</dbReference>
<dbReference type="GO" id="GO:0006974">
    <property type="term" value="P:DNA damage response"/>
    <property type="evidence" value="ECO:0000314"/>
    <property type="project" value="UniProtKB"/>
</dbReference>
<dbReference type="GO" id="GO:0006281">
    <property type="term" value="P:DNA repair"/>
    <property type="evidence" value="ECO:0000303"/>
    <property type="project" value="UniProtKB"/>
</dbReference>
<dbReference type="GO" id="GO:0006302">
    <property type="term" value="P:double-strand break repair"/>
    <property type="evidence" value="ECO:0000314"/>
    <property type="project" value="UniProtKB"/>
</dbReference>
<dbReference type="GO" id="GO:0061857">
    <property type="term" value="P:endoplasmic reticulum stress-induced pre-emptive quality control"/>
    <property type="evidence" value="ECO:0000315"/>
    <property type="project" value="UniProtKB"/>
</dbReference>
<dbReference type="GO" id="GO:0006888">
    <property type="term" value="P:endoplasmic reticulum to Golgi vesicle-mediated transport"/>
    <property type="evidence" value="ECO:0007669"/>
    <property type="project" value="Ensembl"/>
</dbReference>
<dbReference type="GO" id="GO:0030968">
    <property type="term" value="P:endoplasmic reticulum unfolded protein response"/>
    <property type="evidence" value="ECO:0000304"/>
    <property type="project" value="UniProtKB"/>
</dbReference>
<dbReference type="GO" id="GO:0032510">
    <property type="term" value="P:endosome to lysosome transport via multivesicular body sorting pathway"/>
    <property type="evidence" value="ECO:0000315"/>
    <property type="project" value="UniProtKB"/>
</dbReference>
<dbReference type="GO" id="GO:0036503">
    <property type="term" value="P:ERAD pathway"/>
    <property type="evidence" value="ECO:0000314"/>
    <property type="project" value="UniProtKB"/>
</dbReference>
<dbReference type="GO" id="GO:0045184">
    <property type="term" value="P:establishment of protein localization"/>
    <property type="evidence" value="ECO:0000304"/>
    <property type="project" value="UniProtKB"/>
</dbReference>
<dbReference type="GO" id="GO:0072389">
    <property type="term" value="P:flavin adenine dinucleotide catabolic process"/>
    <property type="evidence" value="ECO:0000315"/>
    <property type="project" value="ParkinsonsUK-UCL"/>
</dbReference>
<dbReference type="GO" id="GO:0036297">
    <property type="term" value="P:interstrand cross-link repair"/>
    <property type="evidence" value="ECO:0000250"/>
    <property type="project" value="UniProtKB"/>
</dbReference>
<dbReference type="GO" id="GO:0016236">
    <property type="term" value="P:macroautophagy"/>
    <property type="evidence" value="ECO:0000315"/>
    <property type="project" value="UniProtKB"/>
</dbReference>
<dbReference type="GO" id="GO:0051228">
    <property type="term" value="P:mitotic spindle disassembly"/>
    <property type="evidence" value="ECO:0000318"/>
    <property type="project" value="GO_Central"/>
</dbReference>
<dbReference type="GO" id="GO:0006734">
    <property type="term" value="P:NADH metabolic process"/>
    <property type="evidence" value="ECO:0000315"/>
    <property type="project" value="ParkinsonsUK-UCL"/>
</dbReference>
<dbReference type="GO" id="GO:0035331">
    <property type="term" value="P:negative regulation of hippo signaling"/>
    <property type="evidence" value="ECO:0000316"/>
    <property type="project" value="FlyBase"/>
</dbReference>
<dbReference type="GO" id="GO:0120186">
    <property type="term" value="P:negative regulation of protein localization to chromatin"/>
    <property type="evidence" value="ECO:0000314"/>
    <property type="project" value="UniProt"/>
</dbReference>
<dbReference type="GO" id="GO:0045879">
    <property type="term" value="P:negative regulation of smoothened signaling pathway"/>
    <property type="evidence" value="ECO:0000315"/>
    <property type="project" value="FlyBase"/>
</dbReference>
<dbReference type="GO" id="GO:2001171">
    <property type="term" value="P:positive regulation of ATP biosynthetic process"/>
    <property type="evidence" value="ECO:0000315"/>
    <property type="project" value="ParkinsonsUK-UCL"/>
</dbReference>
<dbReference type="GO" id="GO:0090263">
    <property type="term" value="P:positive regulation of canonical Wnt signaling pathway"/>
    <property type="evidence" value="ECO:0000314"/>
    <property type="project" value="FlyBase"/>
</dbReference>
<dbReference type="GO" id="GO:1903007">
    <property type="term" value="P:positive regulation of Lys63-specific deubiquitinase activity"/>
    <property type="evidence" value="ECO:0000314"/>
    <property type="project" value="ParkinsonsUK-UCL"/>
</dbReference>
<dbReference type="GO" id="GO:0010918">
    <property type="term" value="P:positive regulation of mitochondrial membrane potential"/>
    <property type="evidence" value="ECO:0000315"/>
    <property type="project" value="ParkinsonsUK-UCL"/>
</dbReference>
<dbReference type="GO" id="GO:1901224">
    <property type="term" value="P:positive regulation of non-canonical NF-kappaB signal transduction"/>
    <property type="evidence" value="ECO:0000314"/>
    <property type="project" value="UniProt"/>
</dbReference>
<dbReference type="GO" id="GO:1903862">
    <property type="term" value="P:positive regulation of oxidative phosphorylation"/>
    <property type="evidence" value="ECO:0000315"/>
    <property type="project" value="ParkinsonsUK-UCL"/>
</dbReference>
<dbReference type="GO" id="GO:0032436">
    <property type="term" value="P:positive regulation of proteasomal ubiquitin-dependent protein catabolic process"/>
    <property type="evidence" value="ECO:0000314"/>
    <property type="project" value="BHF-UCL"/>
</dbReference>
<dbReference type="GO" id="GO:0045732">
    <property type="term" value="P:positive regulation of protein catabolic process"/>
    <property type="evidence" value="ECO:0000314"/>
    <property type="project" value="BHF-UCL"/>
</dbReference>
<dbReference type="GO" id="GO:1903006">
    <property type="term" value="P:positive regulation of protein K63-linked deubiquitination"/>
    <property type="evidence" value="ECO:0000314"/>
    <property type="project" value="ParkinsonsUK-UCL"/>
</dbReference>
<dbReference type="GO" id="GO:0031334">
    <property type="term" value="P:positive regulation of protein-containing complex assembly"/>
    <property type="evidence" value="ECO:0000314"/>
    <property type="project" value="BHF-UCL"/>
</dbReference>
<dbReference type="GO" id="GO:0010498">
    <property type="term" value="P:proteasomal protein catabolic process"/>
    <property type="evidence" value="ECO:0000315"/>
    <property type="project" value="UniProtKB"/>
</dbReference>
<dbReference type="GO" id="GO:0043161">
    <property type="term" value="P:proteasome-mediated ubiquitin-dependent protein catabolic process"/>
    <property type="evidence" value="ECO:0000314"/>
    <property type="project" value="UniProt"/>
</dbReference>
<dbReference type="GO" id="GO:0016567">
    <property type="term" value="P:protein ubiquitination"/>
    <property type="evidence" value="ECO:0000314"/>
    <property type="project" value="UniProtKB"/>
</dbReference>
<dbReference type="GO" id="GO:0106300">
    <property type="term" value="P:protein-DNA covalent cross-linking repair"/>
    <property type="evidence" value="ECO:0000314"/>
    <property type="project" value="UniProtKB"/>
</dbReference>
<dbReference type="GO" id="GO:1903715">
    <property type="term" value="P:regulation of aerobic respiration"/>
    <property type="evidence" value="ECO:0000315"/>
    <property type="project" value="ParkinsonsUK-UCL"/>
</dbReference>
<dbReference type="GO" id="GO:0042981">
    <property type="term" value="P:regulation of apoptotic process"/>
    <property type="evidence" value="ECO:0000304"/>
    <property type="project" value="UniProtKB"/>
</dbReference>
<dbReference type="GO" id="GO:1905634">
    <property type="term" value="P:regulation of protein localization to chromatin"/>
    <property type="evidence" value="ECO:0000314"/>
    <property type="project" value="UniProtKB"/>
</dbReference>
<dbReference type="GO" id="GO:0050807">
    <property type="term" value="P:regulation of synapse organization"/>
    <property type="evidence" value="ECO:0007669"/>
    <property type="project" value="Ensembl"/>
</dbReference>
<dbReference type="GO" id="GO:0030970">
    <property type="term" value="P:retrograde protein transport, ER to cytosol"/>
    <property type="evidence" value="ECO:0000314"/>
    <property type="project" value="UniProtKB"/>
</dbReference>
<dbReference type="GO" id="GO:0035617">
    <property type="term" value="P:stress granule disassembly"/>
    <property type="evidence" value="ECO:0000314"/>
    <property type="project" value="UniProtKB"/>
</dbReference>
<dbReference type="GO" id="GO:0019985">
    <property type="term" value="P:translesion synthesis"/>
    <property type="evidence" value="ECO:0000315"/>
    <property type="project" value="UniProtKB"/>
</dbReference>
<dbReference type="GO" id="GO:0006511">
    <property type="term" value="P:ubiquitin-dependent protein catabolic process"/>
    <property type="evidence" value="ECO:0000303"/>
    <property type="project" value="ComplexPortal"/>
</dbReference>
<dbReference type="GO" id="GO:0019079">
    <property type="term" value="P:viral genome replication"/>
    <property type="evidence" value="ECO:0000315"/>
    <property type="project" value="CACAO"/>
</dbReference>
<dbReference type="CDD" id="cd19519">
    <property type="entry name" value="RecA-like_CDC48_r1-like"/>
    <property type="match status" value="1"/>
</dbReference>
<dbReference type="CDD" id="cd19528">
    <property type="entry name" value="RecA-like_CDC48_r2-like"/>
    <property type="match status" value="1"/>
</dbReference>
<dbReference type="FunFam" id="1.10.8.60:FF:000004">
    <property type="entry name" value="Cell division control 48"/>
    <property type="match status" value="1"/>
</dbReference>
<dbReference type="FunFam" id="3.10.330.10:FF:000001">
    <property type="entry name" value="Cell division control 48"/>
    <property type="match status" value="1"/>
</dbReference>
<dbReference type="FunFam" id="2.40.40.20:FF:000003">
    <property type="entry name" value="Transitional endoplasmic reticulum ATPase"/>
    <property type="match status" value="1"/>
</dbReference>
<dbReference type="FunFam" id="3.40.50.300:FF:000012">
    <property type="entry name" value="Transitional endoplasmic reticulum ATPase"/>
    <property type="match status" value="1"/>
</dbReference>
<dbReference type="FunFam" id="3.40.50.300:FF:000048">
    <property type="entry name" value="Transitional endoplasmic reticulum ATPase"/>
    <property type="match status" value="1"/>
</dbReference>
<dbReference type="Gene3D" id="1.10.8.60">
    <property type="match status" value="1"/>
</dbReference>
<dbReference type="Gene3D" id="2.40.40.20">
    <property type="match status" value="1"/>
</dbReference>
<dbReference type="Gene3D" id="3.10.330.10">
    <property type="match status" value="1"/>
</dbReference>
<dbReference type="Gene3D" id="6.10.20.150">
    <property type="match status" value="1"/>
</dbReference>
<dbReference type="Gene3D" id="3.40.50.300">
    <property type="entry name" value="P-loop containing nucleotide triphosphate hydrolases"/>
    <property type="match status" value="2"/>
</dbReference>
<dbReference type="IDEAL" id="IID00201"/>
<dbReference type="InterPro" id="IPR003593">
    <property type="entry name" value="AAA+_ATPase"/>
</dbReference>
<dbReference type="InterPro" id="IPR005938">
    <property type="entry name" value="AAA_ATPase_CDC48"/>
</dbReference>
<dbReference type="InterPro" id="IPR050168">
    <property type="entry name" value="AAA_ATPase_domain"/>
</dbReference>
<dbReference type="InterPro" id="IPR041569">
    <property type="entry name" value="AAA_lid_3"/>
</dbReference>
<dbReference type="InterPro" id="IPR009010">
    <property type="entry name" value="Asp_de-COase-like_dom_sf"/>
</dbReference>
<dbReference type="InterPro" id="IPR003959">
    <property type="entry name" value="ATPase_AAA_core"/>
</dbReference>
<dbReference type="InterPro" id="IPR003960">
    <property type="entry name" value="ATPase_AAA_CS"/>
</dbReference>
<dbReference type="InterPro" id="IPR004201">
    <property type="entry name" value="Cdc48_dom2"/>
</dbReference>
<dbReference type="InterPro" id="IPR029067">
    <property type="entry name" value="CDC48_domain_2-like_sf"/>
</dbReference>
<dbReference type="InterPro" id="IPR003338">
    <property type="entry name" value="CDC4_N-term_subdom"/>
</dbReference>
<dbReference type="InterPro" id="IPR027417">
    <property type="entry name" value="P-loop_NTPase"/>
</dbReference>
<dbReference type="NCBIfam" id="TIGR01243">
    <property type="entry name" value="CDC48"/>
    <property type="match status" value="1"/>
</dbReference>
<dbReference type="PANTHER" id="PTHR23077">
    <property type="entry name" value="AAA-FAMILY ATPASE"/>
    <property type="match status" value="1"/>
</dbReference>
<dbReference type="PANTHER" id="PTHR23077:SF69">
    <property type="entry name" value="TRANSITIONAL ENDOPLASMIC RETICULUM ATPASE"/>
    <property type="match status" value="1"/>
</dbReference>
<dbReference type="Pfam" id="PF00004">
    <property type="entry name" value="AAA"/>
    <property type="match status" value="2"/>
</dbReference>
<dbReference type="Pfam" id="PF17862">
    <property type="entry name" value="AAA_lid_3"/>
    <property type="match status" value="2"/>
</dbReference>
<dbReference type="Pfam" id="PF02933">
    <property type="entry name" value="CDC48_2"/>
    <property type="match status" value="1"/>
</dbReference>
<dbReference type="Pfam" id="PF02359">
    <property type="entry name" value="CDC48_N"/>
    <property type="match status" value="1"/>
</dbReference>
<dbReference type="SMART" id="SM00382">
    <property type="entry name" value="AAA"/>
    <property type="match status" value="2"/>
</dbReference>
<dbReference type="SMART" id="SM01072">
    <property type="entry name" value="CDC48_2"/>
    <property type="match status" value="1"/>
</dbReference>
<dbReference type="SMART" id="SM01073">
    <property type="entry name" value="CDC48_N"/>
    <property type="match status" value="1"/>
</dbReference>
<dbReference type="SUPFAM" id="SSF50692">
    <property type="entry name" value="ADC-like"/>
    <property type="match status" value="1"/>
</dbReference>
<dbReference type="SUPFAM" id="SSF54585">
    <property type="entry name" value="Cdc48 domain 2-like"/>
    <property type="match status" value="1"/>
</dbReference>
<dbReference type="SUPFAM" id="SSF52540">
    <property type="entry name" value="P-loop containing nucleoside triphosphate hydrolases"/>
    <property type="match status" value="2"/>
</dbReference>
<dbReference type="PROSITE" id="PS00674">
    <property type="entry name" value="AAA"/>
    <property type="match status" value="2"/>
</dbReference>
<proteinExistence type="evidence at protein level"/>
<feature type="initiator methionine" description="Removed" evidence="5 76 85 86 88 89 91">
    <location>
        <position position="1"/>
    </location>
</feature>
<feature type="chain" id="PRO_0000084572" description="Transitional endoplasmic reticulum ATPase">
    <location>
        <begin position="2"/>
        <end position="806"/>
    </location>
</feature>
<feature type="region of interest" description="Disordered" evidence="4">
    <location>
        <begin position="708"/>
        <end position="727"/>
    </location>
</feature>
<feature type="region of interest" description="Disordered" evidence="4">
    <location>
        <begin position="768"/>
        <end position="806"/>
    </location>
</feature>
<feature type="region of interest" description="Interaction with UBXN6" evidence="25">
    <location>
        <begin position="797"/>
        <end position="806"/>
    </location>
</feature>
<feature type="short sequence motif" description="PIM motif" evidence="54">
    <location>
        <begin position="802"/>
        <end position="806"/>
    </location>
</feature>
<feature type="compositionally biased region" description="Gly residues" evidence="4">
    <location>
        <begin position="777"/>
        <end position="793"/>
    </location>
</feature>
<feature type="binding site" evidence="34">
    <location>
        <begin position="247"/>
        <end position="253"/>
    </location>
    <ligand>
        <name>ATP</name>
        <dbReference type="ChEBI" id="CHEBI:30616"/>
        <label>1</label>
    </ligand>
</feature>
<feature type="binding site" evidence="34">
    <location>
        <position position="348"/>
    </location>
    <ligand>
        <name>ATP</name>
        <dbReference type="ChEBI" id="CHEBI:30616"/>
        <label>1</label>
    </ligand>
</feature>
<feature type="binding site" evidence="34">
    <location>
        <position position="384"/>
    </location>
    <ligand>
        <name>ATP</name>
        <dbReference type="ChEBI" id="CHEBI:30616"/>
        <label>1</label>
    </ligand>
</feature>
<feature type="binding site" evidence="3">
    <location>
        <begin position="521"/>
        <end position="526"/>
    </location>
    <ligand>
        <name>ATP</name>
        <dbReference type="ChEBI" id="CHEBI:30616"/>
        <label>2</label>
    </ligand>
</feature>
<feature type="modified residue" description="N-acetylalanine" evidence="76 85 86 88 89 91">
    <location>
        <position position="2"/>
    </location>
</feature>
<feature type="modified residue" description="Phosphoserine" evidence="84 85 88 90">
    <location>
        <position position="3"/>
    </location>
</feature>
<feature type="modified residue" description="Phosphoserine" evidence="90">
    <location>
        <position position="7"/>
    </location>
</feature>
<feature type="modified residue" description="Phosphoserine" evidence="90">
    <location>
        <position position="13"/>
    </location>
</feature>
<feature type="modified residue" description="Phosphoserine" evidence="85">
    <location>
        <position position="37"/>
    </location>
</feature>
<feature type="modified residue" description="N6,N6,N6-trimethyllysine; by VCPKMT" evidence="48 52">
    <location>
        <position position="315"/>
    </location>
</feature>
<feature type="modified residue" description="Phosphothreonine" evidence="84">
    <location>
        <position position="436"/>
    </location>
</feature>
<feature type="modified residue" description="Phosphoserine" evidence="90">
    <location>
        <position position="462"/>
    </location>
</feature>
<feature type="modified residue" description="N6-acetyllysine" evidence="3">
    <location>
        <position position="502"/>
    </location>
</feature>
<feature type="modified residue" description="N6-acetyllysine" evidence="3">
    <location>
        <position position="505"/>
    </location>
</feature>
<feature type="modified residue" description="N6-acetyllysine; alternate" evidence="3">
    <location>
        <position position="668"/>
    </location>
</feature>
<feature type="modified residue" description="N6-succinyllysine; alternate" evidence="3">
    <location>
        <position position="668"/>
    </location>
</feature>
<feature type="modified residue" description="Phosphoserine" evidence="90">
    <location>
        <position position="702"/>
    </location>
</feature>
<feature type="modified residue" description="N6-acetyllysine" evidence="3">
    <location>
        <position position="754"/>
    </location>
</feature>
<feature type="modified residue" description="Phosphoserine" evidence="87">
    <location>
        <position position="770"/>
    </location>
</feature>
<feature type="modified residue" description="Phosphoserine" evidence="87">
    <location>
        <position position="775"/>
    </location>
</feature>
<feature type="modified residue" description="Phosphoserine" evidence="84">
    <location>
        <position position="787"/>
    </location>
</feature>
<feature type="modified residue" description="Phosphotyrosine" evidence="3">
    <location>
        <position position="805"/>
    </location>
</feature>
<feature type="cross-link" description="Glycyl lysine isopeptide (Lys-Gly) (interchain with G-Cter in SUMO2)" evidence="92">
    <location>
        <position position="8"/>
    </location>
</feature>
<feature type="cross-link" description="Glycyl lysine isopeptide (Lys-Gly) (interchain with G-Cter in SUMO2)" evidence="92">
    <location>
        <position position="18"/>
    </location>
</feature>
<feature type="sequence variant" id="VAR_033016" description="In IBMPFD1; cultured cells expressing the mutant protein show a marked general increase in the level of ubiquitin-conjugated proteins and impaired protein degradation through the endoplasmic reticulum-associated degradation (ERAD) pathway; shows strongly reduced affinity for ADP and increased affinity for ATP; abolishes enhancement of K-315 methylation by ASPSCR1; decreased interaction with CAV1 and UBXN6; dbSNP:rs121909332." evidence="6 17 34 39">
    <original>R</original>
    <variation>G</variation>
    <location>
        <position position="95"/>
    </location>
</feature>
<feature type="sequence variant" id="VAR_076464" description="In CMT2Y; increased ATPase activity; dbSNP:rs864309502." evidence="56">
    <original>G</original>
    <variation>E</variation>
    <location>
        <position position="97"/>
    </location>
</feature>
<feature type="sequence variant" id="VAR_076465" description="In IBMPFD1; uncertain significance." evidence="64">
    <original>I</original>
    <variation>F</variation>
    <location>
        <position position="126"/>
    </location>
</feature>
<feature type="sequence variant" id="VAR_033017" description="In IBMPFD1; also in one patient without evidence of Paget disease of the bone; dbSNP:rs121909330." evidence="6 10">
    <original>R</original>
    <variation>C</variation>
    <location>
        <position position="155"/>
    </location>
</feature>
<feature type="sequence variant" id="VAR_033018" description="In FTDALS6 and IBMPFD1; properly assembles into a hexameric structure; cultured cells expressing the mutant protein show a marked general increase in the level of ubiquitin-conjugated proteins and impaired protein degradation through the endoplasmic reticulum-associated degradation (ERAD) pathway; shows strongly reduced affinity for ADP and increased affinity for ATP; shows normal ATPase activity according to PubMed:16321991 while according to PubMed:25878907 and PubMed:25125609 shows increased ATPase activity; no defect in ubiquitin-dependent protein degradation by the proteasome; impaired autophagic function; defective maturation of ubiquitin-containing autophagosomes; decreased interaction with CAV1 and UBXN6; decreased endosome to lysosome transport via multivesicular body sorting pathway of CAV1; decreases the arsenite-induced stress granules (SGs) clearance process; dbSNP:rs121909329." evidence="6 17 32 34 37 39 52 55 56 66 68">
    <original>R</original>
    <variation>H</variation>
    <location>
        <position position="155"/>
    </location>
</feature>
<feature type="sequence variant" id="VAR_078910" description="In IBMPFD1; dbSNP:rs121909329." evidence="33">
    <original>R</original>
    <variation>L</variation>
    <location>
        <position position="155"/>
    </location>
</feature>
<feature type="sequence variant" id="VAR_033019" description="In IBMPFD1; dbSNP:rs121909329." evidence="6">
    <original>R</original>
    <variation>P</variation>
    <location>
        <position position="155"/>
    </location>
</feature>
<feature type="sequence variant" id="VAR_076466" description="In IBMPFD1; impaired autophagic function; dbSNP:rs121909330." evidence="32">
    <original>R</original>
    <variation>S</variation>
    <location>
        <position position="155"/>
    </location>
</feature>
<feature type="sequence variant" id="VAR_065910" description="In FTDALS6; dbSNP:rs387906789." evidence="37 52">
    <original>R</original>
    <variation>G</variation>
    <location>
        <position position="159"/>
    </location>
</feature>
<feature type="sequence variant" id="VAR_033020" description="In IBMPFD1; without frontotemporal dementia; abolishes enhancement of K-315 methylation by ASPSCR1; dbSNP:rs121909335." evidence="15">
    <original>R</original>
    <variation>H</variation>
    <location>
        <position position="159"/>
    </location>
</feature>
<feature type="sequence variant" id="VAR_088265" description="In IBMPFD1; uncertain significance." evidence="74">
    <original>A</original>
    <variation>T</variation>
    <location>
        <position position="160"/>
    </location>
</feature>
<feature type="sequence variant" id="VAR_076467" description="In CMT2Y; normal ATPase activity; impaired autophagic function; dbSNP:rs864309501." evidence="55">
    <original>E</original>
    <variation>K</variation>
    <location>
        <position position="185"/>
    </location>
</feature>
<feature type="sequence variant" id="VAR_033021" description="In FTDALS6 and IBMPFD1; abolishes enhancement of K-315 methylation by ASPSCR1; dbSNP:rs121909334." evidence="6 37 52">
    <original>R</original>
    <variation>Q</variation>
    <location>
        <position position="191"/>
    </location>
</feature>
<feature type="sequence variant" id="VAR_076468" description="In IBMPFD1; increased ATPase activity; impaired autophagic function; dbSNP:rs748447593." evidence="23 33 56 66">
    <original>L</original>
    <variation>W</variation>
    <location>
        <position position="198"/>
    </location>
</feature>
<feature type="sequence variant" id="VAR_033022" description="In IBMPFD1; increased ATPase activity; no defect in ubiquitin-dependent protein degradation by the proteasome; impaired autophagic function; defect in maturation of ubiquitin-containing autophagosomes; decreased interaction with CAV1 and UBXN6; dbSNP:rs121909331." evidence="6 32 39 55 56 66">
    <original>A</original>
    <variation>E</variation>
    <location>
        <position position="232"/>
    </location>
</feature>
<feature type="sequence variant" id="VAR_088266" description="In IBMPFD1; uncertain significance." evidence="74">
    <original>I</original>
    <variation>F</variation>
    <location>
        <position position="254"/>
    </location>
</feature>
<feature type="sequence variant" id="VAR_088267" description="In IBMPFD1; uncertain significance; dbSNP:rs1828723406." evidence="74">
    <original>I</original>
    <variation>T</variation>
    <location>
        <position position="369"/>
    </location>
</feature>
<feature type="sequence variant" id="VAR_078911" description="In IBMPFD1; uncertain significance; dbSNP:rs1554668420." evidence="23">
    <original>N</original>
    <variation>H</variation>
    <location>
        <position position="387"/>
    </location>
</feature>
<feature type="sequence variant" id="VAR_065911" description="In FTDALS6; dbSNP:rs387906790." evidence="37">
    <original>D</original>
    <variation>N</variation>
    <location>
        <position position="592"/>
    </location>
</feature>
<feature type="mutagenesis site" description="Abolishes interaction with NPLOC4; when associated with A-110." evidence="60">
    <original>FRGD</original>
    <variation>ARGA</variation>
    <location>
        <begin position="52"/>
        <end position="55"/>
    </location>
</feature>
<feature type="mutagenesis site" description="Minor effect on affinity for ATP and ADP." evidence="34">
    <original>R</original>
    <variation>A</variation>
    <location>
        <position position="53"/>
    </location>
</feature>
<feature type="mutagenesis site" description="Strongly increased affinity for ATP. Strongly reduced affinity for ADP." evidence="34">
    <original>R</original>
    <variation>A</variation>
    <location>
        <position position="86"/>
    </location>
</feature>
<feature type="mutagenesis site" description="Abolishes interaction with NPLOC4; when associated with 52-A--A-55." evidence="60">
    <original>Y</original>
    <variation>A</variation>
    <location>
        <position position="110"/>
    </location>
</feature>
<feature type="mutagenesis site" description="Severely reduced binding to DERL1." evidence="65">
    <original>RIH</original>
    <variation>TIT</variation>
    <location>
        <begin position="113"/>
        <end position="115"/>
    </location>
</feature>
<feature type="mutagenesis site" description="Severely reduced binding to DERL1." evidence="65">
    <original>F</original>
    <variation>R</variation>
    <location>
        <position position="131"/>
    </location>
</feature>
<feature type="mutagenesis site" description="Severely reduced binding to DERL1." evidence="65">
    <original>L</original>
    <variation>D</variation>
    <location>
        <position position="140"/>
    </location>
</feature>
<feature type="mutagenesis site" description="No effect on binding to DERL1." evidence="65">
    <original>D</original>
    <variation>R</variation>
    <location>
        <position position="179"/>
    </location>
</feature>
<feature type="mutagenesis site" description="Severely reduced binding to DERL1." evidence="65">
    <original>H</original>
    <variation>W</variation>
    <location>
        <position position="183"/>
    </location>
</feature>
<feature type="mutagenesis site" description="Impairs ERAD degradation of HMGCR and does not inhibit interaction with RHBDD1; when associated with Q-524." evidence="12 46">
    <original>K</original>
    <variation>Q</variation>
    <location>
        <position position="251"/>
    </location>
</feature>
<feature type="mutagenesis site" description="Defect in ubiquitin-dependent protein degradation by the proteasome; when associated with Q-578." evidence="32 60">
    <original>E</original>
    <variation>Q</variation>
    <location>
        <position position="305"/>
    </location>
</feature>
<feature type="mutagenesis site" description="Does not affect methylation by VCPKMT." evidence="48">
    <original>K</original>
    <variation>A</variation>
    <location>
        <position position="312"/>
    </location>
</feature>
<feature type="mutagenesis site" description="Does not affect methylation by VCPKMT." evidence="48">
    <original>R</original>
    <variation>A</variation>
    <location>
        <position position="313"/>
    </location>
</feature>
<feature type="mutagenesis site" description="Does not affect methylation by VCPKMT." evidence="48">
    <original>E</original>
    <variation>A</variation>
    <location>
        <position position="314"/>
    </location>
</feature>
<feature type="mutagenesis site" description="Strongly impairs methylation by VCPKMT." evidence="48">
    <location>
        <position position="314"/>
    </location>
</feature>
<feature type="mutagenesis site" description="Abolishes methylation by VCPKMT." evidence="48 52">
    <original>K</original>
    <variation>L</variation>
    <variation>Q</variation>
    <variation>R</variation>
    <location>
        <position position="315"/>
    </location>
</feature>
<feature type="mutagenesis site" description="Does not affect methylation by VCPKMT." evidence="48">
    <original>T</original>
    <variation>A</variation>
    <location>
        <position position="316"/>
    </location>
</feature>
<feature type="mutagenesis site" description="Does not affect methylation by VCPKMT." evidence="48">
    <original>H</original>
    <variation>A</variation>
    <location>
        <position position="317"/>
    </location>
</feature>
<feature type="mutagenesis site" description="Does not affect methylation by VCPKMT." evidence="48">
    <original>G</original>
    <variation>A</variation>
    <location>
        <position position="318"/>
    </location>
</feature>
<feature type="mutagenesis site" description="Impairs catalytic activity of RNF19A toward SOD1 mutant. Does not inhibit interaction with RHBDD1; when associated with A-251." evidence="9 12 46">
    <original>K</original>
    <variation>A</variation>
    <location>
        <position position="524"/>
    </location>
</feature>
<feature type="mutagenesis site" description="Impairs ERAD degradation of HMGCR; when associated with Q-251." evidence="9 12 46">
    <original>K</original>
    <variation>Q</variation>
    <location>
        <position position="524"/>
    </location>
</feature>
<feature type="mutagenesis site" description="Does not inhibit interaction with RHBDD1. Increased interaction with CAV1 and UBXN6. Impaired autophagic function. Defect in ubiquitin-dependent protein degradation by the proteasome; when associated with Q-305. Increases interaction with ZFAND1 in an arsenite-dependent manner." evidence="32 39 46 60 68">
    <original>E</original>
    <variation>Q</variation>
    <location>
        <position position="578"/>
    </location>
</feature>
<feature type="sequence conflict" description="In Ref. 7; AAI21795." evidence="77" ref="7">
    <original>D</original>
    <variation>H</variation>
    <location>
        <position position="169"/>
    </location>
</feature>
<feature type="sequence conflict" description="In Ref. 4; BAG35235." evidence="77" ref="4">
    <original>K</original>
    <variation>I</variation>
    <location>
        <position position="312"/>
    </location>
</feature>
<feature type="helix" evidence="108">
    <location>
        <begin position="15"/>
        <end position="17"/>
    </location>
</feature>
<feature type="turn" evidence="106">
    <location>
        <begin position="21"/>
        <end position="23"/>
    </location>
</feature>
<feature type="strand" evidence="98">
    <location>
        <begin position="25"/>
        <end position="29"/>
    </location>
</feature>
<feature type="strand" evidence="116">
    <location>
        <begin position="32"/>
        <end position="37"/>
    </location>
</feature>
<feature type="strand" evidence="98">
    <location>
        <begin position="38"/>
        <end position="41"/>
    </location>
</feature>
<feature type="helix" evidence="98">
    <location>
        <begin position="43"/>
        <end position="48"/>
    </location>
</feature>
<feature type="strand" evidence="102">
    <location>
        <begin position="53"/>
        <end position="55"/>
    </location>
</feature>
<feature type="strand" evidence="98">
    <location>
        <begin position="56"/>
        <end position="60"/>
    </location>
</feature>
<feature type="helix" evidence="94">
    <location>
        <begin position="62"/>
        <end position="64"/>
    </location>
</feature>
<feature type="strand" evidence="98">
    <location>
        <begin position="66"/>
        <end position="73"/>
    </location>
</feature>
<feature type="strand" evidence="114">
    <location>
        <begin position="75"/>
        <end position="77"/>
    </location>
</feature>
<feature type="strand" evidence="98">
    <location>
        <begin position="81"/>
        <end position="83"/>
    </location>
</feature>
<feature type="helix" evidence="98">
    <location>
        <begin position="86"/>
        <end position="92"/>
    </location>
</feature>
<feature type="strand" evidence="116">
    <location>
        <begin position="94"/>
        <end position="97"/>
    </location>
</feature>
<feature type="strand" evidence="98">
    <location>
        <begin position="99"/>
        <end position="104"/>
    </location>
</feature>
<feature type="strand" evidence="98">
    <location>
        <begin position="112"/>
        <end position="119"/>
    </location>
</feature>
<feature type="helix" evidence="98">
    <location>
        <begin position="120"/>
        <end position="123"/>
    </location>
</feature>
<feature type="strand" evidence="103">
    <location>
        <begin position="126"/>
        <end position="128"/>
    </location>
</feature>
<feature type="helix" evidence="98">
    <location>
        <begin position="130"/>
        <end position="133"/>
    </location>
</feature>
<feature type="helix" evidence="98">
    <location>
        <begin position="135"/>
        <end position="139"/>
    </location>
</feature>
<feature type="turn" evidence="98">
    <location>
        <begin position="140"/>
        <end position="142"/>
    </location>
</feature>
<feature type="strand" evidence="98">
    <location>
        <begin position="144"/>
        <end position="147"/>
    </location>
</feature>
<feature type="strand" evidence="98">
    <location>
        <begin position="151"/>
        <end position="154"/>
    </location>
</feature>
<feature type="strand" evidence="95">
    <location>
        <begin position="157"/>
        <end position="159"/>
    </location>
</feature>
<feature type="strand" evidence="98">
    <location>
        <begin position="161"/>
        <end position="176"/>
    </location>
</feature>
<feature type="strand" evidence="98">
    <location>
        <begin position="181"/>
        <end position="183"/>
    </location>
</feature>
<feature type="helix" evidence="110">
    <location>
        <begin position="191"/>
        <end position="193"/>
    </location>
</feature>
<feature type="strand" evidence="100">
    <location>
        <begin position="198"/>
        <end position="200"/>
    </location>
</feature>
<feature type="helix" evidence="110">
    <location>
        <begin position="203"/>
        <end position="205"/>
    </location>
</feature>
<feature type="helix" evidence="110">
    <location>
        <begin position="210"/>
        <end position="225"/>
    </location>
</feature>
<feature type="helix" evidence="110">
    <location>
        <begin position="229"/>
        <end position="232"/>
    </location>
</feature>
<feature type="strand" evidence="110">
    <location>
        <begin position="240"/>
        <end position="244"/>
    </location>
</feature>
<feature type="strand" evidence="96">
    <location>
        <begin position="246"/>
        <end position="250"/>
    </location>
</feature>
<feature type="helix" evidence="110">
    <location>
        <begin position="251"/>
        <end position="262"/>
    </location>
</feature>
<feature type="strand" evidence="110">
    <location>
        <begin position="265"/>
        <end position="270"/>
    </location>
</feature>
<feature type="helix" evidence="110">
    <location>
        <begin position="271"/>
        <end position="275"/>
    </location>
</feature>
<feature type="turn" evidence="114">
    <location>
        <begin position="278"/>
        <end position="280"/>
    </location>
</feature>
<feature type="helix" evidence="110">
    <location>
        <begin position="281"/>
        <end position="295"/>
    </location>
</feature>
<feature type="strand" evidence="110">
    <location>
        <begin position="298"/>
        <end position="304"/>
    </location>
</feature>
<feature type="helix" evidence="110">
    <location>
        <begin position="306"/>
        <end position="308"/>
    </location>
</feature>
<feature type="helix" evidence="110">
    <location>
        <begin position="313"/>
        <end position="315"/>
    </location>
</feature>
<feature type="helix" evidence="110">
    <location>
        <begin position="319"/>
        <end position="334"/>
    </location>
</feature>
<feature type="helix" evidence="110">
    <location>
        <begin position="335"/>
        <end position="337"/>
    </location>
</feature>
<feature type="turn" evidence="113">
    <location>
        <begin position="338"/>
        <end position="340"/>
    </location>
</feature>
<feature type="strand" evidence="110">
    <location>
        <begin position="341"/>
        <end position="348"/>
    </location>
</feature>
<feature type="helix" evidence="110">
    <location>
        <begin position="350"/>
        <end position="352"/>
    </location>
</feature>
<feature type="helix" evidence="110">
    <location>
        <begin position="355"/>
        <end position="358"/>
    </location>
</feature>
<feature type="turn" evidence="114">
    <location>
        <begin position="360"/>
        <end position="362"/>
    </location>
</feature>
<feature type="strand" evidence="110">
    <location>
        <begin position="365"/>
        <end position="368"/>
    </location>
</feature>
<feature type="helix" evidence="110">
    <location>
        <begin position="374"/>
        <end position="384"/>
    </location>
</feature>
<feature type="turn" evidence="110">
    <location>
        <begin position="385"/>
        <end position="387"/>
    </location>
</feature>
<feature type="strand" evidence="99">
    <location>
        <begin position="388"/>
        <end position="390"/>
    </location>
</feature>
<feature type="helix" evidence="115">
    <location>
        <begin position="392"/>
        <end position="394"/>
    </location>
</feature>
<feature type="helix" evidence="110">
    <location>
        <begin position="396"/>
        <end position="402"/>
    </location>
</feature>
<feature type="turn" evidence="100">
    <location>
        <begin position="403"/>
        <end position="405"/>
    </location>
</feature>
<feature type="helix" evidence="110">
    <location>
        <begin position="408"/>
        <end position="427"/>
    </location>
</feature>
<feature type="turn" evidence="110">
    <location>
        <begin position="428"/>
        <end position="430"/>
    </location>
</feature>
<feature type="strand" evidence="93">
    <location>
        <begin position="432"/>
        <end position="436"/>
    </location>
</feature>
<feature type="helix" evidence="110">
    <location>
        <begin position="439"/>
        <end position="444"/>
    </location>
</feature>
<feature type="helix" evidence="110">
    <location>
        <begin position="449"/>
        <end position="456"/>
    </location>
</feature>
<feature type="strand" evidence="97">
    <location>
        <begin position="458"/>
        <end position="461"/>
    </location>
</feature>
<feature type="turn" evidence="97">
    <location>
        <begin position="462"/>
        <end position="468"/>
    </location>
</feature>
<feature type="helix" evidence="105">
    <location>
        <begin position="476"/>
        <end position="478"/>
    </location>
</feature>
<feature type="helix" evidence="105">
    <location>
        <begin position="483"/>
        <end position="498"/>
    </location>
</feature>
<feature type="helix" evidence="105">
    <location>
        <begin position="500"/>
        <end position="505"/>
    </location>
</feature>
<feature type="strand" evidence="105">
    <location>
        <begin position="513"/>
        <end position="519"/>
    </location>
</feature>
<feature type="strand" evidence="117">
    <location>
        <begin position="520"/>
        <end position="523"/>
    </location>
</feature>
<feature type="helix" evidence="105">
    <location>
        <begin position="524"/>
        <end position="534"/>
    </location>
</feature>
<feature type="strand" evidence="105">
    <location>
        <begin position="538"/>
        <end position="543"/>
    </location>
</feature>
<feature type="helix" evidence="105">
    <location>
        <begin position="544"/>
        <end position="547"/>
    </location>
</feature>
<feature type="strand" evidence="109">
    <location>
        <begin position="550"/>
        <end position="553"/>
    </location>
</feature>
<feature type="helix" evidence="105">
    <location>
        <begin position="557"/>
        <end position="568"/>
    </location>
</feature>
<feature type="strand" evidence="105">
    <location>
        <begin position="571"/>
        <end position="577"/>
    </location>
</feature>
<feature type="helix" evidence="105">
    <location>
        <begin position="579"/>
        <end position="581"/>
    </location>
</feature>
<feature type="turn" evidence="102">
    <location>
        <begin position="584"/>
        <end position="586"/>
    </location>
</feature>
<feature type="strand" evidence="100">
    <location>
        <begin position="588"/>
        <end position="590"/>
    </location>
</feature>
<feature type="strand" evidence="114">
    <location>
        <begin position="592"/>
        <end position="594"/>
    </location>
</feature>
<feature type="helix" evidence="105">
    <location>
        <begin position="597"/>
        <end position="609"/>
    </location>
</feature>
<feature type="helix" evidence="105">
    <location>
        <begin position="613"/>
        <end position="615"/>
    </location>
</feature>
<feature type="strand" evidence="105">
    <location>
        <begin position="617"/>
        <end position="624"/>
    </location>
</feature>
<feature type="helix" evidence="105">
    <location>
        <begin position="626"/>
        <end position="628"/>
    </location>
</feature>
<feature type="helix" evidence="105">
    <location>
        <begin position="631"/>
        <end position="634"/>
    </location>
</feature>
<feature type="strand" evidence="101">
    <location>
        <begin position="635"/>
        <end position="639"/>
    </location>
</feature>
<feature type="strand" evidence="105">
    <location>
        <begin position="641"/>
        <end position="644"/>
    </location>
</feature>
<feature type="helix" evidence="105">
    <location>
        <begin position="650"/>
        <end position="661"/>
    </location>
</feature>
<feature type="strand" evidence="109">
    <location>
        <begin position="662"/>
        <end position="664"/>
    </location>
</feature>
<feature type="helix" evidence="105">
    <location>
        <begin position="672"/>
        <end position="677"/>
    </location>
</feature>
<feature type="turn" evidence="105">
    <location>
        <begin position="678"/>
        <end position="681"/>
    </location>
</feature>
<feature type="helix" evidence="105">
    <location>
        <begin position="684"/>
        <end position="711"/>
    </location>
</feature>
<feature type="strand" evidence="112">
    <location>
        <begin position="718"/>
        <end position="721"/>
    </location>
</feature>
<feature type="strand" evidence="104">
    <location>
        <begin position="722"/>
        <end position="724"/>
    </location>
</feature>
<feature type="strand" evidence="108">
    <location>
        <begin position="729"/>
        <end position="731"/>
    </location>
</feature>
<feature type="helix" evidence="105">
    <location>
        <begin position="733"/>
        <end position="739"/>
    </location>
</feature>
<feature type="helix" evidence="105">
    <location>
        <begin position="740"/>
        <end position="742"/>
    </location>
</feature>
<feature type="helix" evidence="105">
    <location>
        <begin position="749"/>
        <end position="761"/>
    </location>
</feature>
<feature type="helix" evidence="107">
    <location>
        <begin position="763"/>
        <end position="765"/>
    </location>
</feature>
<feature type="strand" evidence="111">
    <location>
        <begin position="767"/>
        <end position="770"/>
    </location>
</feature>
<gene>
    <name type="primary">VCP</name>
    <name evidence="81" type="synonym">HEL-220</name>
    <name evidence="82" type="synonym">HEL-S-70</name>
</gene>
<name>TERA_HUMAN</name>
<protein>
    <recommendedName>
        <fullName>Transitional endoplasmic reticulum ATPase</fullName>
        <shortName>TER ATPase</shortName>
        <ecNumber evidence="60">3.6.4.6</ecNumber>
    </recommendedName>
    <alternativeName>
        <fullName>15S Mg(2+)-ATPase p97 subunit</fullName>
    </alternativeName>
    <alternativeName>
        <fullName>Valosin-containing protein</fullName>
        <shortName>VCP</shortName>
    </alternativeName>
</protein>
<accession>P55072</accession>
<accession>B2R5T8</accession>
<accession>Q0V924</accession>
<accession>Q2TAI5</accession>
<accession>Q969G7</accession>
<accession>Q9UCD5</accession>
<accession>V9HW80</accession>
<keyword id="KW-0002">3D-structure</keyword>
<keyword id="KW-0007">Acetylation</keyword>
<keyword id="KW-0036">Amyotrophic lateral sclerosis</keyword>
<keyword id="KW-0067">ATP-binding</keyword>
<keyword id="KW-0072">Autophagy</keyword>
<keyword id="KW-0144">Charcot-Marie-Tooth disease</keyword>
<keyword id="KW-0963">Cytoplasm</keyword>
<keyword id="KW-0903">Direct protein sequencing</keyword>
<keyword id="KW-0225">Disease variant</keyword>
<keyword id="KW-0227">DNA damage</keyword>
<keyword id="KW-0234">DNA repair</keyword>
<keyword id="KW-0256">Endoplasmic reticulum</keyword>
<keyword id="KW-0378">Hydrolase</keyword>
<keyword id="KW-1017">Isopeptide bond</keyword>
<keyword id="KW-0446">Lipid-binding</keyword>
<keyword id="KW-0488">Methylation</keyword>
<keyword id="KW-0523">Neurodegeneration</keyword>
<keyword id="KW-0622">Neuropathy</keyword>
<keyword id="KW-0547">Nucleotide-binding</keyword>
<keyword id="KW-0539">Nucleus</keyword>
<keyword id="KW-0597">Phosphoprotein</keyword>
<keyword id="KW-1267">Proteomics identification</keyword>
<keyword id="KW-1185">Reference proteome</keyword>
<keyword id="KW-0813">Transport</keyword>
<keyword id="KW-0832">Ubl conjugation</keyword>
<keyword id="KW-0833">Ubl conjugation pathway</keyword>
<comment type="function">
    <text evidence="1 9 12 14 32 36 39 42 43 45 49 50 51 57 60 61 62 66 68 70 71 72">Necessary for the fragmentation of Golgi stacks during mitosis and for their reassembly after mitosis. Involved in the formation of the transitional endoplasmic reticulum (tER). The transfer of membranes from the endoplasmic reticulum to the Golgi apparatus occurs via 50-70 nm transition vesicles which derive from part-rough, part-smooth transitional elements of the endoplasmic reticulum (tER). Vesicle budding from the tER is an ATP-dependent process. The ternary complex containing UFD1, VCP and NPLOC4 binds ubiquitinated proteins and is necessary for the export of misfolded proteins from the ER to the cytoplasm, where they are degraded by the proteasome. The NPLOC4-UFD1-VCP complex regulates spindle disassembly at the end of mitosis and is necessary for the formation of a closed nuclear envelope. Regulates E3 ubiquitin-protein ligase activity of RNF19A. Component of the VCP/p97-AMFR/gp78 complex that participates in the final step of the sterol-mediated ubiquitination and endoplasmic reticulum-associated degradation (ERAD) of HMGCR. Mediates the endoplasmic reticulum-associated degradation of CHRNA3 in cortical neurons as part of the STUB1-VCP-UBXN2A complex (PubMed:26265139). Involved in endoplasmic reticulum stress-induced pre-emptive quality control, a mechanism that selectively attenuates the translocation of newly synthesized proteins into the endoplasmic reticulum and reroutes them to the cytosol for proteasomal degradation (PubMed:26565908). Involved in clearance process by mediating G3BP1 extraction from stress granules (PubMed:29804830, PubMed:34739333). Also involved in DNA damage response: recruited to double-strand breaks (DSBs) sites in a RNF8- and RNF168-dependent manner and promotes the recruitment of TP53BP1 at DNA damage sites (PubMed:22020440, PubMed:22120668). Recruited to stalled replication forks by SPRTN: may act by mediating extraction of DNA polymerase eta (POLH) to prevent excessive translesion DNA synthesis and limit the incidence of mutations induced by DNA damage (PubMed:23042605, PubMed:23042607). Together with SPRTN metalloprotease, involved in the repair of covalent DNA-protein cross-links (DPCs) during DNA synthesis (PubMed:32152270). Involved in interstrand cross-link repair in response to replication stress by mediating unloading of the ubiquitinated CMG helicase complex (By similarity). Mediates extraction of PARP1 trapped to chromatin: recognizes and binds ubiquitinated PARP1 and promotes its removal (PubMed:35013556). Required for cytoplasmic retrotranslocation of stressed/damaged mitochondrial outer-membrane proteins and their subsequent proteasomal degradation (PubMed:16186510, PubMed:21118995). Essential for the maturation of ubiquitin-containing autophagosomes and the clearance of ubiquitinated protein by autophagy (PubMed:20104022, PubMed:27753622). Acts as a negative regulator of type I interferon production by interacting with RIGI: interaction takes place when RIGI is ubiquitinated via 'Lys-63'-linked ubiquitin on its CARD domains, leading to recruit RNF125 and promote ubiquitination and degradation of RIGI (PubMed:26471729). May play a role in the ubiquitin-dependent sorting of membrane proteins to lysosomes where they undergo degradation (PubMed:21822278). May more particularly play a role in caveolins sorting in cells (PubMed:21822278, PubMed:23335559). By controlling the steady-state expression of the IGF1R receptor, indirectly regulates the insulin-like growth factor receptor signaling pathway (PubMed:26692333).</text>
</comment>
<comment type="catalytic activity">
    <reaction evidence="60">
        <text>ATP + H2O = ADP + phosphate + H(+)</text>
        <dbReference type="Rhea" id="RHEA:13065"/>
        <dbReference type="ChEBI" id="CHEBI:15377"/>
        <dbReference type="ChEBI" id="CHEBI:15378"/>
        <dbReference type="ChEBI" id="CHEBI:30616"/>
        <dbReference type="ChEBI" id="CHEBI:43474"/>
        <dbReference type="ChEBI" id="CHEBI:456216"/>
        <dbReference type="EC" id="3.6.4.6"/>
    </reaction>
</comment>
<comment type="subunit">
    <text evidence="2 3 7 8 9 12 13 14 16 18 19 20 21 22 24 25 26 27 28 29 30 31 34 35 38 39 40 41 43 44 46 47 49 50 53 54 57 58 59 60 63 65 66 67 68 69 70 73 75 80">Homohexamer. Forms a ring-shaped particle of 12.5 nm diameter, that displays 6-fold radial symmetry. Part of a ternary complex containing STX5A, NSFL1C and VCP. NSFL1C forms a homotrimer that binds to one end of a VCP homohexamer. The complex binds to membranes enriched in phosphatidylethanolamine-containing lipids and promotes Golgi membrane fusion. Binds to a heterodimer of NPLOC4 and UFD1, binding to this heterodimer inhibits Golgi-membrane fusion (PubMed:26471729). Interaction with VCIP135 leads to dissociation of the complex via ATP hydrolysis by VCP. Part of a ternary complex containing NPLOC4, UFD1 and VCP. Interacts with NSFL1C-like protein p37; the complex has membrane fusion activity and is required for Golgi and endoplasmic reticulum biogenesis. Interacts with SELENOS and SYVN1, as well as with DERL1 (via SHP-box motif), DERL2 and DERL3; which probably transfer misfolded proteins from the ER to VCP (PubMed:15215856, PubMed:16186509, PubMed:16186510, PubMed:16289116, PubMed:16449189, PubMed:27714797). Interacts with SVIP and forms a complex with SVIP and DERL1 (PubMed:17872946). Component of a complex required to couple retrotranslocation, ubiquitination and deglycosylation composed of NGLY1, SAKS1, AMFR, VCP and RAD23B. Part of a complex composed of STUB1/CHIP, VCP/p97, CHRNA3, and UBXN2A that modulates the ubiquitination and endoplasmic reticulum-associated degradation (ERAD) of CHRNA3 (PubMed:26265139). Within the complex UBXN2A acts as a scaffold protein required for the interaction of CHRNA3 with VCP/p97, this interaction also inhibits CHRNA3 ubiquitination by STUB1/CHIP and subsequently ERAD (PubMed:26265139). Interacts with UBXN2A (via UBX domain); the interaction is required for the interaction of CHRNA3 in the STUB1-VCP-UBXN2A complex (PubMed:26265139). Directly interacts with UBXN4 and RNF19A. Interacts with CASR. Interacts with UBE4B and YOD1. Interacts with clathrin. Interacts with RNF103. Interacts with TRIM13 and TRIM21. Component of a VCP/p97-AMFR/gp78 complex that participates in the final step of the endoplasmic reticulum-associated degradation (ERAD) of HMGCR. Interacts directly with AMFR/gp78 (via its VIM). Interacts with RHBDD1 (via C-terminal domain). Interacts with SPRTN; leading to recruitment to stalled replication forks (PubMed:23042605, PubMed:23042607). Interacts with WASHC5. Interacts with UBOX5. Interacts (via N-terminus) with UBXN7, UBXN8, and probably several other UBX domain-containing proteins (via UBX domains); the interactions are mutually exclusive with VIM-dependent interactions such as those with AMFR and SELENOS. Forms a complex with UBQLN1 and UBXN4. Interacts (via the PIM motif) with RNF31 (via the PUB domain) (PubMed:24726327). Interacts with RIGI and RNF125; interaction takes place when RIGI is ubiquitinated via 'Lys-63'-linked ubiquitin on its CARD domains, leading to recruit RNF125 and promote ubiquitination and degradation of RIGI (PubMed:26471729). Interacts with BAG6 (PubMed:21636303). Interacts with UBXN10 (PubMed:26389662). Interacts with UBXN6; the interaction with UBXN6 is direct and competitive with UFD1 (PubMed:19174149, PubMed:19275885). Forms a ternary complex with CAV1 and UBXN6 (PubMed:18656546, PubMed:19174149, PubMed:21822278). Interacts with PLAA, UBXN6 and YOD1; may form a complex involved in macroautophagy (PubMed:27753622). Interacts with ANKZF1 (PubMed:28302725). Interacts with ubiquitin-binding protein FAF1 (PubMed:26842564). Interacts with ZFAND2B (via VIM motif); the interaction is direct (PubMed:24160817, PubMed:26337389). Interacts with ZFAND1 (via its ubiquitin-like region); this interaction occurs in an arsenite-dependent manner (PubMed:29804830). Interacts with CCDC47 (By similarity). Interacts with UBAC2 (By similarity). Interacts with LMBR1L (PubMed:31073040). Interacts with ATXN3 (PubMed:30455355). Interacts with TEX264; bridging VCP to covalent DNA-protein cross-links (DPCs) (PubMed:32152270). Interacts with FBXL4 (PubMed:36896912).</text>
</comment>
<comment type="interaction">
    <interactant intactId="EBI-355164">
        <id>P55072</id>
    </interactant>
    <interactant intactId="EBI-1046367">
        <id>Q9UKV5</id>
        <label>AMFR</label>
    </interactant>
    <organismsDiffer>false</organismsDiffer>
    <experiments>12</experiments>
</comment>
<comment type="interaction">
    <interactant intactId="EBI-355164">
        <id>P55072</id>
    </interactant>
    <interactant intactId="EBI-1993677">
        <id>Q9BZE9</id>
        <label>ASPSCR1</label>
    </interactant>
    <organismsDiffer>false</organismsDiffer>
    <experiments>34</experiments>
</comment>
<comment type="interaction">
    <interactant intactId="EBI-355164">
        <id>P55072</id>
    </interactant>
    <interactant intactId="EBI-10175276">
        <id>A9UGY9</id>
        <label>ATG5</label>
    </interactant>
    <organismsDiffer>false</organismsDiffer>
    <experiments>3</experiments>
</comment>
<comment type="interaction">
    <interactant intactId="EBI-355164">
        <id>P55072</id>
    </interactant>
    <interactant intactId="EBI-930964">
        <id>P54253</id>
        <label>ATXN1</label>
    </interactant>
    <organismsDiffer>false</organismsDiffer>
    <experiments>3</experiments>
</comment>
<comment type="interaction">
    <interactant intactId="EBI-355164">
        <id>P55072</id>
    </interactant>
    <interactant intactId="EBI-946046">
        <id>P54252</id>
        <label>ATXN3</label>
    </interactant>
    <organismsDiffer>false</organismsDiffer>
    <experiments>4</experiments>
</comment>
<comment type="interaction">
    <interactant intactId="EBI-355164">
        <id>P55072</id>
    </interactant>
    <interactant intactId="EBI-946068">
        <id>P54252-1</id>
        <label>ATXN3</label>
    </interactant>
    <organismsDiffer>false</organismsDiffer>
    <experiments>16</experiments>
</comment>
<comment type="interaction">
    <interactant intactId="EBI-355164">
        <id>P55072</id>
    </interactant>
    <interactant intactId="EBI-741885">
        <id>Q96LK0</id>
        <label>CEP19</label>
    </interactant>
    <organismsDiffer>false</organismsDiffer>
    <experiments>6</experiments>
</comment>
<comment type="interaction">
    <interactant intactId="EBI-355164">
        <id>P55072</id>
    </interactant>
    <interactant intactId="EBI-1180783">
        <id>O96017</id>
        <label>CHEK2</label>
    </interactant>
    <organismsDiffer>false</organismsDiffer>
    <experiments>2</experiments>
</comment>
<comment type="interaction">
    <interactant intactId="EBI-355164">
        <id>P55072</id>
    </interactant>
    <interactant intactId="EBI-743073">
        <id>O75175</id>
        <label>CNOT3</label>
    </interactant>
    <organismsDiffer>false</organismsDiffer>
    <experiments>3</experiments>
</comment>
<comment type="interaction">
    <interactant intactId="EBI-355164">
        <id>P55072</id>
    </interactant>
    <interactant intactId="EBI-456106">
        <id>Q13619</id>
        <label>CUL4A</label>
    </interactant>
    <organismsDiffer>false</organismsDiffer>
    <experiments>2</experiments>
</comment>
<comment type="interaction">
    <interactant intactId="EBI-355164">
        <id>P55072</id>
    </interactant>
    <interactant intactId="EBI-740402">
        <id>O60941</id>
        <label>DTNB</label>
    </interactant>
    <organismsDiffer>false</organismsDiffer>
    <experiments>4</experiments>
</comment>
<comment type="interaction">
    <interactant intactId="EBI-355164">
        <id>P55072</id>
    </interactant>
    <interactant intactId="EBI-11984733">
        <id>O60941-5</id>
        <label>DTNB</label>
    </interactant>
    <organismsDiffer>false</organismsDiffer>
    <experiments>3</experiments>
</comment>
<comment type="interaction">
    <interactant intactId="EBI-355164">
        <id>P55072</id>
    </interactant>
    <interactant intactId="EBI-21603100">
        <id>P26378-2</id>
        <label>ELAVL4</label>
    </interactant>
    <organismsDiffer>false</organismsDiffer>
    <experiments>3</experiments>
</comment>
<comment type="interaction">
    <interactant intactId="EBI-355164">
        <id>P55072</id>
    </interactant>
    <interactant intactId="EBI-25885343">
        <id>Q96J88-3</id>
        <label>EPSTI1</label>
    </interactant>
    <organismsDiffer>false</organismsDiffer>
    <experiments>3</experiments>
</comment>
<comment type="interaction">
    <interactant intactId="EBI-355164">
        <id>P55072</id>
    </interactant>
    <interactant intactId="EBI-718246">
        <id>Q9UNN5</id>
        <label>FAF1</label>
    </interactant>
    <organismsDiffer>false</organismsDiffer>
    <experiments>3</experiments>
</comment>
<comment type="interaction">
    <interactant intactId="EBI-355164">
        <id>P55072</id>
    </interactant>
    <interactant intactId="EBI-15930546">
        <id>Q9UNN5-1</id>
        <label>FAF1</label>
    </interactant>
    <organismsDiffer>false</organismsDiffer>
    <experiments>4</experiments>
</comment>
<comment type="interaction">
    <interactant intactId="EBI-355164">
        <id>P55072</id>
    </interactant>
    <interactant intactId="EBI-1055805">
        <id>Q96CS3</id>
        <label>FAF2</label>
    </interactant>
    <organismsDiffer>false</organismsDiffer>
    <experiments>14</experiments>
</comment>
<comment type="interaction">
    <interactant intactId="EBI-355164">
        <id>P55072</id>
    </interactant>
    <interactant intactId="EBI-1215612">
        <id>O94868</id>
        <label>FCHSD2</label>
    </interactant>
    <organismsDiffer>false</organismsDiffer>
    <experiments>2</experiments>
</comment>
<comment type="interaction">
    <interactant intactId="EBI-355164">
        <id>P55072</id>
    </interactant>
    <interactant intactId="EBI-715087">
        <id>P09471</id>
        <label>GNAO1</label>
    </interactant>
    <organismsDiffer>false</organismsDiffer>
    <experiments>3</experiments>
</comment>
<comment type="interaction">
    <interactant intactId="EBI-355164">
        <id>P55072</id>
    </interactant>
    <interactant intactId="EBI-401755">
        <id>P62993</id>
        <label>GRB2</label>
    </interactant>
    <organismsDiffer>false</organismsDiffer>
    <experiments>3</experiments>
</comment>
<comment type="interaction">
    <interactant intactId="EBI-355164">
        <id>P55072</id>
    </interactant>
    <interactant intactId="EBI-466029">
        <id>P42858</id>
        <label>HTT</label>
    </interactant>
    <organismsDiffer>false</organismsDiffer>
    <experiments>10</experiments>
</comment>
<comment type="interaction">
    <interactant intactId="EBI-355164">
        <id>P55072</id>
    </interactant>
    <interactant intactId="EBI-739832">
        <id>Q8TBB1</id>
        <label>LNX1</label>
    </interactant>
    <organismsDiffer>false</organismsDiffer>
    <experiments>7</experiments>
</comment>
<comment type="interaction">
    <interactant intactId="EBI-355164">
        <id>P55072</id>
    </interactant>
    <interactant intactId="EBI-5774346">
        <id>Q8WZA0</id>
        <label>LZIC</label>
    </interactant>
    <organismsDiffer>false</organismsDiffer>
    <experiments>3</experiments>
</comment>
<comment type="interaction">
    <interactant intactId="EBI-355164">
        <id>P55072</id>
    </interactant>
    <interactant intactId="EBI-11098807">
        <id>Q9H7H0-2</id>
        <label>METTL17</label>
    </interactant>
    <organismsDiffer>false</organismsDiffer>
    <experiments>3</experiments>
</comment>
<comment type="interaction">
    <interactant intactId="EBI-355164">
        <id>P55072</id>
    </interactant>
    <interactant intactId="EBI-7445625">
        <id>Q9HC29</id>
        <label>NOD2</label>
    </interactant>
    <organismsDiffer>false</organismsDiffer>
    <experiments>5</experiments>
</comment>
<comment type="interaction">
    <interactant intactId="EBI-355164">
        <id>P55072</id>
    </interactant>
    <interactant intactId="EBI-1994109">
        <id>Q8TAT6</id>
        <label>NPLOC4</label>
    </interactant>
    <organismsDiffer>false</organismsDiffer>
    <experiments>15</experiments>
</comment>
<comment type="interaction">
    <interactant intactId="EBI-355164">
        <id>P55072</id>
    </interactant>
    <interactant intactId="EBI-721577">
        <id>Q9UNZ2</id>
        <label>NSFL1C</label>
    </interactant>
    <organismsDiffer>false</organismsDiffer>
    <experiments>26</experiments>
</comment>
<comment type="interaction">
    <interactant intactId="EBI-355164">
        <id>P55072</id>
    </interactant>
    <interactant intactId="EBI-741158">
        <id>Q96HA8</id>
        <label>NTAQ1</label>
    </interactant>
    <organismsDiffer>false</organismsDiffer>
    <experiments>6</experiments>
</comment>
<comment type="interaction">
    <interactant intactId="EBI-355164">
        <id>P55072</id>
    </interactant>
    <interactant intactId="EBI-1994037">
        <id>Q9Y263</id>
        <label>PLAA</label>
    </interactant>
    <organismsDiffer>false</organismsDiffer>
    <experiments>7</experiments>
</comment>
<comment type="interaction">
    <interactant intactId="EBI-355164">
        <id>P55072</id>
    </interactant>
    <interactant intactId="EBI-78615">
        <id>Q07869</id>
        <label>PPARA</label>
    </interactant>
    <organismsDiffer>false</organismsDiffer>
    <experiments>3</experiments>
</comment>
<comment type="interaction">
    <interactant intactId="EBI-355164">
        <id>P55072</id>
    </interactant>
    <interactant intactId="EBI-357253">
        <id>P62136</id>
        <label>PPP1CA</label>
    </interactant>
    <organismsDiffer>false</organismsDiffer>
    <experiments>2</experiments>
</comment>
<comment type="interaction">
    <interactant intactId="EBI-355164">
        <id>P55072</id>
    </interactant>
    <interactant intactId="EBI-10635648">
        <id>P07602-1</id>
        <label>PSAP</label>
    </interactant>
    <organismsDiffer>false</organismsDiffer>
    <experiments>3</experiments>
</comment>
<comment type="interaction">
    <interactant intactId="EBI-355164">
        <id>P55072</id>
    </interactant>
    <interactant intactId="EBI-359352">
        <id>P25786</id>
        <label>PSMA1</label>
    </interactant>
    <organismsDiffer>false</organismsDiffer>
    <experiments>6</experiments>
</comment>
<comment type="interaction">
    <interactant intactId="EBI-355164">
        <id>P55072</id>
    </interactant>
    <interactant intactId="EBI-357598">
        <id>P62191</id>
        <label>PSMC1</label>
    </interactant>
    <organismsDiffer>false</organismsDiffer>
    <experiments>3</experiments>
</comment>
<comment type="interaction">
    <interactant intactId="EBI-355164">
        <id>P55072</id>
    </interactant>
    <interactant intactId="EBI-1047946">
        <id>P26045</id>
        <label>PTPN3</label>
    </interactant>
    <organismsDiffer>false</organismsDiffer>
    <experiments>2</experiments>
</comment>
<comment type="interaction">
    <interactant intactId="EBI-355164">
        <id>P55072</id>
    </interactant>
    <interactant intactId="EBI-2129242">
        <id>Q9Y4L5</id>
        <label>RNF115</label>
    </interactant>
    <organismsDiffer>false</organismsDiffer>
    <experiments>3</experiments>
</comment>
<comment type="interaction">
    <interactant intactId="EBI-355164">
        <id>P55072</id>
    </interactant>
    <interactant intactId="EBI-2339208">
        <id>Q96EQ8</id>
        <label>RNF125</label>
    </interactant>
    <organismsDiffer>false</organismsDiffer>
    <experiments>3</experiments>
</comment>
<comment type="interaction">
    <interactant intactId="EBI-355164">
        <id>P55072</id>
    </interactant>
    <interactant intactId="EBI-373337">
        <id>O76064</id>
        <label>RNF8</label>
    </interactant>
    <organismsDiffer>false</organismsDiffer>
    <experiments>3</experiments>
</comment>
<comment type="interaction">
    <interactant intactId="EBI-355164">
        <id>P55072</id>
    </interactant>
    <interactant intactId="EBI-358122">
        <id>P32969</id>
        <label>RPL9P9</label>
    </interactant>
    <organismsDiffer>false</organismsDiffer>
    <experiments>6</experiments>
</comment>
<comment type="interaction">
    <interactant intactId="EBI-355164">
        <id>P55072</id>
    </interactant>
    <interactant intactId="EBI-1181664">
        <id>Q9H0K1</id>
        <label>SIK2</label>
    </interactant>
    <organismsDiffer>false</organismsDiffer>
    <experiments>4</experiments>
</comment>
<comment type="interaction">
    <interactant intactId="EBI-355164">
        <id>P55072</id>
    </interactant>
    <interactant intactId="EBI-2855542">
        <id>Q8NBI5</id>
        <label>SLC43A3</label>
    </interactant>
    <organismsDiffer>false</organismsDiffer>
    <experiments>3</experiments>
</comment>
<comment type="interaction">
    <interactant intactId="EBI-355164">
        <id>P55072</id>
    </interactant>
    <interactant intactId="EBI-12938570">
        <id>Q16560-2</id>
        <label>SNRNP35</label>
    </interactant>
    <organismsDiffer>false</organismsDiffer>
    <experiments>3</experiments>
</comment>
<comment type="interaction">
    <interactant intactId="EBI-355164">
        <id>P55072</id>
    </interactant>
    <interactant intactId="EBI-719212">
        <id>P46977</id>
        <label>STT3A</label>
    </interactant>
    <organismsDiffer>false</organismsDiffer>
    <experiments>3</experiments>
</comment>
<comment type="interaction">
    <interactant intactId="EBI-355164">
        <id>P55072</id>
    </interactant>
    <interactant intactId="EBI-743540">
        <id>P51668</id>
        <label>UBE2D1</label>
    </interactant>
    <organismsDiffer>false</organismsDiffer>
    <experiments>3</experiments>
</comment>
<comment type="interaction">
    <interactant intactId="EBI-355164">
        <id>P55072</id>
    </interactant>
    <interactant intactId="EBI-7931266">
        <id>B1AQ61</id>
        <label>UBE4B</label>
    </interactant>
    <organismsDiffer>false</organismsDiffer>
    <experiments>4</experiments>
</comment>
<comment type="interaction">
    <interactant intactId="EBI-355164">
        <id>P55072</id>
    </interactant>
    <interactant intactId="EBI-751901">
        <id>O94941</id>
        <label>UBOX5</label>
    </interactant>
    <organismsDiffer>false</organismsDiffer>
    <experiments>6</experiments>
</comment>
<comment type="interaction">
    <interactant intactId="EBI-355164">
        <id>P55072</id>
    </interactant>
    <interactant intactId="EBI-1058647">
        <id>Q04323</id>
        <label>UBXN1</label>
    </interactant>
    <organismsDiffer>false</organismsDiffer>
    <experiments>7</experiments>
</comment>
<comment type="interaction">
    <interactant intactId="EBI-355164">
        <id>P55072</id>
    </interactant>
    <interactant intactId="EBI-1993941">
        <id>Q96LJ8</id>
        <label>UBXN10</label>
    </interactant>
    <organismsDiffer>false</organismsDiffer>
    <experiments>7</experiments>
</comment>
<comment type="interaction">
    <interactant intactId="EBI-355164">
        <id>P55072</id>
    </interactant>
    <interactant intactId="EBI-11524408">
        <id>Q5T124-6</id>
        <label>UBXN11</label>
    </interactant>
    <organismsDiffer>false</organismsDiffer>
    <experiments>7</experiments>
</comment>
<comment type="interaction">
    <interactant intactId="EBI-355164">
        <id>P55072</id>
    </interactant>
    <interactant intactId="EBI-1993668">
        <id>P68543</id>
        <label>UBXN2A</label>
    </interactant>
    <organismsDiffer>false</organismsDiffer>
    <experiments>20</experiments>
</comment>
<comment type="interaction">
    <interactant intactId="EBI-355164">
        <id>P55072</id>
    </interactant>
    <interactant intactId="EBI-1993619">
        <id>Q14CS0</id>
        <label>UBXN2B</label>
    </interactant>
    <organismsDiffer>false</organismsDiffer>
    <experiments>16</experiments>
</comment>
<comment type="interaction">
    <interactant intactId="EBI-355164">
        <id>P55072</id>
    </interactant>
    <interactant intactId="EBI-723441">
        <id>Q92575</id>
        <label>UBXN4</label>
    </interactant>
    <organismsDiffer>false</organismsDiffer>
    <experiments>12</experiments>
</comment>
<comment type="interaction">
    <interactant intactId="EBI-355164">
        <id>P55072</id>
    </interactant>
    <interactant intactId="EBI-1993899">
        <id>Q9BZV1</id>
        <label>UBXN6</label>
    </interactant>
    <organismsDiffer>false</organismsDiffer>
    <experiments>23</experiments>
</comment>
<comment type="interaction">
    <interactant intactId="EBI-355164">
        <id>P55072</id>
    </interactant>
    <interactant intactId="EBI-1993627">
        <id>O94888</id>
        <label>UBXN7</label>
    </interactant>
    <organismsDiffer>false</organismsDiffer>
    <experiments>19</experiments>
</comment>
<comment type="interaction">
    <interactant intactId="EBI-355164">
        <id>P55072</id>
    </interactant>
    <interactant intactId="EBI-1993850">
        <id>O00124</id>
        <label>UBXN8</label>
    </interactant>
    <organismsDiffer>false</organismsDiffer>
    <experiments>9</experiments>
</comment>
<comment type="interaction">
    <interactant intactId="EBI-355164">
        <id>P55072</id>
    </interactant>
    <interactant intactId="EBI-1994090">
        <id>Q92890</id>
        <label>UFD1</label>
    </interactant>
    <organismsDiffer>false</organismsDiffer>
    <experiments>8</experiments>
</comment>
<comment type="interaction">
    <interactant intactId="EBI-355164">
        <id>P55072</id>
    </interactant>
    <interactant intactId="EBI-520113">
        <id>P63027</id>
        <label>VAMP2</label>
    </interactant>
    <organismsDiffer>false</organismsDiffer>
    <experiments>3</experiments>
</comment>
<comment type="interaction">
    <interactant intactId="EBI-355164">
        <id>P55072</id>
    </interactant>
    <interactant intactId="EBI-10281506">
        <id>Q969W3</id>
        <label>VCF1</label>
    </interactant>
    <organismsDiffer>false</organismsDiffer>
    <experiments>10</experiments>
</comment>
<comment type="interaction">
    <interactant intactId="EBI-355164">
        <id>P55072</id>
    </interactant>
    <interactant intactId="EBI-355164">
        <id>P55072</id>
        <label>VCP</label>
    </interactant>
    <organismsDiffer>false</organismsDiffer>
    <experiments>8</experiments>
</comment>
<comment type="interaction">
    <interactant intactId="EBI-355164">
        <id>P55072</id>
    </interactant>
    <interactant intactId="EBI-2815120">
        <id>Q6GPH4</id>
        <label>XAF1</label>
    </interactant>
    <organismsDiffer>false</organismsDiffer>
    <experiments>3</experiments>
</comment>
<comment type="interaction">
    <interactant intactId="EBI-355164">
        <id>P55072</id>
    </interactant>
    <interactant intactId="EBI-2510804">
        <id>Q5VVQ6</id>
        <label>YOD1</label>
    </interactant>
    <organismsDiffer>false</organismsDiffer>
    <experiments>3</experiments>
</comment>
<comment type="interaction">
    <interactant intactId="EBI-355164">
        <id>P55072</id>
    </interactant>
    <interactant intactId="EBI-347088">
        <id>P63104</id>
        <label>YWHAZ</label>
    </interactant>
    <organismsDiffer>false</organismsDiffer>
    <experiments>2</experiments>
</comment>
<comment type="interaction">
    <interactant intactId="EBI-355164">
        <id>P55072</id>
    </interactant>
    <interactant intactId="EBI-739899">
        <id>P24278</id>
        <label>ZBTB25</label>
    </interactant>
    <organismsDiffer>false</organismsDiffer>
    <experiments>3</experiments>
</comment>
<comment type="interaction">
    <interactant intactId="EBI-355164">
        <id>P55072</id>
    </interactant>
    <interactant intactId="EBI-1551052">
        <id>Q9WTX6</id>
        <label>Cul1</label>
    </interactant>
    <organismsDiffer>true</organismsDiffer>
    <experiments>2</experiments>
</comment>
<comment type="subcellular location">
    <subcellularLocation>
        <location evidence="9">Cytoplasm</location>
        <location evidence="9">Cytosol</location>
    </subcellularLocation>
    <subcellularLocation>
        <location evidence="7">Endoplasmic reticulum</location>
    </subcellularLocation>
    <subcellularLocation>
        <location evidence="49 63">Nucleus</location>
    </subcellularLocation>
    <subcellularLocation>
        <location evidence="68">Cytoplasm</location>
        <location evidence="68">Stress granule</location>
    </subcellularLocation>
    <text evidence="9 12 43 49 66 68">Present in the neuronal hyaline inclusion bodies specifically found in motor neurons from amyotrophic lateral sclerosis patients (PubMed:15456787). Present in the Lewy bodies specifically found in neurons from Parkinson disease patients (PubMed:15456787). Recruited to the cytoplasmic surface of the endoplasmic reticulum via interaction with AMFR/gp78 (PubMed:16168377). Following DNA double-strand breaks, recruited to the sites of damage (PubMed:22120668). Recruited to stalled replication forks via interaction with SPRTN (PubMed:23042605). Recruited to damaged lysosomes decorated with K48-linked ubiquitin chains (PubMed:27753622). Colocalizes with TIA1, ZFAND1 and G3BP1 in cytoplasmic stress granules (SGs) in response to arsenite-induced stress treatment (PubMed:29804830).</text>
</comment>
<comment type="domain">
    <text evidence="54">The PIM (PUB-interaction motif) motif mediates interaction with the PUB domain of RNF31.</text>
</comment>
<comment type="PTM">
    <text evidence="2">Phosphorylated by tyrosine kinases in response to T-cell antigen receptor activation. Phosphorylated in mitotic cells.</text>
</comment>
<comment type="PTM">
    <text evidence="11">ISGylated.</text>
</comment>
<comment type="PTM">
    <text evidence="48 52">Methylation at Lys-315 catalyzed by VCPKMT is increased in the presence of ASPSCR1. Lys-315 methylation may decrease ATPase activity.</text>
</comment>
<comment type="disease" evidence="6 10 15 17 23 32 33 34 39 52 55 56 64 66 68 74">
    <disease id="DI-01817">
        <name>Inclusion body myopathy with early-onset Paget disease with or without frontotemporal dementia 1</name>
        <acronym>IBMPFD1</acronym>
        <description>An autosomal dominant disease characterized by disabling muscle weakness clinically resembling to limb girdle muscular dystrophy, osteolytic bone lesions consistent with Paget disease, and premature frontotemporal dementia. Clinical features show incomplete penetrance.</description>
        <dbReference type="MIM" id="167320"/>
    </disease>
    <text>The disease is caused by variants affecting the gene represented in this entry.</text>
</comment>
<comment type="disease" evidence="37 52">
    <disease id="DI-03119">
        <name>Frontotemporal dementia and/or amyotrophic lateral sclerosis 6</name>
        <acronym>FTDALS6</acronym>
        <description>A neurodegenerative disorder characterized by frontotemporal dementia and/or amyotrophic lateral sclerosis in affected individuals. There is high intrafamilial variation. Frontotemporal dementia (FTD) is characterized by frontal and temporal lobe atrophy associated with neuronal loss, gliosis, and dementia. Patients exhibit progressive changes in social, behavioral, and/or language function. Amyotrophic lateral sclerosis (ALS) is characterized by the death of motor neurons in the brain, brainstem, and spinal cord, resulting in fatal paralysis. FTDALS6 is an autosomal dominant form characterized by onset of ALS or FTD in adulthood. Some patients with the disorder may have features of both diseases.</description>
        <dbReference type="MIM" id="613954"/>
    </disease>
    <text>The disease is caused by variants affecting the gene represented in this entry.</text>
</comment>
<comment type="disease" evidence="55 56">
    <disease id="DI-04589">
        <name>Charcot-Marie-Tooth disease, axonal, type 2Y</name>
        <acronym>CMT2Y</acronym>
        <description>An autosomal dominant, axonal form of Charcot-Marie-Tooth disease, a disorder of the peripheral nervous system, characterized by progressive weakness and atrophy, initially of the peroneal muscles and later of the distal muscles of the arms. Charcot-Marie-Tooth disease is classified in two main groups on the basis of electrophysiologic properties and histopathology: primary peripheral demyelinating neuropathies (designated CMT1 when they are dominantly inherited) and primary peripheral axonal neuropathies (CMT2). Neuropathies of the CMT2 group are characterized by signs of axonal degeneration in the absence of obvious myelin alterations, normal or slightly reduced nerve conduction velocities, and progressive distal muscle weakness and atrophy.</description>
        <dbReference type="MIM" id="616687"/>
    </disease>
    <text>The disease is caused by variants affecting the gene represented in this entry.</text>
</comment>
<comment type="similarity">
    <text evidence="77">Belongs to the AAA ATPase family.</text>
</comment>
<comment type="caution">
    <text evidence="78 79">It is unclear how it participates in the recruitment of TP53BP1 at DNA damage sites. According to a first report, participates in the recruitment of TP53BP1 by promoting ubiquitination and removal of L3MBTL1 from DNA damage sites (PubMed:22120668). According to a second report, it acts by removing 'Lys-48'-linked ubiquitination from sites of DNA damage (PubMed:22020440).</text>
</comment>
<sequence length="806" mass="89322">MASGADSKGDDLSTAILKQKNRPNRLIVDEAINEDNSVVSLSQPKMDELQLFRGDTVLLKGKKRREAVCIVLSDDTCSDEKIRMNRVVRNNLRVRLGDVISIQPCPDVKYGKRIHVLPIDDTVEGITGNLFEVYLKPYFLEAYRPIRKGDIFLVRGGMRAVEFKVVETDPSPYCIVAPDTVIHCEGEPIKREDEEESLNEVGYDDIGGCRKQLAQIKEMVELPLRHPALFKAIGVKPPRGILLYGPPGTGKTLIARAVANETGAFFFLINGPEIMSKLAGESESNLRKAFEEAEKNAPAIIFIDELDAIAPKREKTHGEVERRIVSQLLTLMDGLKQRAHVIVMAATNRPNSIDPALRRFGRFDREVDIGIPDATGRLEILQIHTKNMKLADDVDLEQVANETHGHVGADLAALCSEAALQAIRKKMDLIDLEDETIDAEVMNSLAVTMDDFRWALSQSNPSALRETVVEVPQVTWEDIGGLEDVKRELQELVQYPVEHPDKFLKFGMTPSKGVLFYGPPGCGKTLLAKAIANECQANFISIKGPELLTMWFGESEANVREIFDKARQAAPCVLFFDELDSIAKARGGNIGDGGGAADRVINQILTEMDGMSTKKNVFIIGATNRPDIIDPAILRPGRLDQLIYIPLPDEKSRVAILKANLRKSPVAKDVDLEFLAKMTNGFSGADLTEICQRACKLAIRESIESEIRRERERQTNPSAMEVEEDDPVPEIRRDHFEEAMRFARRSVSDNDIRKYEMFAQTLQQSRGFGSFRFPSGNQGGAGPSQGSGGGTGGSVYTEDNDDDLYG</sequence>